<evidence type="ECO:0000250" key="1"/>
<evidence type="ECO:0000250" key="2">
    <source>
        <dbReference type="UniProtKB" id="P23804"/>
    </source>
</evidence>
<evidence type="ECO:0000255" key="3"/>
<evidence type="ECO:0000255" key="4">
    <source>
        <dbReference type="PROSITE-ProRule" id="PRU00175"/>
    </source>
</evidence>
<evidence type="ECO:0000255" key="5">
    <source>
        <dbReference type="PROSITE-ProRule" id="PRU00322"/>
    </source>
</evidence>
<evidence type="ECO:0000255" key="6">
    <source>
        <dbReference type="PROSITE-ProRule" id="PRU01273"/>
    </source>
</evidence>
<evidence type="ECO:0000256" key="7">
    <source>
        <dbReference type="SAM" id="MobiDB-lite"/>
    </source>
</evidence>
<evidence type="ECO:0000269" key="8">
    <source>
    </source>
</evidence>
<evidence type="ECO:0000269" key="9">
    <source>
    </source>
</evidence>
<evidence type="ECO:0000269" key="10">
    <source>
    </source>
</evidence>
<evidence type="ECO:0000269" key="11">
    <source>
    </source>
</evidence>
<evidence type="ECO:0000269" key="12">
    <source>
    </source>
</evidence>
<evidence type="ECO:0000269" key="13">
    <source>
    </source>
</evidence>
<evidence type="ECO:0000269" key="14">
    <source>
    </source>
</evidence>
<evidence type="ECO:0000269" key="15">
    <source>
    </source>
</evidence>
<evidence type="ECO:0000269" key="16">
    <source>
    </source>
</evidence>
<evidence type="ECO:0000269" key="17">
    <source>
    </source>
</evidence>
<evidence type="ECO:0000269" key="18">
    <source>
    </source>
</evidence>
<evidence type="ECO:0000269" key="19">
    <source>
    </source>
</evidence>
<evidence type="ECO:0000269" key="20">
    <source>
    </source>
</evidence>
<evidence type="ECO:0000269" key="21">
    <source>
    </source>
</evidence>
<evidence type="ECO:0000269" key="22">
    <source>
    </source>
</evidence>
<evidence type="ECO:0000269" key="23">
    <source>
    </source>
</evidence>
<evidence type="ECO:0000269" key="24">
    <source>
    </source>
</evidence>
<evidence type="ECO:0000269" key="25">
    <source>
    </source>
</evidence>
<evidence type="ECO:0000269" key="26">
    <source>
    </source>
</evidence>
<evidence type="ECO:0000269" key="27">
    <source>
    </source>
</evidence>
<evidence type="ECO:0000269" key="28">
    <source>
    </source>
</evidence>
<evidence type="ECO:0000269" key="29">
    <source>
    </source>
</evidence>
<evidence type="ECO:0000269" key="30">
    <source>
    </source>
</evidence>
<evidence type="ECO:0000269" key="31">
    <source>
    </source>
</evidence>
<evidence type="ECO:0000269" key="32">
    <source>
    </source>
</evidence>
<evidence type="ECO:0000269" key="33">
    <source>
    </source>
</evidence>
<evidence type="ECO:0000269" key="34">
    <source>
    </source>
</evidence>
<evidence type="ECO:0000269" key="35">
    <source>
    </source>
</evidence>
<evidence type="ECO:0000269" key="36">
    <source>
    </source>
</evidence>
<evidence type="ECO:0000269" key="37">
    <source>
    </source>
</evidence>
<evidence type="ECO:0000269" key="38">
    <source>
    </source>
</evidence>
<evidence type="ECO:0000269" key="39">
    <source>
    </source>
</evidence>
<evidence type="ECO:0000269" key="40">
    <source>
    </source>
</evidence>
<evidence type="ECO:0000269" key="41">
    <source>
    </source>
</evidence>
<evidence type="ECO:0000269" key="42">
    <source>
    </source>
</evidence>
<evidence type="ECO:0000269" key="43">
    <source>
    </source>
</evidence>
<evidence type="ECO:0000269" key="44">
    <source>
    </source>
</evidence>
<evidence type="ECO:0000269" key="45">
    <source>
    </source>
</evidence>
<evidence type="ECO:0000269" key="46">
    <source>
    </source>
</evidence>
<evidence type="ECO:0000269" key="47">
    <source>
    </source>
</evidence>
<evidence type="ECO:0000269" key="48">
    <source>
    </source>
</evidence>
<evidence type="ECO:0000269" key="49">
    <source>
    </source>
</evidence>
<evidence type="ECO:0000269" key="50">
    <source>
    </source>
</evidence>
<evidence type="ECO:0000269" key="51">
    <source>
    </source>
</evidence>
<evidence type="ECO:0000269" key="52">
    <source>
    </source>
</evidence>
<evidence type="ECO:0000269" key="53">
    <source>
    </source>
</evidence>
<evidence type="ECO:0000269" key="54">
    <source>
    </source>
</evidence>
<evidence type="ECO:0000269" key="55">
    <source>
    </source>
</evidence>
<evidence type="ECO:0000269" key="56">
    <source>
    </source>
</evidence>
<evidence type="ECO:0000269" key="57">
    <source>
    </source>
</evidence>
<evidence type="ECO:0000269" key="58">
    <source>
    </source>
</evidence>
<evidence type="ECO:0000269" key="59">
    <source>
    </source>
</evidence>
<evidence type="ECO:0000303" key="60">
    <source>
    </source>
</evidence>
<evidence type="ECO:0000303" key="61">
    <source>
    </source>
</evidence>
<evidence type="ECO:0000303" key="62">
    <source>
    </source>
</evidence>
<evidence type="ECO:0000303" key="63">
    <source>
    </source>
</evidence>
<evidence type="ECO:0000303" key="64">
    <source>
    </source>
</evidence>
<evidence type="ECO:0000305" key="65"/>
<evidence type="ECO:0000305" key="66">
    <source>
    </source>
</evidence>
<evidence type="ECO:0007744" key="67">
    <source>
        <dbReference type="PDB" id="1RV1"/>
    </source>
</evidence>
<evidence type="ECO:0007744" key="68">
    <source>
        <dbReference type="PDB" id="2F1Y"/>
    </source>
</evidence>
<evidence type="ECO:0007744" key="69">
    <source>
        <dbReference type="PDB" id="2FOP"/>
    </source>
</evidence>
<evidence type="ECO:0007744" key="70">
    <source>
        <dbReference type="PDB" id="8BGU"/>
    </source>
</evidence>
<evidence type="ECO:0007744" key="71">
    <source>
    </source>
</evidence>
<evidence type="ECO:0007744" key="72">
    <source>
    </source>
</evidence>
<evidence type="ECO:0007829" key="73">
    <source>
        <dbReference type="PDB" id="2C6A"/>
    </source>
</evidence>
<evidence type="ECO:0007829" key="74">
    <source>
        <dbReference type="PDB" id="2LZG"/>
    </source>
</evidence>
<evidence type="ECO:0007829" key="75">
    <source>
        <dbReference type="PDB" id="3LBK"/>
    </source>
</evidence>
<evidence type="ECO:0007829" key="76">
    <source>
        <dbReference type="PDB" id="4ODF"/>
    </source>
</evidence>
<evidence type="ECO:0007829" key="77">
    <source>
        <dbReference type="PDB" id="4WT2"/>
    </source>
</evidence>
<evidence type="ECO:0007829" key="78">
    <source>
        <dbReference type="PDB" id="4XXB"/>
    </source>
</evidence>
<evidence type="ECO:0007829" key="79">
    <source>
        <dbReference type="PDB" id="6Q9L"/>
    </source>
</evidence>
<evidence type="ECO:0007829" key="80">
    <source>
        <dbReference type="PDB" id="6SQO"/>
    </source>
</evidence>
<sequence length="491" mass="55233">MCNTNMSVPTDGAVTTSQIPASEQETLVRPKPLLLKLLKSVGAQKDTYTMKEVLFYLGQYIMTKRLYDEKQQHIVYCSNDLLGDLFGVPSFSVKEHRKIYTMIYRNLVVVNQQESSDSGTSVSENRCHLEGGSDQKDLVQELQEEKPSSSHLVSRPSTSSRRRAISETEENSDELSGERQRKRHKSDSISLSFDESLALCVIREICCERSSSSESTGTPSNPDLDAGVSEHSGDWLDQDSVSDQFSVEFEVESLDSEDYSLSEEGQELSDEDDEVYQVTVYQAGESDTDSFEEDPEISLADYWKCTSCNEMNPPLPSHCNRCWALRENWLPEDKGKDKGEISEKAKLENSTQAEEGFDVPDCKKTIVNDSRESCVEENDDKITQASQSQESEDYSQPSTSSSIIYSSQEDVKEFEREETQDKEESVESSLPLNAIEPCVICQGRPKNGCIVHGKTGHLMACFTCAKKLKKRNKPCPVCRQPIQMIVLTYFP</sequence>
<organism>
    <name type="scientific">Homo sapiens</name>
    <name type="common">Human</name>
    <dbReference type="NCBI Taxonomy" id="9606"/>
    <lineage>
        <taxon>Eukaryota</taxon>
        <taxon>Metazoa</taxon>
        <taxon>Chordata</taxon>
        <taxon>Craniata</taxon>
        <taxon>Vertebrata</taxon>
        <taxon>Euteleostomi</taxon>
        <taxon>Mammalia</taxon>
        <taxon>Eutheria</taxon>
        <taxon>Euarchontoglires</taxon>
        <taxon>Primates</taxon>
        <taxon>Haplorrhini</taxon>
        <taxon>Catarrhini</taxon>
        <taxon>Hominidae</taxon>
        <taxon>Homo</taxon>
    </lineage>
</organism>
<reference key="1">
    <citation type="journal article" date="1992" name="Nature">
        <title>Amplification of a gene encoding a p53-associated protein in human sarcomas.</title>
        <authorList>
            <person name="Oliner J.D."/>
            <person name="Kinzler K.W."/>
            <person name="Meltzer P.S."/>
            <person name="George D.L."/>
            <person name="Vogelstein B."/>
        </authorList>
    </citation>
    <scope>NUCLEOTIDE SEQUENCE [MRNA] (ISOFORM MDM2)</scope>
    <source>
        <tissue>Colon</tissue>
    </source>
</reference>
<reference key="2">
    <citation type="journal article" date="1996" name="Nat. Med.">
        <title>Alternatively spliced mdm2 transcripts with loss of p53 binding domain sequences: transforming ability and frequent detection in human cancer.</title>
        <authorList>
            <person name="Sigalas I."/>
            <person name="Calvert A.H."/>
            <person name="Anderson J.J."/>
            <person name="Neal D.E."/>
            <person name="Lunec J."/>
        </authorList>
    </citation>
    <scope>NUCLEOTIDE SEQUENCE [MRNA] (ISOFORMS MDM2-A; MDM2-B; MDM2-C; MDM2-D AND MDM2-E)</scope>
    <source>
        <tissue>Ovarian carcinoma</tissue>
    </source>
</reference>
<reference key="3">
    <citation type="journal article" date="1999" name="Oncogene">
        <title>A novel exon within the mdm2 gene modulates translation initiation in vitro and disrupts the p53-binding domain of mdm2 protein.</title>
        <authorList>
            <person name="Veldhoen N."/>
            <person name="Metcalfe S."/>
            <person name="Milner J."/>
        </authorList>
    </citation>
    <scope>NUCLEOTIDE SEQUENCE [MRNA] (ISOFORM MDM2-ALPHA)</scope>
</reference>
<reference key="4">
    <citation type="journal article" date="2001" name="Int. J. Cancer">
        <title>Analysis of the molecular species generated by MDM2 gene amplification in liposarcomas.</title>
        <authorList>
            <person name="Tamborini E."/>
            <person name="Della Torre G."/>
            <person name="Lavarino C."/>
            <person name="Azzarelli A."/>
            <person name="Carpinelli P."/>
            <person name="Pierotti M.A."/>
            <person name="Pilotti S."/>
        </authorList>
    </citation>
    <scope>NUCLEOTIDE SEQUENCE [MRNA] (ISOFORMS MDM2-F AND MDM2-G)</scope>
    <scope>INTERACTION WITH TP53</scope>
</reference>
<reference key="5">
    <citation type="journal article" date="2004" name="Nat. Genet.">
        <title>Complete sequencing and characterization of 21,243 full-length human cDNAs.</title>
        <authorList>
            <person name="Ota T."/>
            <person name="Suzuki Y."/>
            <person name="Nishikawa T."/>
            <person name="Otsuki T."/>
            <person name="Sugiyama T."/>
            <person name="Irie R."/>
            <person name="Wakamatsu A."/>
            <person name="Hayashi K."/>
            <person name="Sato H."/>
            <person name="Nagai K."/>
            <person name="Kimura K."/>
            <person name="Makita H."/>
            <person name="Sekine M."/>
            <person name="Obayashi M."/>
            <person name="Nishi T."/>
            <person name="Shibahara T."/>
            <person name="Tanaka T."/>
            <person name="Ishii S."/>
            <person name="Yamamoto J."/>
            <person name="Saito K."/>
            <person name="Kawai Y."/>
            <person name="Isono Y."/>
            <person name="Nakamura Y."/>
            <person name="Nagahari K."/>
            <person name="Murakami K."/>
            <person name="Yasuda T."/>
            <person name="Iwayanagi T."/>
            <person name="Wagatsuma M."/>
            <person name="Shiratori A."/>
            <person name="Sudo H."/>
            <person name="Hosoiri T."/>
            <person name="Kaku Y."/>
            <person name="Kodaira H."/>
            <person name="Kondo H."/>
            <person name="Sugawara M."/>
            <person name="Takahashi M."/>
            <person name="Kanda K."/>
            <person name="Yokoi T."/>
            <person name="Furuya T."/>
            <person name="Kikkawa E."/>
            <person name="Omura Y."/>
            <person name="Abe K."/>
            <person name="Kamihara K."/>
            <person name="Katsuta N."/>
            <person name="Sato K."/>
            <person name="Tanikawa M."/>
            <person name="Yamazaki M."/>
            <person name="Ninomiya K."/>
            <person name="Ishibashi T."/>
            <person name="Yamashita H."/>
            <person name="Murakawa K."/>
            <person name="Fujimori K."/>
            <person name="Tanai H."/>
            <person name="Kimata M."/>
            <person name="Watanabe M."/>
            <person name="Hiraoka S."/>
            <person name="Chiba Y."/>
            <person name="Ishida S."/>
            <person name="Ono Y."/>
            <person name="Takiguchi S."/>
            <person name="Watanabe S."/>
            <person name="Yosida M."/>
            <person name="Hotuta T."/>
            <person name="Kusano J."/>
            <person name="Kanehori K."/>
            <person name="Takahashi-Fujii A."/>
            <person name="Hara H."/>
            <person name="Tanase T.-O."/>
            <person name="Nomura Y."/>
            <person name="Togiya S."/>
            <person name="Komai F."/>
            <person name="Hara R."/>
            <person name="Takeuchi K."/>
            <person name="Arita M."/>
            <person name="Imose N."/>
            <person name="Musashino K."/>
            <person name="Yuuki H."/>
            <person name="Oshima A."/>
            <person name="Sasaki N."/>
            <person name="Aotsuka S."/>
            <person name="Yoshikawa Y."/>
            <person name="Matsunawa H."/>
            <person name="Ichihara T."/>
            <person name="Shiohata N."/>
            <person name="Sano S."/>
            <person name="Moriya S."/>
            <person name="Momiyama H."/>
            <person name="Satoh N."/>
            <person name="Takami S."/>
            <person name="Terashima Y."/>
            <person name="Suzuki O."/>
            <person name="Nakagawa S."/>
            <person name="Senoh A."/>
            <person name="Mizoguchi H."/>
            <person name="Goto Y."/>
            <person name="Shimizu F."/>
            <person name="Wakebe H."/>
            <person name="Hishigaki H."/>
            <person name="Watanabe T."/>
            <person name="Sugiyama A."/>
            <person name="Takemoto M."/>
            <person name="Kawakami B."/>
            <person name="Yamazaki M."/>
            <person name="Watanabe K."/>
            <person name="Kumagai A."/>
            <person name="Itakura S."/>
            <person name="Fukuzumi Y."/>
            <person name="Fujimori Y."/>
            <person name="Komiyama M."/>
            <person name="Tashiro H."/>
            <person name="Tanigami A."/>
            <person name="Fujiwara T."/>
            <person name="Ono T."/>
            <person name="Yamada K."/>
            <person name="Fujii Y."/>
            <person name="Ozaki K."/>
            <person name="Hirao M."/>
            <person name="Ohmori Y."/>
            <person name="Kawabata A."/>
            <person name="Hikiji T."/>
            <person name="Kobatake N."/>
            <person name="Inagaki H."/>
            <person name="Ikema Y."/>
            <person name="Okamoto S."/>
            <person name="Okitani R."/>
            <person name="Kawakami T."/>
            <person name="Noguchi S."/>
            <person name="Itoh T."/>
            <person name="Shigeta K."/>
            <person name="Senba T."/>
            <person name="Matsumura K."/>
            <person name="Nakajima Y."/>
            <person name="Mizuno T."/>
            <person name="Morinaga M."/>
            <person name="Sasaki M."/>
            <person name="Togashi T."/>
            <person name="Oyama M."/>
            <person name="Hata H."/>
            <person name="Watanabe M."/>
            <person name="Komatsu T."/>
            <person name="Mizushima-Sugano J."/>
            <person name="Satoh T."/>
            <person name="Shirai Y."/>
            <person name="Takahashi Y."/>
            <person name="Nakagawa K."/>
            <person name="Okumura K."/>
            <person name="Nagase T."/>
            <person name="Nomura N."/>
            <person name="Kikuchi H."/>
            <person name="Masuho Y."/>
            <person name="Yamashita R."/>
            <person name="Nakai K."/>
            <person name="Yada T."/>
            <person name="Nakamura Y."/>
            <person name="Ohara O."/>
            <person name="Isogai T."/>
            <person name="Sugano S."/>
        </authorList>
    </citation>
    <scope>NUCLEOTIDE SEQUENCE [LARGE SCALE MRNA] (ISOFORM MDM2)</scope>
    <source>
        <tissue>Tongue</tissue>
    </source>
</reference>
<reference key="6">
    <citation type="submission" date="2003-05" db="EMBL/GenBank/DDBJ databases">
        <title>Cloning of human full-length CDSs in BD Creator(TM) system donor vector.</title>
        <authorList>
            <person name="Kalnine N."/>
            <person name="Chen X."/>
            <person name="Rolfs A."/>
            <person name="Halleck A."/>
            <person name="Hines L."/>
            <person name="Eisenstein S."/>
            <person name="Koundinya M."/>
            <person name="Raphael J."/>
            <person name="Moreira D."/>
            <person name="Kelley T."/>
            <person name="LaBaer J."/>
            <person name="Lin Y."/>
            <person name="Phelan M."/>
            <person name="Farmer A."/>
        </authorList>
    </citation>
    <scope>NUCLEOTIDE SEQUENCE [LARGE SCALE MRNA] (ISOFORM MDM2)</scope>
</reference>
<reference key="7">
    <citation type="submission" date="2002-07" db="EMBL/GenBank/DDBJ databases">
        <authorList>
            <consortium name="NIEHS SNPs program"/>
        </authorList>
    </citation>
    <scope>NUCLEOTIDE SEQUENCE [GENOMIC DNA]</scope>
</reference>
<reference key="8">
    <citation type="journal article" date="2006" name="Nature">
        <title>The finished DNA sequence of human chromosome 12.</title>
        <authorList>
            <person name="Scherer S.E."/>
            <person name="Muzny D.M."/>
            <person name="Buhay C.J."/>
            <person name="Chen R."/>
            <person name="Cree A."/>
            <person name="Ding Y."/>
            <person name="Dugan-Rocha S."/>
            <person name="Gill R."/>
            <person name="Gunaratne P."/>
            <person name="Harris R.A."/>
            <person name="Hawes A.C."/>
            <person name="Hernandez J."/>
            <person name="Hodgson A.V."/>
            <person name="Hume J."/>
            <person name="Jackson A."/>
            <person name="Khan Z.M."/>
            <person name="Kovar-Smith C."/>
            <person name="Lewis L.R."/>
            <person name="Lozado R.J."/>
            <person name="Metzker M.L."/>
            <person name="Milosavljevic A."/>
            <person name="Miner G.R."/>
            <person name="Montgomery K.T."/>
            <person name="Morgan M.B."/>
            <person name="Nazareth L.V."/>
            <person name="Scott G."/>
            <person name="Sodergren E."/>
            <person name="Song X.-Z."/>
            <person name="Steffen D."/>
            <person name="Lovering R.C."/>
            <person name="Wheeler D.A."/>
            <person name="Worley K.C."/>
            <person name="Yuan Y."/>
            <person name="Zhang Z."/>
            <person name="Adams C.Q."/>
            <person name="Ansari-Lari M.A."/>
            <person name="Ayele M."/>
            <person name="Brown M.J."/>
            <person name="Chen G."/>
            <person name="Chen Z."/>
            <person name="Clerc-Blankenburg K.P."/>
            <person name="Davis C."/>
            <person name="Delgado O."/>
            <person name="Dinh H.H."/>
            <person name="Draper H."/>
            <person name="Gonzalez-Garay M.L."/>
            <person name="Havlak P."/>
            <person name="Jackson L.R."/>
            <person name="Jacob L.S."/>
            <person name="Kelly S.H."/>
            <person name="Li L."/>
            <person name="Li Z."/>
            <person name="Liu J."/>
            <person name="Liu W."/>
            <person name="Lu J."/>
            <person name="Maheshwari M."/>
            <person name="Nguyen B.-V."/>
            <person name="Okwuonu G.O."/>
            <person name="Pasternak S."/>
            <person name="Perez L.M."/>
            <person name="Plopper F.J.H."/>
            <person name="Santibanez J."/>
            <person name="Shen H."/>
            <person name="Tabor P.E."/>
            <person name="Verduzco D."/>
            <person name="Waldron L."/>
            <person name="Wang Q."/>
            <person name="Williams G.A."/>
            <person name="Zhang J."/>
            <person name="Zhou J."/>
            <person name="Allen C.C."/>
            <person name="Amin A.G."/>
            <person name="Anyalebechi V."/>
            <person name="Bailey M."/>
            <person name="Barbaria J.A."/>
            <person name="Bimage K.E."/>
            <person name="Bryant N.P."/>
            <person name="Burch P.E."/>
            <person name="Burkett C.E."/>
            <person name="Burrell K.L."/>
            <person name="Calderon E."/>
            <person name="Cardenas V."/>
            <person name="Carter K."/>
            <person name="Casias K."/>
            <person name="Cavazos I."/>
            <person name="Cavazos S.R."/>
            <person name="Ceasar H."/>
            <person name="Chacko J."/>
            <person name="Chan S.N."/>
            <person name="Chavez D."/>
            <person name="Christopoulos C."/>
            <person name="Chu J."/>
            <person name="Cockrell R."/>
            <person name="Cox C.D."/>
            <person name="Dang M."/>
            <person name="Dathorne S.R."/>
            <person name="David R."/>
            <person name="Davis C.M."/>
            <person name="Davy-Carroll L."/>
            <person name="Deshazo D.R."/>
            <person name="Donlin J.E."/>
            <person name="D'Souza L."/>
            <person name="Eaves K.A."/>
            <person name="Egan A."/>
            <person name="Emery-Cohen A.J."/>
            <person name="Escotto M."/>
            <person name="Flagg N."/>
            <person name="Forbes L.D."/>
            <person name="Gabisi A.M."/>
            <person name="Garza M."/>
            <person name="Hamilton C."/>
            <person name="Henderson N."/>
            <person name="Hernandez O."/>
            <person name="Hines S."/>
            <person name="Hogues M.E."/>
            <person name="Huang M."/>
            <person name="Idlebird D.G."/>
            <person name="Johnson R."/>
            <person name="Jolivet A."/>
            <person name="Jones S."/>
            <person name="Kagan R."/>
            <person name="King L.M."/>
            <person name="Leal B."/>
            <person name="Lebow H."/>
            <person name="Lee S."/>
            <person name="LeVan J.M."/>
            <person name="Lewis L.C."/>
            <person name="London P."/>
            <person name="Lorensuhewa L.M."/>
            <person name="Loulseged H."/>
            <person name="Lovett D.A."/>
            <person name="Lucier A."/>
            <person name="Lucier R.L."/>
            <person name="Ma J."/>
            <person name="Madu R.C."/>
            <person name="Mapua P."/>
            <person name="Martindale A.D."/>
            <person name="Martinez E."/>
            <person name="Massey E."/>
            <person name="Mawhiney S."/>
            <person name="Meador M.G."/>
            <person name="Mendez S."/>
            <person name="Mercado C."/>
            <person name="Mercado I.C."/>
            <person name="Merritt C.E."/>
            <person name="Miner Z.L."/>
            <person name="Minja E."/>
            <person name="Mitchell T."/>
            <person name="Mohabbat F."/>
            <person name="Mohabbat K."/>
            <person name="Montgomery B."/>
            <person name="Moore N."/>
            <person name="Morris S."/>
            <person name="Munidasa M."/>
            <person name="Ngo R.N."/>
            <person name="Nguyen N.B."/>
            <person name="Nickerson E."/>
            <person name="Nwaokelemeh O.O."/>
            <person name="Nwokenkwo S."/>
            <person name="Obregon M."/>
            <person name="Oguh M."/>
            <person name="Oragunye N."/>
            <person name="Oviedo R.J."/>
            <person name="Parish B.J."/>
            <person name="Parker D.N."/>
            <person name="Parrish J."/>
            <person name="Parks K.L."/>
            <person name="Paul H.A."/>
            <person name="Payton B.A."/>
            <person name="Perez A."/>
            <person name="Perrin W."/>
            <person name="Pickens A."/>
            <person name="Primus E.L."/>
            <person name="Pu L.-L."/>
            <person name="Puazo M."/>
            <person name="Quiles M.M."/>
            <person name="Quiroz J.B."/>
            <person name="Rabata D."/>
            <person name="Reeves K."/>
            <person name="Ruiz S.J."/>
            <person name="Shao H."/>
            <person name="Sisson I."/>
            <person name="Sonaike T."/>
            <person name="Sorelle R.P."/>
            <person name="Sutton A.E."/>
            <person name="Svatek A.F."/>
            <person name="Svetz L.A."/>
            <person name="Tamerisa K.S."/>
            <person name="Taylor T.R."/>
            <person name="Teague B."/>
            <person name="Thomas N."/>
            <person name="Thorn R.D."/>
            <person name="Trejos Z.Y."/>
            <person name="Trevino B.K."/>
            <person name="Ukegbu O.N."/>
            <person name="Urban J.B."/>
            <person name="Vasquez L.I."/>
            <person name="Vera V.A."/>
            <person name="Villasana D.M."/>
            <person name="Wang L."/>
            <person name="Ward-Moore S."/>
            <person name="Warren J.T."/>
            <person name="Wei X."/>
            <person name="White F."/>
            <person name="Williamson A.L."/>
            <person name="Wleczyk R."/>
            <person name="Wooden H.S."/>
            <person name="Wooden S.H."/>
            <person name="Yen J."/>
            <person name="Yoon L."/>
            <person name="Yoon V."/>
            <person name="Zorrilla S.E."/>
            <person name="Nelson D."/>
            <person name="Kucherlapati R."/>
            <person name="Weinstock G."/>
            <person name="Gibbs R.A."/>
        </authorList>
    </citation>
    <scope>NUCLEOTIDE SEQUENCE [LARGE SCALE GENOMIC DNA]</scope>
</reference>
<reference key="9">
    <citation type="journal article" date="2004" name="Genome Res.">
        <title>The status, quality, and expansion of the NIH full-length cDNA project: the Mammalian Gene Collection (MGC).</title>
        <authorList>
            <consortium name="The MGC Project Team"/>
        </authorList>
    </citation>
    <scope>NUCLEOTIDE SEQUENCE [LARGE SCALE MRNA] (ISOFORM 11)</scope>
    <source>
        <tissue>Rhabdomyosarcoma</tissue>
    </source>
</reference>
<reference key="10">
    <citation type="journal article" date="1995" name="Nucleic Acids Res.">
        <title>A functional p53-responsive intronic promoter is contained within the human mdm2 gene.</title>
        <authorList>
            <person name="Zauberman A."/>
            <person name="Flusberg D."/>
            <person name="Haupt Y."/>
            <person name="Barak Y."/>
            <person name="Oren M."/>
        </authorList>
    </citation>
    <scope>NUCLEOTIDE SEQUENCE [GENOMIC DNA] OF 1-24</scope>
</reference>
<reference key="11">
    <citation type="journal article" date="1997" name="Cancer Res.">
        <title>Translational enhancement of mdm2 oncogene expression in human tumor cells containing a stabilized wild-type p53 protein.</title>
        <authorList>
            <person name="Landers J.E."/>
            <person name="Cassel S.L."/>
            <person name="George D.L."/>
        </authorList>
    </citation>
    <scope>NUCLEOTIDE SEQUENCE [GENOMIC DNA] OF 1-9</scope>
</reference>
<reference key="12">
    <citation type="journal article" date="2004" name="Gene">
        <title>Genomic organisation of the human MDM2 oncogene and relationship to its alternatively spliced mRNAs.</title>
        <authorList>
            <person name="Liang H."/>
            <person name="Atkins H."/>
            <person name="Abdel-Fattah R."/>
            <person name="Jones S.N."/>
            <person name="Lunec J."/>
        </authorList>
    </citation>
    <scope>NUCLEOTIDE SEQUENCE [MRNA] OF 6-491 (ISOFORM MDM2-A1)</scope>
</reference>
<reference key="13">
    <citation type="journal article" date="2000" name="Mutat. Res.">
        <title>A MboII polymorphism in exon 11 of the human MDM2 gene occurring in normal blood donors and in soft tissue sarcoma patients: an indication for an increased cancer susceptibility?</title>
        <authorList>
            <person name="Taubert H."/>
            <person name="Kappler M."/>
            <person name="Meye A."/>
            <person name="Bartel F."/>
            <person name="Schlott T."/>
            <person name="Lautenschlaeger C."/>
            <person name="Bache M."/>
            <person name="Schmidt H."/>
            <person name="Wuerl P."/>
        </authorList>
    </citation>
    <scope>NUCLEOTIDE SEQUENCE [GENOMIC DNA] OF 301-481</scope>
</reference>
<reference key="14">
    <citation type="journal article" date="1993" name="Oncogene">
        <title>Identification and characterization of multiple mdm-2 proteins and mdm-2-p53 protein complexes.</title>
        <authorList>
            <person name="Olson D.C."/>
            <person name="Marechal V."/>
            <person name="Momand J."/>
            <person name="Chen J."/>
            <person name="Romocki C."/>
            <person name="Levine A.J."/>
        </authorList>
    </citation>
    <scope>SUBCELLULAR LOCATION</scope>
    <scope>INTERACTION WITH TP53</scope>
</reference>
<reference key="15">
    <citation type="journal article" date="1997" name="FEBS Lett.">
        <title>Oncoprotein MDM2 is a ubiquitin ligase E3 for tumor suppressor p53.</title>
        <authorList>
            <person name="Honda R."/>
            <person name="Tanaka H."/>
            <person name="Yasuda H."/>
        </authorList>
    </citation>
    <scope>MUTAGENESIS OF CYS-464</scope>
</reference>
<reference key="16">
    <citation type="journal article" date="1999" name="J. Biol. Chem.">
        <title>Stabilization of the MDM2 oncoprotein by interaction with the structurally related MDMX protein.</title>
        <authorList>
            <person name="Sharp D.A."/>
            <person name="Kratowicz S.A."/>
            <person name="Sank M.J."/>
            <person name="George D.L."/>
        </authorList>
    </citation>
    <scope>MUTAGENESIS OF CYS-441 AND CYS-478</scope>
</reference>
<reference key="17">
    <citation type="journal article" date="1999" name="Proc. Natl. Acad. Sci. U.S.A.">
        <title>Rapid ATM-dependent phosphorylation of MDM2 precedes p53 accumulation in response to DNA damage.</title>
        <authorList>
            <person name="Khosravi R."/>
            <person name="Maya R."/>
            <person name="Gottlieb T."/>
            <person name="Oren M."/>
            <person name="Shiloh Y."/>
            <person name="Shkedy D."/>
        </authorList>
    </citation>
    <scope>PHOSPHORYLATION BY ATM</scope>
</reference>
<reference key="18">
    <citation type="journal article" date="2000" name="J. Biol. Chem.">
        <title>Mdm2 is a RING finger-dependent ubiquitin protein ligase for itself and p53.</title>
        <authorList>
            <person name="Fang S."/>
            <person name="Jensen J.P."/>
            <person name="Ludwig R.L."/>
            <person name="Vousden K.H."/>
            <person name="Weissman A.M."/>
        </authorList>
    </citation>
    <scope>MUTAGENESIS</scope>
</reference>
<reference key="19">
    <citation type="journal article" date="2000" name="Nat. Cell Biol.">
        <title>Identification of a cryptic nucleolar-localization signal in MDM2.</title>
        <authorList>
            <person name="Lohrum M.A.E."/>
            <person name="Ashcroft M."/>
            <person name="Kubbutat M.H.G."/>
            <person name="Vousden K.H."/>
        </authorList>
    </citation>
    <scope>NUCLEOLAR LOCALIZATION SIGNAL</scope>
</reference>
<reference key="20">
    <citation type="journal article" date="2000" name="Oncogene">
        <title>Activity of MDM2, a ubiquitin ligase, toward p53 or itself is dependent on the RING finger domain of the ligase.</title>
        <authorList>
            <person name="Honda R."/>
            <person name="Yasuda H."/>
        </authorList>
    </citation>
    <scope>MUTAGENESIS OF CYS-449</scope>
</reference>
<reference key="21">
    <citation type="journal article" date="2002" name="Mol. Cell. Biol.">
        <title>Hypophosphorylation of Mdm2 augments p53 stability.</title>
        <authorList>
            <person name="Blattner C."/>
            <person name="Hay T."/>
            <person name="Meek D.W."/>
            <person name="Lane D.P."/>
        </authorList>
    </citation>
    <scope>PHOSPHORYLATION AT SER-240; SER-242; SER-246; SER-260 AND SER-262</scope>
</reference>
<reference key="22">
    <citation type="journal article" date="2003" name="Nat. Cell Biol.">
        <title>A non-proteolytic role for ubiquitin in Tat-mediated transactivation of the HIV-1 promoter.</title>
        <authorList>
            <person name="Bres V."/>
            <person name="Kiernan R.E."/>
            <person name="Linares L.K."/>
            <person name="Chable-Bessia C."/>
            <person name="Plechakova O."/>
            <person name="Treand C."/>
            <person name="Emiliani S."/>
            <person name="Peloponese J.-M."/>
            <person name="Jeang K.-T."/>
            <person name="Coux O."/>
            <person name="Scheffner M."/>
            <person name="Benkirane M."/>
        </authorList>
    </citation>
    <scope>INTERACTION WITH HIV-1 TAT (MICROBIAL INFECTION)</scope>
</reference>
<reference key="23">
    <citation type="journal article" date="2003" name="Proc. Natl. Acad. Sci. U.S.A.">
        <title>Mdm2-dependent ubiquitination and degradation of the insulin-like growth factor 1 receptor.</title>
        <authorList>
            <person name="Girnita L."/>
            <person name="Girnita A."/>
            <person name="Larsson O."/>
        </authorList>
    </citation>
    <scope>FUNCTION IN UBIQUITINATION OF IGF1R</scope>
    <scope>CATALYTIC ACTIVITY</scope>
    <scope>INTERACTION WITH IGF1R</scope>
</reference>
<reference key="24">
    <citation type="journal article" date="2004" name="Cancer Res.">
        <title>Synergistic tumor suppression by coexpression of FHIT and p53 coincides with FHIT-mediated MDM2 inactivation and p53 stabilization in human non-small cell lung cancer cells.</title>
        <authorList>
            <person name="Nishizaki M."/>
            <person name="Sasaki J."/>
            <person name="Fang B."/>
            <person name="Atkinson E.N."/>
            <person name="Minna J.D."/>
            <person name="Roth J.A."/>
            <person name="Ji L."/>
        </authorList>
    </citation>
    <scope>INTERACTION WITH FHIT</scope>
</reference>
<reference key="25">
    <citation type="journal article" date="2004" name="Cell">
        <title>A single nucleotide polymorphism in the MDM2 promoter attenuates the p53 tumor suppressor pathway and accelerates tumor formation in humans.</title>
        <authorList>
            <person name="Bond G.L."/>
            <person name="Hu W."/>
            <person name="Bond E.E."/>
            <person name="Robins H."/>
            <person name="Lutzker S.G."/>
            <person name="Arva N.C."/>
            <person name="Bargonetti J."/>
            <person name="Bartel F."/>
            <person name="Taubert H."/>
            <person name="Wuerl P."/>
            <person name="Onel K."/>
            <person name="Yip L."/>
            <person name="Hwang S.J."/>
            <person name="Strong L.C."/>
            <person name="Lozano G."/>
            <person name="Levine A.J."/>
        </authorList>
    </citation>
    <scope>INVOLVEMENT IN SUSCEPTIBILITY TO ACCELERATED TUMOR FORMATION</scope>
</reference>
<reference key="26">
    <citation type="journal article" date="2004" name="J. Biol. Chem.">
        <title>Negative regulation of p53 functions by Daxx and the involvement of MDM2.</title>
        <authorList>
            <person name="Zhao L.Y."/>
            <person name="Liu J."/>
            <person name="Sidhu G.S."/>
            <person name="Niu Y."/>
            <person name="Liu Y."/>
            <person name="Wang R."/>
            <person name="Liao D."/>
        </authorList>
    </citation>
    <scope>INTERACTION WITH DAXX</scope>
</reference>
<reference key="27">
    <citation type="journal article" date="2004" name="Mol. Cell">
        <title>A dynamic role of HAUSP in the p53-Mdm2 pathway.</title>
        <authorList>
            <person name="Li M."/>
            <person name="Brooks C.L."/>
            <person name="Kon N."/>
            <person name="Gu W."/>
        </authorList>
    </citation>
    <scope>FUNCTION</scope>
    <scope>INTERACTION WITH USP7</scope>
    <scope>DEUBIQUITINATION BY USP7</scope>
</reference>
<reference key="28">
    <citation type="journal article" date="2004" name="Nat. Cell Biol.">
        <title>PML regulates p53 stability by sequestering Mdm2 to the nucleolus.</title>
        <authorList>
            <person name="Bernardi R."/>
            <person name="Scaglioni P.P."/>
            <person name="Bergmann S."/>
            <person name="Horn H.F."/>
            <person name="Vousden K.H."/>
            <person name="Pandolfi P.P."/>
        </authorList>
    </citation>
    <scope>FUNCTION</scope>
    <scope>INTERACTION WITH PML AND RPL11</scope>
    <scope>SUBCELLULAR LOCATION</scope>
</reference>
<reference key="29">
    <citation type="journal article" date="2005" name="J. Biol. Chem.">
        <title>{beta}-Arrestin is crucial for ubiquitination and down-regulation of the insulin-like growth factor-1 receptor by acting as adaptor for the MDM2 E3 ligase.</title>
        <authorList>
            <person name="Girnita L."/>
            <person name="Shenoy S.K."/>
            <person name="Sehat B."/>
            <person name="Vasilcanu R."/>
            <person name="Girnita A."/>
            <person name="Lefkowitz R.J."/>
            <person name="Larsson O."/>
        </authorList>
    </citation>
    <scope>INTERACTION WITH ARRB1 AND ARRB2</scope>
</reference>
<reference key="30">
    <citation type="journal article" date="2005" name="J. Biol. Chem.">
        <title>WOX1 is essential for tumor necrosis factor-, UV light-, staurosporine-, and p53-mediated cell death, and its tyrosine 33-phosphorylated form binds and stabilizes serine 46-phosphorylated p53.</title>
        <authorList>
            <person name="Chang N.-S."/>
            <person name="Doherty J."/>
            <person name="Ensign A."/>
            <person name="Schultz L."/>
            <person name="Hsu L.-J."/>
            <person name="Hong Q."/>
        </authorList>
    </citation>
    <scope>INTERACTION WITH WWOX AND TP53</scope>
</reference>
<reference key="31">
    <citation type="journal article" date="2005" name="Mol. Cell">
        <title>MDM2 promotes proteasome-dependent ubiquitin-independent degradation of retinoblastoma protein.</title>
        <authorList>
            <person name="Sdek P."/>
            <person name="Ying H."/>
            <person name="Chang D.L."/>
            <person name="Qiu W."/>
            <person name="Zheng H."/>
            <person name="Touitou R."/>
            <person name="Allday M.J."/>
            <person name="Xiao Z.X."/>
        </authorList>
    </citation>
    <scope>FUNCTION</scope>
    <scope>INTERACTION WITH PSMA3</scope>
</reference>
<reference key="32">
    <citation type="journal article" date="2005" name="Mol. Cell. Biol.">
        <title>Regulation of p53 and MDM2 activity by MTBP.</title>
        <authorList>
            <person name="Brady M."/>
            <person name="Vlatkovic N."/>
            <person name="Boyd M.T."/>
        </authorList>
    </citation>
    <scope>FUNCTION</scope>
    <scope>INTERACTION WITH MTBP</scope>
    <scope>MUTAGENESIS OF CYS-464</scope>
</reference>
<reference key="33">
    <citation type="journal article" date="2006" name="Biochem. J.">
        <title>A novel ARF-binding protein (LZAP) alters ARF regulation of HDM2.</title>
        <authorList>
            <person name="Wang J."/>
            <person name="He X."/>
            <person name="Luo Y."/>
            <person name="Yarbrough W.G."/>
        </authorList>
    </citation>
    <scope>INTERACTION WITH CDK5RAP3 AND CDKN2A/ARF</scope>
</reference>
<reference key="34">
    <citation type="journal article" date="2006" name="Mol. Cell. Biol.">
        <title>Interferon-inducible protein IFIXalpha1 functions as a negative regulator of HDM2.</title>
        <authorList>
            <person name="Ding Y."/>
            <person name="Lee J.-F."/>
            <person name="Lu H."/>
            <person name="Lee M.-H."/>
            <person name="Yan D.-H."/>
        </authorList>
    </citation>
    <scope>UBIQUITINATION</scope>
    <scope>INTERACTION WITH PYHIN1</scope>
    <scope>MUTAGENESIS OF CYS-464</scope>
</reference>
<reference key="35">
    <citation type="journal article" date="2006" name="Nat. Cell Biol.">
        <title>Critical role for Daxx in regulating Mdm2.</title>
        <authorList>
            <person name="Tang J."/>
            <person name="Qu L.K."/>
            <person name="Zhang J."/>
            <person name="Wang W."/>
            <person name="Michaelson J.S."/>
            <person name="Degenhardt Y.Y."/>
            <person name="El-Deiry W.S."/>
            <person name="Yang X."/>
        </authorList>
    </citation>
    <scope>IDENTIFICATION IN A COMPLEX WITH DAXX AND USP7</scope>
    <scope>INTERACTION WITH DAXX</scope>
    <scope>SUBCELLULAR LOCATION</scope>
</reference>
<reference key="36">
    <citation type="journal article" date="2007" name="Ann. N. Y. Acad. Sci.">
        <title>CARF binds to three members (ARF, p53, and HDM2) of the p53 tumor-suppressor pathway.</title>
        <authorList>
            <person name="Kamrul H.M."/>
            <person name="Wadhwa R."/>
            <person name="Kaul S.C."/>
        </authorList>
    </citation>
    <scope>INTERACTION WITH CDKN2AIP</scope>
</reference>
<reference key="37">
    <citation type="journal article" date="2007" name="EMBO J.">
        <title>The deubiquitinating enzyme USP2a regulates the p53 pathway by targeting Mdm2.</title>
        <authorList>
            <person name="Stevenson L.F."/>
            <person name="Sparks A."/>
            <person name="Allende-Vega N."/>
            <person name="Xirodimas D.P."/>
            <person name="Lane D.P."/>
            <person name="Saville M.K."/>
        </authorList>
    </citation>
    <scope>FUNCTION</scope>
    <scope>INTERACTION WITH USP2</scope>
    <scope>UBIQUITINATION</scope>
    <scope>DEUBIQUITINATION BY USP2</scope>
</reference>
<reference key="38">
    <citation type="journal article" date="2007" name="Eur. J. Hum. Genet.">
        <title>The single-nucleotide polymorphism 309 in the MDM2 gene contributes to the Li-Fraumeni syndrome and related phenotypes.</title>
        <authorList>
            <person name="Ruijs M.W."/>
            <person name="Schmidt M.K."/>
            <person name="Nevanlinna H."/>
            <person name="Tommiska J."/>
            <person name="Aittomaki K."/>
            <person name="Pruntel R."/>
            <person name="Verhoef S."/>
            <person name="Van't Veer L.J."/>
        </authorList>
    </citation>
    <scope>INVOLVEMENT IN SUSCEPTIBILITY TO ACCELERATED TUMOR FORMATION AND LI-FRAUMENI SYNDROME</scope>
</reference>
<reference key="39">
    <citation type="journal article" date="2007" name="J. Biol. Chem.">
        <title>A novel nuclear interactor of ARF and MDM2 (NIAM) that maintains chromosomal stability.</title>
        <authorList>
            <person name="Tompkins V.S."/>
            <person name="Hagen J."/>
            <person name="Frazier A.A."/>
            <person name="Lushnikova T."/>
            <person name="Fitzgerald M.P."/>
            <person name="di Tommaso A.D."/>
            <person name="Ladeveze V."/>
            <person name="Domann F.E."/>
            <person name="Eischen C.M."/>
            <person name="Quelle D.E."/>
        </authorList>
    </citation>
    <scope>INTERACTION WITH TBRG1</scope>
</reference>
<reference key="40">
    <citation type="journal article" date="2007" name="Proc. Natl. Acad. Sci. U.S.A.">
        <title>PACT is a negative regulator of p53 and essential for cell growth and embryonic development.</title>
        <authorList>
            <person name="Li L."/>
            <person name="Deng B."/>
            <person name="Xing G."/>
            <person name="Teng Y."/>
            <person name="Tian C."/>
            <person name="Cheng X."/>
            <person name="Yin X."/>
            <person name="Yang J."/>
            <person name="Gao X."/>
            <person name="Zhu Y."/>
            <person name="Sun Q."/>
            <person name="Zhang L."/>
            <person name="Yang X."/>
            <person name="He F."/>
        </authorList>
    </citation>
    <scope>INTERACTION WITH RBBP6</scope>
</reference>
<reference key="41">
    <citation type="journal article" date="2008" name="Cell Cycle">
        <title>CARPs enhance p53 turnover by degrading 14-3-3sigma and stabilizing MDM2.</title>
        <authorList>
            <person name="Yang W."/>
            <person name="Dicker D.T."/>
            <person name="Chen J."/>
            <person name="El-Deiry W.S."/>
        </authorList>
    </citation>
    <scope>INTERACTION WITH RFFL AND RNF34</scope>
    <scope>AUTOUBIQUITINATION</scope>
</reference>
<reference key="42">
    <citation type="journal article" date="2008" name="EMBO J.">
        <title>The tumour suppressor RASSF1A promotes MDM2 self-ubiquitination by disrupting the MDM2-DAXX-HAUSP complex.</title>
        <authorList>
            <person name="Song M.S."/>
            <person name="Song S.J."/>
            <person name="Kim S.Y."/>
            <person name="Oh H.J."/>
            <person name="Lim D.S."/>
        </authorList>
    </citation>
    <scope>IDENTIFICATION IN A COMPLEX WITH DAXX; RASSF1 AND USP7</scope>
    <scope>INTERACTION WITH RASSF1; USP7 AND DAXX</scope>
    <scope>SUBCELLULAR LOCATION</scope>
</reference>
<reference key="43">
    <citation type="journal article" date="2009" name="EMBO J.">
        <title>ATM activates p53 by regulating MDM2 oligomerization and E3 processivity.</title>
        <authorList>
            <person name="Cheng Q."/>
            <person name="Chen L."/>
            <person name="Li Z."/>
            <person name="Lane W.S."/>
            <person name="Chen J."/>
        </authorList>
    </citation>
    <scope>PHOSPHORYLATION AT SER-386; SER-395; SER-407; THR-419; SER-425 AND SER-429</scope>
    <scope>MUTAGENESIS OF SER-386; SER-395; SER-407; THR-419; SER-425 AND SER-429</scope>
</reference>
<reference key="44">
    <citation type="journal article" date="2009" name="EMBO Rep.">
        <title>RYBP stabilizes p53 by modulating MDM2.</title>
        <authorList>
            <person name="Chen D."/>
            <person name="Zhang J."/>
            <person name="Li M."/>
            <person name="Rayburn E.R."/>
            <person name="Wang H."/>
            <person name="Zhang R."/>
        </authorList>
    </citation>
    <scope>FUNCTION</scope>
    <scope>INTERACTION WITH RYBP</scope>
    <scope>IDENTIFICATION IN A COMPLEX WITH RYBP AND TP53</scope>
</reference>
<reference key="45">
    <citation type="journal article" date="2009" name="J. Biol. Chem.">
        <title>MTA1 coregulator regulates p53 stability and function.</title>
        <authorList>
            <person name="Li D.Q."/>
            <person name="Divijendra Natha Reddy S."/>
            <person name="Pakala S.B."/>
            <person name="Wu X."/>
            <person name="Zhang Y."/>
            <person name="Rayala S.K."/>
            <person name="Kumar R."/>
        </authorList>
    </citation>
    <scope>FUNCTION</scope>
    <scope>INTERACTION WITH MTA1</scope>
</reference>
<reference key="46">
    <citation type="journal article" date="2009" name="J. Mol. Med.">
        <title>Sgk1 activates MDM2-dependent p53 degradation and affects cell proliferation, survival, and differentiation.</title>
        <authorList>
            <person name="Amato R."/>
            <person name="D'Antona L."/>
            <person name="Porciatti G."/>
            <person name="Agosti V."/>
            <person name="Menniti M."/>
            <person name="Rinaldo C."/>
            <person name="Costa N."/>
            <person name="Bellacchio E."/>
            <person name="Mattarocci S."/>
            <person name="Fuiano G."/>
            <person name="Soddu S."/>
            <person name="Paggi M.G."/>
            <person name="Lang F."/>
            <person name="Perrotti N."/>
        </authorList>
    </citation>
    <scope>PHOSPHORYLATION AT SER-166 BY SGK1</scope>
</reference>
<reference key="47">
    <citation type="journal article" date="2009" name="J. Virol.">
        <title>Kaposi's sarcoma-associated herpesvirus viral interferon regulatory factor 4 targets MDM2 to deregulate the p53 tumor suppressor pathway.</title>
        <authorList>
            <person name="Lee H.R."/>
            <person name="Toth Z."/>
            <person name="Shin Y.C."/>
            <person name="Lee J.S."/>
            <person name="Chang H."/>
            <person name="Gu W."/>
            <person name="Oh T.K."/>
            <person name="Kim M.H."/>
            <person name="Jung J.U."/>
        </authorList>
    </citation>
    <scope>INTERACTION WITH HHV-8 PROTEIN VIRF4 (MICROBIAL INFECTION)</scope>
</reference>
<reference key="48">
    <citation type="journal article" date="2009" name="Oncogene">
        <title>Ubiquitination of mammalian AP endonuclease (APE1) regulated by the p53-MDM2 signaling pathway.</title>
        <authorList>
            <person name="Busso C.S."/>
            <person name="Iwakuma T."/>
            <person name="Izumi T."/>
        </authorList>
    </citation>
    <scope>FUNCTION</scope>
    <scope>INTERACTION WITH APEX1</scope>
    <scope>MUTAGENESIS OF CYS-464</scope>
</reference>
<reference key="49">
    <citation type="journal article" date="2009" name="Mol. Cell. Proteomics">
        <title>A strategy for precise and large scale identification of core fucosylated glycoproteins.</title>
        <authorList>
            <person name="Jia W."/>
            <person name="Lu Z."/>
            <person name="Fu Y."/>
            <person name="Wang H.P."/>
            <person name="Wang L.H."/>
            <person name="Chi H."/>
            <person name="Yuan Z.F."/>
            <person name="Zheng Z.B."/>
            <person name="Song L.N."/>
            <person name="Han H.H."/>
            <person name="Liang Y.M."/>
            <person name="Wang J.L."/>
            <person name="Cai Y."/>
            <person name="Zhang Y.K."/>
            <person name="Deng Y.L."/>
            <person name="Ying W.T."/>
            <person name="He S.M."/>
            <person name="Qian X.H."/>
        </authorList>
    </citation>
    <scope>IDENTIFICATION</scope>
</reference>
<reference key="50">
    <citation type="journal article" date="2009" name="Sci. Signal.">
        <title>Quantitative phosphoproteomic analysis of T cell receptor signaling reveals system-wide modulation of protein-protein interactions.</title>
        <authorList>
            <person name="Mayya V."/>
            <person name="Lundgren D.H."/>
            <person name="Hwang S.-I."/>
            <person name="Rezaul K."/>
            <person name="Wu L."/>
            <person name="Eng J.K."/>
            <person name="Rodionov V."/>
            <person name="Han D.K."/>
        </authorList>
    </citation>
    <scope>PHOSPHORYLATION [LARGE SCALE ANALYSIS] AT SER-166</scope>
    <scope>IDENTIFICATION BY MASS SPECTROMETRY [LARGE SCALE ANALYSIS]</scope>
    <source>
        <tissue>Leukemic T-cell</tissue>
    </source>
</reference>
<reference key="51">
    <citation type="journal article" date="2010" name="FEBS Lett.">
        <title>p53 inhibits tumor cell invasion via the degradation of snail protein in hepatocellular carcinoma.</title>
        <authorList>
            <person name="Lim S.O."/>
            <person name="Kim H."/>
            <person name="Jung G."/>
        </authorList>
    </citation>
    <scope>FUNCTION</scope>
    <scope>INTERACTION WITH SNAI1</scope>
</reference>
<reference key="52">
    <citation type="journal article" date="2010" name="J. Biol. Chem.">
        <title>ATM augments nuclear stabilization of DYRK2 by inhibiting MDM2 in the apoptotic response to DNA damage.</title>
        <authorList>
            <person name="Taira N."/>
            <person name="Yamamoto H."/>
            <person name="Yamaguchi T."/>
            <person name="Miki Y."/>
            <person name="Yoshida K."/>
        </authorList>
    </citation>
    <scope>FUNCTION IN DYRK2 UBIQUITINATION</scope>
    <scope>INTERACTION WITH DYRK2</scope>
</reference>
<reference key="53">
    <citation type="journal article" date="2010" name="Mol. Cancer Res.">
        <title>Interactions of ErbB4 and Kap1 connect the growth factor and DNA damage response pathways.</title>
        <authorList>
            <person name="Gilmore-Hebert M."/>
            <person name="Ramabhadran R."/>
            <person name="Stern D.F."/>
        </authorList>
    </citation>
    <scope>INTERACTION WITH TRIM28 IN THE TRIM28/KAP1-ERBB4-MDM2 COMPLEX AND WITH TP53 IN THE TRIM28/KAP1-MDM2-P53/TP53 COMPLEX</scope>
    <scope>FUNCTION</scope>
    <scope>SUBCELLULAR LOCATION</scope>
</reference>
<reference key="54">
    <citation type="journal article" date="2010" name="Proc. Natl. Acad. Sci. U.S.A.">
        <title>RFWD3-Mdm2 ubiquitin ligase complex positively regulates p53 stability in response to DNA damage.</title>
        <authorList>
            <person name="Fu X."/>
            <person name="Yucer N."/>
            <person name="Liu S."/>
            <person name="Li M."/>
            <person name="Yi P."/>
            <person name="Mu J.J."/>
            <person name="Yang T."/>
            <person name="Chu J."/>
            <person name="Jung S.Y."/>
            <person name="O'Malley B.W."/>
            <person name="Gu W."/>
            <person name="Qin J."/>
            <person name="Wang Y."/>
        </authorList>
    </citation>
    <scope>FUNCTION</scope>
    <scope>INTERACTION WITH TP53 AND RFWD3</scope>
    <scope>MUTAGENESIS OF CYS-464</scope>
</reference>
<reference key="55">
    <citation type="journal article" date="2010" name="Oncogene">
        <title>MdmX is a substrate for the deubiquitinating enzyme USP2a.</title>
        <authorList>
            <person name="Allende-Vega N."/>
            <person name="Sparks A."/>
            <person name="Lane D.P."/>
            <person name="Saville M.K."/>
        </authorList>
    </citation>
    <scope>INTERACTION WITH USP2 AND MDM4</scope>
</reference>
<reference key="56">
    <citation type="journal article" date="2011" name="BMC Biol.">
        <title>Notch1 binds and induces degradation of Snail in hepatocellular carcinoma.</title>
        <authorList>
            <person name="Lim S.O."/>
            <person name="Kim H.S."/>
            <person name="Quan X."/>
            <person name="Ahn S.M."/>
            <person name="Kim H."/>
            <person name="Hsieh D."/>
            <person name="Seong J.K."/>
            <person name="Jung G."/>
        </authorList>
    </citation>
    <scope>FUNCTION</scope>
    <scope>INTERACTION WITH SNAI1 AND NOTCH1</scope>
</reference>
<reference key="57">
    <citation type="journal article" date="2011" name="Eur. J. Cell Biol.">
        <title>Ret finger protein 2 enhances ionizing radiation-induced apoptosis via degradation of AKT and MDM2.</title>
        <authorList>
            <person name="Joo H.M."/>
            <person name="Kim J.Y."/>
            <person name="Jeong J.B."/>
            <person name="Seong K.M."/>
            <person name="Nam S.Y."/>
            <person name="Yang K.H."/>
            <person name="Kim C.S."/>
            <person name="Kim H.S."/>
            <person name="Jeong M."/>
            <person name="An S."/>
            <person name="Jin Y.W."/>
        </authorList>
    </citation>
    <scope>INTERACTION WITH TRIM13</scope>
    <scope>UBIQUITINATION</scope>
</reference>
<reference key="58">
    <citation type="journal article" date="2013" name="Cell Rep.">
        <title>The 5S RNP couples p53 homeostasis to ribosome biogenesis and nucleolar stress.</title>
        <authorList>
            <person name="Sloan K.E."/>
            <person name="Bohnsack M.T."/>
            <person name="Watkins N.J."/>
        </authorList>
    </citation>
    <scope>SUBUNIT</scope>
</reference>
<reference key="59">
    <citation type="journal article" date="2013" name="J. Proteome Res.">
        <title>Toward a comprehensive characterization of a human cancer cell phosphoproteome.</title>
        <authorList>
            <person name="Zhou H."/>
            <person name="Di Palma S."/>
            <person name="Preisinger C."/>
            <person name="Peng M."/>
            <person name="Polat A.N."/>
            <person name="Heck A.J."/>
            <person name="Mohammed S."/>
        </authorList>
    </citation>
    <scope>PHOSPHORYLATION [LARGE SCALE ANALYSIS] AT SER-166</scope>
    <scope>IDENTIFICATION BY MASS SPECTROMETRY [LARGE SCALE ANALYSIS]</scope>
    <source>
        <tissue>Erythroleukemia</tissue>
    </source>
</reference>
<reference key="60">
    <citation type="journal article" date="2013" name="Oncogene">
        <title>BMK1 is involved in the regulation of p53 through disrupting the PML-MDM2 interaction.</title>
        <authorList>
            <person name="Yang Q."/>
            <person name="Liao L."/>
            <person name="Deng X."/>
            <person name="Chen R."/>
            <person name="Gray N.S."/>
            <person name="Yates J.R. III"/>
            <person name="Lee J.D."/>
        </authorList>
    </citation>
    <scope>SUBCELLULAR LOCATION</scope>
    <scope>INTERACTION WITH PML</scope>
</reference>
<reference key="61">
    <citation type="journal article" date="2015" name="J. Biol. Chem.">
        <title>Nucleolar GTP-binding protein-1 (NGP-1) promotes G1 to S phase transition by activating cyclin-dependent kinase inhibitor p21 Cip1/Waf1.</title>
        <authorList>
            <person name="Datta D."/>
            <person name="Anbarasu K."/>
            <person name="Rajabather S."/>
            <person name="Priya R.S."/>
            <person name="Desai P."/>
            <person name="Mahalingam S."/>
        </authorList>
    </citation>
    <scope>INTERACTION WITH RPL23A</scope>
</reference>
<reference key="62">
    <citation type="journal article" date="2015" name="Proc. Natl. Acad. Sci. U.S.A.">
        <title>F-box protein FBXO31 directs degradation of MDM2 to facilitate p53-mediated growth arrest following genotoxic stress.</title>
        <authorList>
            <person name="Malonia S.K."/>
            <person name="Dutta P."/>
            <person name="Santra M.K."/>
            <person name="Green M.R."/>
        </authorList>
    </citation>
    <scope>PHOSPHORYLATION</scope>
    <scope>UBIQUITINATION</scope>
    <scope>MUTAGENESIS OF SER-386; SER-395; SER-407; THR-419; SER-425 AND SER-429</scope>
</reference>
<reference key="63">
    <citation type="journal article" date="2018" name="Cell Chem. Biol.">
        <title>A Designed Peptide Targets Two Types of Modifications of p53 with Anti-cancer Activity.</title>
        <authorList>
            <person name="Liang L."/>
            <person name="Wang H."/>
            <person name="Shi H."/>
            <person name="Li Z."/>
            <person name="Yao H."/>
            <person name="Bu Z."/>
            <person name="Song N."/>
            <person name="Li C."/>
            <person name="Xiang D."/>
            <person name="Zhang Y."/>
            <person name="Wang J."/>
            <person name="Hu Y."/>
            <person name="Xu Q."/>
            <person name="Ma Y."/>
            <person name="Cheng Z."/>
            <person name="Wang Y."/>
            <person name="Zhao S."/>
            <person name="Qian J."/>
            <person name="Chen Y."/>
            <person name="Fang J.Y."/>
            <person name="Xu J."/>
        </authorList>
    </citation>
    <scope>FUNCTION</scope>
    <scope>INTERACTION WITH MORN3</scope>
</reference>
<reference key="64">
    <citation type="journal article" date="2019" name="Mol. Cell">
        <title>MDM2 Integrates Cellular Respiration and Apoptotic Signaling through NDUFS1 and the Mitochondrial Network.</title>
        <authorList>
            <person name="Elkholi R."/>
            <person name="Abraham-Enachescu I."/>
            <person name="Trotta A.P."/>
            <person name="Rubio-Patino C."/>
            <person name="Mohammed J.N."/>
            <person name="Luna-Vargas M.P.A."/>
            <person name="Gelles J.D."/>
            <person name="Kaminetsky J.R."/>
            <person name="Serasinghe M.N."/>
            <person name="Zou C."/>
            <person name="Ali S."/>
            <person name="McStay G.P."/>
            <person name="Pfleger C.M."/>
            <person name="Chipuk J.E."/>
        </authorList>
    </citation>
    <scope>FUNCTION</scope>
    <scope>SUBCELLULAR LOCATION</scope>
    <scope>INTERACTION WITH NDUFS1</scope>
    <scope>MUTAGENESIS OF GLY-58 AND CYS-464</scope>
    <scope>AUTOUBIQUITINATION</scope>
    <scope>REGION</scope>
</reference>
<reference key="65">
    <citation type="journal article" date="2017" name="J. Clin. Invest.">
        <title>Dysfunction of the MDM2/p53 axis is linked to premature aging.</title>
        <authorList>
            <person name="Lessel D."/>
            <person name="Wu D."/>
            <person name="Trujillo C."/>
            <person name="Ramezani T."/>
            <person name="Lessel I."/>
            <person name="Alwasiyah M.K."/>
            <person name="Saha B."/>
            <person name="Hisama F.M."/>
            <person name="Rading K."/>
            <person name="Goebel I."/>
            <person name="Schuetz P."/>
            <person name="Speit G."/>
            <person name="Hoegel J."/>
            <person name="Thiele H."/>
            <person name="Nuernberg G."/>
            <person name="Nuernberg P."/>
            <person name="Hammerschmidt M."/>
            <person name="Zhu Y."/>
            <person name="Tong D.R."/>
            <person name="Katz C."/>
            <person name="Martin G.M."/>
            <person name="Oshima J."/>
            <person name="Prives C."/>
            <person name="Kubisch C."/>
        </authorList>
    </citation>
    <scope>INVOLVEMENT IN LSKB</scope>
</reference>
<reference evidence="67" key="66">
    <citation type="journal article" date="1996" name="Science">
        <title>Structure of the MDM2 oncoprotein bound to the p53 tumor suppressor transactivation domain.</title>
        <authorList>
            <person name="Kussie P.H."/>
            <person name="Gorina S."/>
            <person name="Marechal V."/>
            <person name="Elenbaas B."/>
            <person name="Moreau J."/>
            <person name="Levine A.J."/>
            <person name="Pavletich N.P."/>
        </authorList>
    </citation>
    <scope>X-RAY CRYSTALLOGRAPHY (2.6 ANGSTROMS) OF 25-109 IN COMPLEX WITH P53</scope>
</reference>
<reference evidence="68" key="67">
    <citation type="journal article" date="2006" name="PLoS Biol.">
        <title>Structural basis of competitive recognition of p53 and MDM2 by HAUSP/USP7: implications for the regulation of the p53-MDM2 pathway.</title>
        <authorList>
            <person name="Hu M."/>
            <person name="Gu L."/>
            <person name="Li M."/>
            <person name="Jeffrey P.D."/>
            <person name="Gu W."/>
            <person name="Shi Y."/>
        </authorList>
    </citation>
    <scope>X-RAY CRYSTALLOGRAPHY (1.65 ANGSTROMS) OF 224-232 IN COMPLEX WITH USP7</scope>
    <scope>INTERACTION WITH USP7</scope>
</reference>
<reference evidence="69" key="68">
    <citation type="journal article" date="2006" name="Nat. Struct. Mol. Biol.">
        <title>Molecular recognition of p53 and MDM2 by USP7/HAUSP.</title>
        <authorList>
            <person name="Sheng Y."/>
            <person name="Saridakis V."/>
            <person name="Sarkari F."/>
            <person name="Duan S."/>
            <person name="Wu T."/>
            <person name="Arrowsmith C.H."/>
            <person name="Frappier L."/>
        </authorList>
    </citation>
    <scope>X-RAY CRYSTALLOGRAPHY (1.6 ANGSTROMS) OF 145-150 IN COMPLEX WITH USP7</scope>
    <scope>INTERACTION WITH USP7</scope>
</reference>
<reference evidence="70" key="69">
    <citation type="journal article" date="2023" name="Nat. Struct. Mol. Biol.">
        <title>Structure of nascent 5S RNPs at the crossroad between ribosome assembly and MDM2-p53 pathways.</title>
        <authorList>
            <person name="Castillo Duque de Estrada N.M."/>
            <person name="Thoms M."/>
            <person name="Flemming D."/>
            <person name="Hammaren H.M."/>
            <person name="Buschauer R."/>
            <person name="Ameismeier M."/>
            <person name="Bassler J."/>
            <person name="Beck M."/>
            <person name="Beckmann R."/>
            <person name="Hurt E."/>
        </authorList>
    </citation>
    <scope>STRUCTURE BY ELECTRON MICROSCOPY (4.10 ANGSTROMS) IN COMPLEX WITH RPL11; RPL5 AND 5S RNA</scope>
    <scope>INTERACTION WITH RPL11</scope>
</reference>
<keyword id="KW-0002">3D-structure</keyword>
<keyword id="KW-0025">Alternative splicing</keyword>
<keyword id="KW-0053">Apoptosis</keyword>
<keyword id="KW-0963">Cytoplasm</keyword>
<keyword id="KW-0945">Host-virus interaction</keyword>
<keyword id="KW-0479">Metal-binding</keyword>
<keyword id="KW-0539">Nucleus</keyword>
<keyword id="KW-0597">Phosphoprotein</keyword>
<keyword id="KW-1267">Proteomics identification</keyword>
<keyword id="KW-0656">Proto-oncogene</keyword>
<keyword id="KW-1185">Reference proteome</keyword>
<keyword id="KW-0808">Transferase</keyword>
<keyword id="KW-0832">Ubl conjugation</keyword>
<keyword id="KW-0833">Ubl conjugation pathway</keyword>
<keyword id="KW-0862">Zinc</keyword>
<keyword id="KW-0863">Zinc-finger</keyword>
<comment type="function">
    <text evidence="2 14 16 17 20 24 31 36 37 41 43 44 45 46 48 54 55">E3 ubiquitin-protein ligase that mediates ubiquitination of p53/TP53, leading to its degradation by the proteasome (PubMed:29681526). Inhibits p53/TP53- and p73/TP73-mediated cell cycle arrest and apoptosis by binding its transcriptional activation domain. Also acts as a ubiquitin ligase E3 toward itself and ARRB1. Permits the nuclear export of p53/TP53. Promotes proteasome-dependent ubiquitin-independent degradation of retinoblastoma RB1 protein. Inhibits DAXX-mediated apoptosis by inducing its ubiquitination and degradation. Component of the TRIM28/KAP1-MDM2-p53/TP53 complex involved in stabilizing p53/TP53. Also a component of the TRIM28/KAP1-ERBB4-MDM2 complex which links growth factor and DNA damage response pathways. Mediates ubiquitination and subsequent proteasome degradation of DYRK2 in nucleus. Ubiquitinates IGF1R and SNAI1 and promotes them to proteasomal degradation (PubMed:12821780, PubMed:15053880, PubMed:15195100, PubMed:15632057, PubMed:16337594, PubMed:17290220, PubMed:19098711, PubMed:19219073, PubMed:19837670, PubMed:19965871, PubMed:20173098, PubMed:20385133, PubMed:20858735, PubMed:22128911). Ubiquitinates DCX, leading to DCX degradation and reduction of the dendritic spine density of olfactory bulb granule cells (By similarity). Ubiquitinates DLG4, leading to proteasomal degradation of DLG4 which is required for AMPA receptor endocytosis (By similarity). Negatively regulates NDUFS1, leading to decreased mitochondrial respiration, marked oxidative stress, and commitment to the mitochondrial pathway of apoptosis (PubMed:30879903). Binds NDUFS1 leading to its cytosolic retention rather than mitochondrial localization resulting in decreased supercomplex assembly (interactions between complex I and complex III), decreased complex I activity, ROS production, and apoptosis (PubMed:30879903).</text>
</comment>
<comment type="catalytic activity">
    <reaction evidence="14">
        <text>S-ubiquitinyl-[E2 ubiquitin-conjugating enzyme]-L-cysteine + [acceptor protein]-L-lysine = [E2 ubiquitin-conjugating enzyme]-L-cysteine + N(6)-ubiquitinyl-[acceptor protein]-L-lysine.</text>
        <dbReference type="EC" id="2.3.2.27"/>
    </reaction>
</comment>
<comment type="subunit">
    <text evidence="2 12 14 16 17 18 19 20 21 22 23 24 25 26 27 28 30 31 32 33 34 35 36 37 41 42 43 44 45 46 47 48 49 50 52 54 55 56 57 58">Interacts with p53/TP53, TP73/p73, RBL5 and RP11. Binds specifically to RNA. Can interact with RB1, E1A-associated protein EP300 and the E2F1 transcription factor. Forms a ternary complex with p53/TP53 and WWOX. Interacts with CDKN2AIP, RFWD3, USP7, PYHIN1, and RBBP6. Interacts with ARRB1 and ARRB2. Interacts with PSMA3. Found in a trimeric complex with MDM2, MDM4 and USP2. Interacts with USP2 (via N-terminus and C-terminus). Interacts with MDM4. Part of a complex with MDM2, DAXX, RASSF1 and USP7. Part of a complex with DAXX, MDM2 and USP7. Interacts directly with DAXX and USP7. Interacts (via C-terminus) with RASSF1 isoform A (via N-terminus); the interaction is independent of TP53. Interacts with APEX1; leading to its ubiquitination and degradation. Interacts with RYBP; this inhibits ubiquitination of TP53. Identified in a complex with RYBP and p53/TP53. Also a component of the TRIM28/KAP1-MDM2-p53/TP53 complex involved in regulating p53/TP53 stabilization and activity. Binds directly both p53/TP53 and TRIM28. Component of the TRIM28/KAP1-ERBB4-MDM2 complex involved in connecting growth factor responses with DNA damage. Interacts directly with both TRIM28 and ERBB4 in the complex. Interacts with DYRK2. Interacts with IGF1R. Interacts with TRIM13; the interaction ubiquitinates MDM2 leading to its proteasomal degradation. Interacts with SNAI1; this interaction promotes SNAI1 ubiquitination. Interacts with NOTCH1 (via intracellular domain). Interacts with FHIT. Interacts with RFFL and RNF34; the interaction stabilizes MDM2. Interacts with CDK5RAP3 and CDKN2A/ARF; form a ternary complex involved in regulation of p53/TP53 (PubMed:16173922). Interacts with MTA1. Interacts with AARB2. Interacts with MTBP. Interacts with PML. Interacts with TBRG1. Interacts (via its RanBP2-type zinc finger domain) with RPL11 in the 5S RNP complex composed of 5S RNA, RPL5 and RPL11; this interaction occurs in the nucleoplasm and negatively regulates MDM2-mediated TP53 ubiquitination and degradation (PubMed:15195100, PubMed:24120868, PubMed:37291423). Interacts with ADGRB1; the interaction results in inhibition of MDM2-mediated ubiquitination and degradation of DLG4/PSD95, promoting DLG4 stability and regulating synaptic plasticity (By similarity). Interacts with RPL23A; this interaction may promote p53/TP53 polyubiquitination (PubMed:26203195). Interacts with NDUFS1 (PubMed:30879903). Interacts with MORN3; the interaction enhances the ubiquitination of p53/TP53 (PubMed:29681526).</text>
</comment>
<comment type="subunit">
    <text evidence="38">(Microbial infection) Interacts with herpes virus 8 protein v-IRF4.</text>
</comment>
<comment type="subunit">
    <text evidence="15">(Microbial infection) Interacts with and ubiquitinates HIV-1 Tat.</text>
</comment>
<comment type="interaction">
    <interactant intactId="EBI-389668">
        <id>Q00987</id>
    </interactant>
    <interactant intactId="EBI-296087">
        <id>P31749</id>
        <label>AKT1</label>
    </interactant>
    <organismsDiffer>false</organismsDiffer>
    <experiments>4</experiments>
</comment>
<comment type="interaction">
    <interactant intactId="EBI-389668">
        <id>Q00987</id>
    </interactant>
    <interactant intactId="EBI-608057">
        <id>P10275</id>
        <label>AR</label>
    </interactant>
    <organismsDiffer>false</organismsDiffer>
    <experiments>2</experiments>
</comment>
<comment type="interaction">
    <interactant intactId="EBI-389668">
        <id>Q00987</id>
    </interactant>
    <interactant intactId="EBI-743313">
        <id>P49407</id>
        <label>ARRB1</label>
    </interactant>
    <organismsDiffer>false</organismsDiffer>
    <experiments>3</experiments>
</comment>
<comment type="interaction">
    <interactant intactId="EBI-389668">
        <id>Q00987</id>
    </interactant>
    <interactant intactId="EBI-307461">
        <id>Q9Y297</id>
        <label>BTRC</label>
    </interactant>
    <organismsDiffer>false</organismsDiffer>
    <experiments>9</experiments>
</comment>
<comment type="interaction">
    <interactant intactId="EBI-389668">
        <id>Q00987</id>
    </interactant>
    <interactant intactId="EBI-524064">
        <id>P42574</id>
        <label>CASP3</label>
    </interactant>
    <organismsDiffer>false</organismsDiffer>
    <experiments>2</experiments>
</comment>
<comment type="interaction">
    <interactant intactId="EBI-389668">
        <id>Q00987</id>
    </interactant>
    <interactant intactId="EBI-625922">
        <id>Q8N726</id>
        <label>CDKN2A</label>
    </interactant>
    <organismsDiffer>false</organismsDiffer>
    <experiments>5</experiments>
</comment>
<comment type="interaction">
    <interactant intactId="EBI-389668">
        <id>Q00987</id>
    </interactant>
    <interactant intactId="EBI-1383726">
        <id>P48729</id>
        <label>CSNK1A1</label>
    </interactant>
    <organismsDiffer>false</organismsDiffer>
    <experiments>3</experiments>
</comment>
<comment type="interaction">
    <interactant intactId="EBI-389668">
        <id>Q00987</id>
    </interactant>
    <interactant intactId="EBI-2040168">
        <id>P48729-2</id>
        <label>CSNK1A1</label>
    </interactant>
    <organismsDiffer>false</organismsDiffer>
    <experiments>3</experiments>
</comment>
<comment type="interaction">
    <interactant intactId="EBI-389668">
        <id>Q00987</id>
    </interactant>
    <interactant intactId="EBI-751621">
        <id>P48730</id>
        <label>CSNK1D</label>
    </interactant>
    <organismsDiffer>false</organismsDiffer>
    <experiments>6</experiments>
</comment>
<comment type="interaction">
    <interactant intactId="EBI-389668">
        <id>Q00987</id>
    </interactant>
    <interactant intactId="EBI-749343">
        <id>P49674</id>
        <label>CSNK1E</label>
    </interactant>
    <organismsDiffer>false</organismsDiffer>
    <experiments>3</experiments>
</comment>
<comment type="interaction">
    <interactant intactId="EBI-389668">
        <id>Q00987</id>
    </interactant>
    <interactant intactId="EBI-359390">
        <id>Q13616</id>
        <label>CUL1</label>
    </interactant>
    <organismsDiffer>false</organismsDiffer>
    <experiments>3</experiments>
</comment>
<comment type="interaction">
    <interactant intactId="EBI-389668">
        <id>Q00987</id>
    </interactant>
    <interactant intactId="EBI-77321">
        <id>Q9UER7</id>
        <label>DAXX</label>
    </interactant>
    <organismsDiffer>false</organismsDiffer>
    <experiments>18</experiments>
</comment>
<comment type="interaction">
    <interactant intactId="EBI-389668">
        <id>Q00987</id>
    </interactant>
    <interactant intactId="EBI-80389">
        <id>P78352</id>
        <label>DLG4</label>
    </interactant>
    <organismsDiffer>false</organismsDiffer>
    <experiments>3</experiments>
</comment>
<comment type="interaction">
    <interactant intactId="EBI-389668">
        <id>Q00987</id>
    </interactant>
    <interactant intactId="EBI-352162">
        <id>P68104</id>
        <label>EEF1A1</label>
    </interactant>
    <organismsDiffer>false</organismsDiffer>
    <experiments>9</experiments>
</comment>
<comment type="interaction">
    <interactant intactId="EBI-389668">
        <id>Q00987</id>
    </interactant>
    <interactant intactId="EBI-78473">
        <id>P03372</id>
        <label>ESR1</label>
    </interactant>
    <organismsDiffer>false</organismsDiffer>
    <experiments>2</experiments>
</comment>
<comment type="interaction">
    <interactant intactId="EBI-389668">
        <id>Q00987</id>
    </interactant>
    <interactant intactId="EBI-1056902">
        <id>P15311</id>
        <label>EZR</label>
    </interactant>
    <organismsDiffer>false</organismsDiffer>
    <experiments>3</experiments>
</comment>
<comment type="interaction">
    <interactant intactId="EBI-389668">
        <id>Q00987</id>
    </interactant>
    <interactant intactId="EBI-355189">
        <id>Q9UKB1</id>
        <label>FBXW11</label>
    </interactant>
    <organismsDiffer>false</organismsDiffer>
    <experiments>4</experiments>
</comment>
<comment type="interaction">
    <interactant intactId="EBI-389668">
        <id>Q00987</id>
    </interactant>
    <interactant intactId="EBI-1044081">
        <id>Q00688</id>
        <label>FKBP3</label>
    </interactant>
    <organismsDiffer>false</organismsDiffer>
    <experiments>2</experiments>
</comment>
<comment type="interaction">
    <interactant intactId="EBI-389668">
        <id>Q00987</id>
    </interactant>
    <interactant intactId="EBI-641642">
        <id>Q9BVP2</id>
        <label>GNL3</label>
    </interactant>
    <organismsDiffer>false</organismsDiffer>
    <experiments>3</experiments>
</comment>
<comment type="interaction">
    <interactant intactId="EBI-389668">
        <id>Q00987</id>
    </interactant>
    <interactant intactId="EBI-746682">
        <id>Q9NVN8</id>
        <label>GNL3L</label>
    </interactant>
    <organismsDiffer>false</organismsDiffer>
    <experiments>8</experiments>
</comment>
<comment type="interaction">
    <interactant intactId="EBI-389668">
        <id>Q00987</id>
    </interactant>
    <interactant intactId="EBI-3917143">
        <id>Q5T7V8</id>
        <label>GORAB</label>
    </interactant>
    <organismsDiffer>false</organismsDiffer>
    <experiments>6</experiments>
</comment>
<comment type="interaction">
    <interactant intactId="EBI-389668">
        <id>Q00987</id>
    </interactant>
    <interactant intactId="EBI-3904795">
        <id>P25098</id>
        <label>GRK2</label>
    </interactant>
    <organismsDiffer>false</organismsDiffer>
    <experiments>4</experiments>
</comment>
<comment type="interaction">
    <interactant intactId="EBI-389668">
        <id>Q00987</id>
    </interactant>
    <interactant intactId="EBI-304185">
        <id>P61978</id>
        <label>HNRNPK</label>
    </interactant>
    <organismsDiffer>false</organismsDiffer>
    <experiments>2</experiments>
</comment>
<comment type="interaction">
    <interactant intactId="EBI-389668">
        <id>Q00987</id>
    </interactant>
    <interactant intactId="EBI-866435">
        <id>Q8N9B5</id>
        <label>JMY</label>
    </interactant>
    <organismsDiffer>false</organismsDiffer>
    <experiments>2</experiments>
</comment>
<comment type="interaction">
    <interactant intactId="EBI-389668">
        <id>Q00987</id>
    </interactant>
    <interactant intactId="EBI-852823">
        <id>P05412</id>
        <label>JUN</label>
    </interactant>
    <organismsDiffer>false</organismsDiffer>
    <experiments>3</experiments>
</comment>
<comment type="interaction">
    <interactant intactId="EBI-389668">
        <id>Q00987</id>
    </interactant>
    <interactant intactId="EBI-2682803">
        <id>P17535</id>
        <label>JUND</label>
    </interactant>
    <organismsDiffer>false</organismsDiffer>
    <experiments>3</experiments>
</comment>
<comment type="interaction">
    <interactant intactId="EBI-389668">
        <id>Q00987</id>
    </interactant>
    <interactant intactId="EBI-8796741">
        <id>Q9BY89</id>
        <label>KIAA1671</label>
    </interactant>
    <organismsDiffer>false</organismsDiffer>
    <experiments>2</experiments>
</comment>
<comment type="interaction">
    <interactant intactId="EBI-389668">
        <id>Q00987</id>
    </interactant>
    <interactant intactId="EBI-389668">
        <id>Q00987</id>
        <label>MDM2</label>
    </interactant>
    <organismsDiffer>false</organismsDiffer>
    <experiments>4</experiments>
</comment>
<comment type="interaction">
    <interactant intactId="EBI-389668">
        <id>Q00987</id>
    </interactant>
    <interactant intactId="EBI-398437">
        <id>O15151</id>
        <label>MDM4</label>
    </interactant>
    <organismsDiffer>false</organismsDiffer>
    <experiments>12</experiments>
</comment>
<comment type="interaction">
    <interactant intactId="EBI-389668">
        <id>Q00987</id>
    </interactant>
    <interactant intactId="EBI-346967">
        <id>P19338</id>
        <label>NCL</label>
    </interactant>
    <organismsDiffer>false</organismsDiffer>
    <experiments>8</experiments>
</comment>
<comment type="interaction">
    <interactant intactId="EBI-389668">
        <id>Q00987</id>
    </interactant>
    <interactant intactId="EBI-78579">
        <id>P06748</id>
        <label>NPM1</label>
    </interactant>
    <organismsDiffer>false</organismsDiffer>
    <experiments>5</experiments>
</comment>
<comment type="interaction">
    <interactant intactId="EBI-389668">
        <id>Q00987</id>
    </interactant>
    <interactant intactId="EBI-3910729">
        <id>Q15466</id>
        <label>NR0B2</label>
    </interactant>
    <organismsDiffer>false</organismsDiffer>
    <experiments>4</experiments>
</comment>
<comment type="interaction">
    <interactant intactId="EBI-389668">
        <id>Q00987</id>
    </interactant>
    <interactant intactId="EBI-915016">
        <id>P49757</id>
        <label>NUMB</label>
    </interactant>
    <organismsDiffer>false</organismsDiffer>
    <experiments>7</experiments>
</comment>
<comment type="interaction">
    <interactant intactId="EBI-389668">
        <id>Q00987</id>
    </interactant>
    <interactant intactId="EBI-1058491">
        <id>Q96FW1</id>
        <label>OTUB1</label>
    </interactant>
    <organismsDiffer>false</organismsDiffer>
    <experiments>5</experiments>
</comment>
<comment type="interaction">
    <interactant intactId="EBI-389668">
        <id>Q00987</id>
    </interactant>
    <interactant intactId="EBI-476768">
        <id>P53350</id>
        <label>PLK1</label>
    </interactant>
    <organismsDiffer>false</organismsDiffer>
    <experiments>7</experiments>
</comment>
<comment type="interaction">
    <interactant intactId="EBI-389668">
        <id>Q00987</id>
    </interactant>
    <interactant intactId="EBI-295890">
        <id>P29590</id>
        <label>PML</label>
    </interactant>
    <organismsDiffer>false</organismsDiffer>
    <experiments>6</experiments>
</comment>
<comment type="interaction">
    <interactant intactId="EBI-389668">
        <id>Q00987</id>
    </interactant>
    <interactant intactId="EBI-304008">
        <id>P29590-5</id>
        <label>PML</label>
    </interactant>
    <organismsDiffer>false</organismsDiffer>
    <experiments>6</experiments>
</comment>
<comment type="interaction">
    <interactant intactId="EBI-389668">
        <id>Q00987</id>
    </interactant>
    <interactant intactId="EBI-1551512">
        <id>O15297</id>
        <label>PPM1D</label>
    </interactant>
    <organismsDiffer>false</organismsDiffer>
    <experiments>4</experiments>
</comment>
<comment type="interaction">
    <interactant intactId="EBI-389668">
        <id>Q00987</id>
    </interactant>
    <interactant intactId="EBI-1266156">
        <id>Q13362</id>
        <label>PPP2R5C</label>
    </interactant>
    <organismsDiffer>false</organismsDiffer>
    <experiments>5</experiments>
</comment>
<comment type="interaction">
    <interactant intactId="EBI-389668">
        <id>Q00987</id>
    </interactant>
    <interactant intactId="EBI-348380">
        <id>P25788</id>
        <label>PSMA3</label>
    </interactant>
    <organismsDiffer>false</organismsDiffer>
    <experiments>2</experiments>
</comment>
<comment type="interaction">
    <interactant intactId="EBI-389668">
        <id>Q00987</id>
    </interactant>
    <interactant intactId="EBI-355546">
        <id>P61289</id>
        <label>PSME3</label>
    </interactant>
    <organismsDiffer>false</organismsDiffer>
    <experiments>8</experiments>
</comment>
<comment type="interaction">
    <interactant intactId="EBI-389668">
        <id>Q00987</id>
    </interactant>
    <interactant intactId="EBI-367363">
        <id>Q9NS23</id>
        <label>RASSF1</label>
    </interactant>
    <organismsDiffer>false</organismsDiffer>
    <experiments>5</experiments>
</comment>
<comment type="interaction">
    <interactant intactId="EBI-389668">
        <id>Q00987</id>
    </interactant>
    <interactant intactId="EBI-491274">
        <id>P06400</id>
        <label>RB1</label>
    </interactant>
    <organismsDiffer>false</organismsDiffer>
    <experiments>5</experiments>
</comment>
<comment type="interaction">
    <interactant intactId="EBI-389668">
        <id>Q00987</id>
    </interactant>
    <interactant intactId="EBI-2129159">
        <id>Q6PCD5</id>
        <label>RFWD3</label>
    </interactant>
    <organismsDiffer>false</organismsDiffer>
    <experiments>2</experiments>
</comment>
<comment type="interaction">
    <interactant intactId="EBI-389668">
        <id>Q00987</id>
    </interactant>
    <interactant intactId="EBI-2129242">
        <id>Q9Y4L5</id>
        <label>RNF115</label>
    </interactant>
    <organismsDiffer>false</organismsDiffer>
    <experiments>2</experiments>
</comment>
<comment type="interaction">
    <interactant intactId="EBI-389668">
        <id>Q00987</id>
    </interactant>
    <interactant intactId="EBI-354380">
        <id>P62913</id>
        <label>RPL11</label>
    </interactant>
    <organismsDiffer>false</organismsDiffer>
    <experiments>13</experiments>
</comment>
<comment type="interaction">
    <interactant intactId="EBI-389668">
        <id>Q00987</id>
    </interactant>
    <interactant intactId="EBI-353303">
        <id>P62829</id>
        <label>RPL23</label>
    </interactant>
    <organismsDiffer>false</organismsDiffer>
    <experiments>3</experiments>
</comment>
<comment type="interaction">
    <interactant intactId="EBI-389668">
        <id>Q00987</id>
    </interactant>
    <interactant intactId="EBI-358018">
        <id>P46777</id>
        <label>RPL5</label>
    </interactant>
    <organismsDiffer>false</organismsDiffer>
    <experiments>5</experiments>
</comment>
<comment type="interaction">
    <interactant intactId="EBI-389668">
        <id>Q00987</id>
    </interactant>
    <interactant intactId="EBI-356336">
        <id>P42677</id>
        <label>RPS27</label>
    </interactant>
    <organismsDiffer>false</organismsDiffer>
    <experiments>5</experiments>
</comment>
<comment type="interaction">
    <interactant intactId="EBI-389668">
        <id>Q00987</id>
    </interactant>
    <interactant intactId="EBI-355126">
        <id>Q71UM5</id>
        <label>RPS27L</label>
    </interactant>
    <organismsDiffer>false</organismsDiffer>
    <experiments>6</experiments>
</comment>
<comment type="interaction">
    <interactant intactId="EBI-389668">
        <id>Q00987</id>
    </interactant>
    <interactant intactId="EBI-351193">
        <id>P23396</id>
        <label>RPS3</label>
    </interactant>
    <organismsDiffer>false</organismsDiffer>
    <experiments>8</experiments>
</comment>
<comment type="interaction">
    <interactant intactId="EBI-389668">
        <id>Q00987</id>
    </interactant>
    <interactant intactId="EBI-354360">
        <id>P62081</id>
        <label>RPS7</label>
    </interactant>
    <organismsDiffer>false</organismsDiffer>
    <experiments>17</experiments>
</comment>
<comment type="interaction">
    <interactant intactId="EBI-389668">
        <id>Q00987</id>
    </interactant>
    <interactant intactId="EBI-9009083">
        <id>Q7LG56</id>
        <label>RRM2B</label>
    </interactant>
    <organismsDiffer>false</organismsDiffer>
    <experiments>2</experiments>
</comment>
<comment type="interaction">
    <interactant intactId="EBI-389668">
        <id>Q00987</id>
    </interactant>
    <interactant intactId="EBI-15741413">
        <id>Q7LG56-1</id>
        <label>RRM2B</label>
    </interactant>
    <organismsDiffer>false</organismsDiffer>
    <experiments>2</experiments>
</comment>
<comment type="interaction">
    <interactant intactId="EBI-389668">
        <id>Q00987</id>
    </interactant>
    <interactant intactId="EBI-752324">
        <id>Q8N488</id>
        <label>RYBP</label>
    </interactant>
    <organismsDiffer>false</organismsDiffer>
    <experiments>11</experiments>
</comment>
<comment type="interaction">
    <interactant intactId="EBI-389668">
        <id>Q00987</id>
    </interactant>
    <interactant intactId="EBI-1170425">
        <id>Q92736</id>
        <label>RYR2</label>
    </interactant>
    <organismsDiffer>false</organismsDiffer>
    <experiments>2</experiments>
</comment>
<comment type="interaction">
    <interactant intactId="EBI-389668">
        <id>Q00987</id>
    </interactant>
    <interactant intactId="EBI-743686">
        <id>P23297</id>
        <label>S100A1</label>
    </interactant>
    <organismsDiffer>false</organismsDiffer>
    <experiments>2</experiments>
</comment>
<comment type="interaction">
    <interactant intactId="EBI-389668">
        <id>Q00987</id>
    </interactant>
    <interactant intactId="EBI-752230">
        <id>P29034</id>
        <label>S100A2</label>
    </interactant>
    <organismsDiffer>false</organismsDiffer>
    <experiments>2</experiments>
</comment>
<comment type="interaction">
    <interactant intactId="EBI-389668">
        <id>Q00987</id>
    </interactant>
    <interactant intactId="EBI-717058">
        <id>P26447</id>
        <label>S100A4</label>
    </interactant>
    <organismsDiffer>false</organismsDiffer>
    <experiments>3</experiments>
</comment>
<comment type="interaction">
    <interactant intactId="EBI-389668">
        <id>Q00987</id>
    </interactant>
    <interactant intactId="EBI-352877">
        <id>P06703</id>
        <label>S100A6</label>
    </interactant>
    <organismsDiffer>false</organismsDiffer>
    <experiments>2</experiments>
</comment>
<comment type="interaction">
    <interactant intactId="EBI-389668">
        <id>Q00987</id>
    </interactant>
    <interactant intactId="EBI-458391">
        <id>P04271</id>
        <label>S100B</label>
    </interactant>
    <organismsDiffer>false</organismsDiffer>
    <experiments>2</experiments>
</comment>
<comment type="interaction">
    <interactant intactId="EBI-389668">
        <id>Q00987</id>
    </interactant>
    <interactant intactId="EBI-1053182">
        <id>Q01105</id>
        <label>SET</label>
    </interactant>
    <organismsDiffer>false</organismsDiffer>
    <experiments>2</experiments>
</comment>
<comment type="interaction">
    <interactant intactId="EBI-389668">
        <id>Q00987</id>
    </interactant>
    <interactant intactId="EBI-366083">
        <id>P04637</id>
        <label>TP53</label>
    </interactant>
    <organismsDiffer>false</organismsDiffer>
    <experiments>112</experiments>
</comment>
<comment type="interaction">
    <interactant intactId="EBI-389668">
        <id>Q00987</id>
    </interactant>
    <interactant intactId="EBI-389606">
        <id>O15350</id>
        <label>TP73</label>
    </interactant>
    <organismsDiffer>false</organismsDiffer>
    <experiments>4</experiments>
</comment>
<comment type="interaction">
    <interactant intactId="EBI-389668">
        <id>Q00987</id>
    </interactant>
    <interactant intactId="EBI-3390054">
        <id>P0CG48</id>
        <label>UBC</label>
    </interactant>
    <organismsDiffer>false</organismsDiffer>
    <experiments>6</experiments>
</comment>
<comment type="interaction">
    <interactant intactId="EBI-389668">
        <id>Q00987</id>
    </interactant>
    <interactant intactId="EBI-743272">
        <id>O75604</id>
        <label>USP2</label>
    </interactant>
    <organismsDiffer>false</organismsDiffer>
    <experiments>4</experiments>
</comment>
<comment type="interaction">
    <interactant intactId="EBI-389668">
        <id>Q00987</id>
    </interactant>
    <interactant intactId="EBI-302474">
        <id>Q93009</id>
        <label>USP7</label>
    </interactant>
    <organismsDiffer>false</organismsDiffer>
    <experiments>34</experiments>
</comment>
<comment type="interaction">
    <interactant intactId="EBI-389668">
        <id>Q00987</id>
    </interactant>
    <interactant intactId="EBI-1636616">
        <id>P29067</id>
        <label>Arrb2</label>
    </interactant>
    <organismsDiffer>true</organismsDiffer>
    <experiments>4</experiments>
</comment>
<comment type="interaction">
    <interactant intactId="EBI-389668">
        <id>Q00987</id>
    </interactant>
    <interactant intactId="EBI-2910316">
        <id>Q06486</id>
        <label>Csnk1d</label>
    </interactant>
    <organismsDiffer>true</organismsDiffer>
    <experiments>2</experiments>
</comment>
<comment type="interaction">
    <interactant intactId="EBI-389668">
        <id>Q00987</id>
    </interactant>
    <interactant intactId="EBI-8313562">
        <id>Q62446</id>
        <label>Fkbp3</label>
    </interactant>
    <organismsDiffer>true</organismsDiffer>
    <experiments>4</experiments>
</comment>
<comment type="interaction">
    <interactant intactId="EBI-389668">
        <id>Q00987</id>
    </interactant>
    <interactant intactId="EBI-626362">
        <id>Q61937</id>
        <label>Npm1</label>
    </interactant>
    <organismsDiffer>true</organismsDiffer>
    <experiments>2</experiments>
</comment>
<comment type="interaction">
    <interactant intactId="EBI-389668">
        <id>Q00987</id>
    </interactant>
    <interactant intactId="EBI-25622115">
        <id>PRO_0000283876</id>
        <label>rep</label>
        <dbReference type="UniProtKB" id="P0C6X5"/>
    </interactant>
    <organismsDiffer>true</organismsDiffer>
    <experiments>3</experiments>
</comment>
<comment type="interaction">
    <interactant intactId="EBI-389668">
        <id>Q00987</id>
    </interactant>
    <interactant intactId="EBI-9001898">
        <id>Q2HR73</id>
        <label>vIRF-4</label>
    </interactant>
    <organismsDiffer>true</organismsDiffer>
    <experiments>2</experiments>
</comment>
<comment type="interaction">
    <interactant intactId="EBI-389668">
        <id>Q00987</id>
    </interactant>
    <interactant intactId="EBI-2550236">
        <id>Q6P5F9</id>
        <label>Xpo1</label>
    </interactant>
    <organismsDiffer>true</organismsDiffer>
    <experiments>4</experiments>
</comment>
<comment type="interaction">
    <interactant intactId="EBI-5279149">
        <id>Q00987-11</id>
    </interactant>
    <interactant intactId="EBI-2129159">
        <id>Q6PCD5</id>
        <label>RFWD3</label>
    </interactant>
    <organismsDiffer>false</organismsDiffer>
    <experiments>5</experiments>
</comment>
<comment type="subcellular location">
    <subcellularLocation>
        <location>Nucleus</location>
        <location>Nucleoplasm</location>
    </subcellularLocation>
    <subcellularLocation>
        <location evidence="55">Cytoplasm</location>
    </subcellularLocation>
    <subcellularLocation>
        <location>Nucleus</location>
        <location>Nucleolus</location>
    </subcellularLocation>
    <subcellularLocation>
        <location evidence="55">Nucleus</location>
    </subcellularLocation>
    <text>Expressed predominantly in the nucleoplasm. Interaction with ARF(P14) results in the localization of both proteins to the nucleolus. The nucleolar localization signals in both ARF(P14) and MDM2 may be necessary to allow efficient nucleolar localization of both proteins. Colocalizes with RASSF1 isoform A in the nucleus.</text>
</comment>
<comment type="alternative products">
    <event type="alternative splicing"/>
    <isoform>
        <id>Q00987-1</id>
        <name>Mdm2</name>
        <sequence type="displayed"/>
    </isoform>
    <isoform>
        <id>Q00987-2</id>
        <name>Mdm2-A</name>
        <sequence type="described" ref="VSP_003208"/>
    </isoform>
    <isoform>
        <id>Q00987-3</id>
        <name>Mdm2-A1</name>
        <sequence type="described" ref="VSP_003208 VSP_003214"/>
    </isoform>
    <isoform>
        <id>Q00987-4</id>
        <name>Mdm2-B</name>
        <sequence type="described" ref="VSP_003209"/>
    </isoform>
    <isoform>
        <id>Q00987-5</id>
        <name>Mdm2-C</name>
        <sequence type="described" ref="VSP_003211"/>
    </isoform>
    <isoform>
        <id>Q00987-6</id>
        <name>Mdm2-D</name>
        <sequence type="described" ref="VSP_003210"/>
    </isoform>
    <isoform>
        <id>Q00987-7</id>
        <name>Mdm2-E</name>
        <sequence type="described" ref="VSP_003212 VSP_003213"/>
    </isoform>
    <isoform>
        <id>Q00987-8</id>
        <name>Mdm2-alpha</name>
        <sequence type="described" ref="VSP_003207"/>
    </isoform>
    <isoform>
        <id>Q00987-9</id>
        <name>Mdm2-F</name>
        <sequence type="described" ref="VSP_022578"/>
    </isoform>
    <isoform>
        <id>Q00987-10</id>
        <name>Mdm2-G</name>
        <sequence type="described" ref="VSP_022579"/>
    </isoform>
    <isoform>
        <id>Q00987-11</id>
        <name>11</name>
        <sequence type="described" ref="VSP_037997"/>
    </isoform>
</comment>
<comment type="tissue specificity">
    <text>Ubiquitous. Isoform Mdm2-A, isoform Mdm2-B, isoform Mdm2-C, isoform Mdm2-D, isoform Mdm2-E, isoform Mdm2-F and isoform Mdm2-G are observed in a range of cancers but absent in normal tissues.</text>
</comment>
<comment type="induction">
    <text>By DNA damage.</text>
</comment>
<comment type="domain">
    <text>Region I is sufficient for binding p53 and inhibiting its G1 arrest and apoptosis functions. It also binds p73 and E2F1. Region II contains most of a central acidic region required for interaction with ribosomal protein L5 and a putative C4-type zinc finger. The RING finger domain which coordinates two molecules of zinc interacts specifically with RNA whether or not zinc is present and mediates the heterooligomerization with MDM4. It is also essential for its ubiquitin ligase E3 activity toward p53 and itself.</text>
</comment>
<comment type="PTM">
    <text evidence="9 13 34 39 40 51">Phosphorylation on Ser-166 by SGK1 activates ubiquitination of p53/TP53 (PubMed:19756449). Phosphorylated at multiple sites near the RING domain by ATM upon DNA damage; this promotes its ubiquitination and degradation, preventing p53/TP53 degradation (PubMed:10611322, PubMed:12167711, PubMed:18382127, PubMed:19816404, PubMed:26124108).</text>
</comment>
<comment type="PTM">
    <text evidence="16 31 34 47 51 55">Autoubiquitination leads to proteasomal degradation; resulting in p53/TP53 activation it may be regulated by SFN (PubMed:18382127, PubMed:30879903). Also ubiquitinated by TRIM13 (PubMed:21333377). ATM-phosphorylated MDM2 is ubiquitinated by the SCF(FBXO31) complex in response to genotoxic stress, promoting its degradation and p53/TP53-mediated DNA damage response (PubMed:26124108). Deubiquitinated by USP2 leads to its accumulation and increases deubiquitination and degradation of p53/TP53 (PubMed:17290220). Deubiquitinated by USP7 leading to its stabilization (PubMed:15053880).</text>
</comment>
<comment type="polymorphism">
    <text evidence="29">A polymorphism in the MDM2 promoter is associated with susceptibility to accelerated tumor formation in both hereditary and sporadic cancers [MIM:614401]. It also contributes to susceptibility to Li-Fraumeni syndrome, in patients carrying a TP53 germline mutation.</text>
</comment>
<comment type="disease">
    <text>Seems to be amplified in certain tumors (including soft tissue sarcomas, osteosarcomas and gliomas). A higher frequency of splice variants lacking p53 binding domain sequences was found in late-stage and high-grade ovarian and bladder carcinomas. Four of the splice variants show loss of p53 binding.</text>
</comment>
<comment type="disease" evidence="53">
    <disease id="DI-05687">
        <name>Lessel-Kubisch syndrome</name>
        <acronym>LSKB</acronym>
        <description>An autosomal recessive progeroid syndrome characterized by short stature, pinched facial features, prematurely gray hair, scleroderma-like skin changes, small kidneys and consecutive kidney failure, followed by severe arterial hypertension.</description>
        <dbReference type="MIM" id="618681"/>
    </disease>
    <text>The disease may be caused by variants affecting the gene represented in this entry.</text>
</comment>
<comment type="miscellaneous">
    <text>MDM2 RING finger mutations that failed to ubiquitinate p53 in vitro did not target p53 for degradation when expressed in cells.</text>
</comment>
<comment type="miscellaneous">
    <molecule>Isoform Mdm2-F</molecule>
    <text evidence="65">Does not interact with p53/TP53.</text>
</comment>
<comment type="similarity">
    <text evidence="65">Belongs to the MDM2/MDM4 family.</text>
</comment>
<comment type="caution">
    <text evidence="66">A report observed N-glycosylation at Asn-349 (PubMed:19139490). However, as the protein is not extracellular, additional evidence is required to confirm this result.</text>
</comment>
<comment type="online information" name="Atlas of Genetics and Cytogenetics in Oncology and Haematology">
    <link uri="https://atlasgeneticsoncology.org/gene/115/MDM2"/>
</comment>
<comment type="online information" name="Wikipedia">
    <link uri="https://en.wikipedia.org/wiki/Mdm2"/>
    <text>Mdm2 entry</text>
</comment>
<name>MDM2_HUMAN</name>
<dbReference type="EC" id="2.3.2.27" evidence="14"/>
<dbReference type="EMBL" id="M92424">
    <property type="protein sequence ID" value="AAA60568.1"/>
    <property type="molecule type" value="mRNA"/>
</dbReference>
<dbReference type="EMBL" id="Z12020">
    <property type="protein sequence ID" value="CAA78055.1"/>
    <property type="molecule type" value="mRNA"/>
</dbReference>
<dbReference type="EMBL" id="U33199">
    <property type="protein sequence ID" value="AAA75514.1"/>
    <property type="molecule type" value="mRNA"/>
</dbReference>
<dbReference type="EMBL" id="U33200">
    <property type="protein sequence ID" value="AAA75515.1"/>
    <property type="molecule type" value="mRNA"/>
</dbReference>
<dbReference type="EMBL" id="U33201">
    <property type="protein sequence ID" value="AAA75516.1"/>
    <property type="molecule type" value="mRNA"/>
</dbReference>
<dbReference type="EMBL" id="U33202">
    <property type="protein sequence ID" value="AAA75517.1"/>
    <property type="molecule type" value="mRNA"/>
</dbReference>
<dbReference type="EMBL" id="U33203">
    <property type="protein sequence ID" value="AAA75518.1"/>
    <property type="molecule type" value="mRNA"/>
</dbReference>
<dbReference type="EMBL" id="AF092844">
    <property type="protein sequence ID" value="AAL40179.1"/>
    <property type="molecule type" value="mRNA"/>
</dbReference>
<dbReference type="EMBL" id="AF092845">
    <property type="protein sequence ID" value="AAL40180.1"/>
    <property type="molecule type" value="mRNA"/>
</dbReference>
<dbReference type="EMBL" id="AK290341">
    <property type="protein sequence ID" value="BAF83030.1"/>
    <property type="molecule type" value="mRNA"/>
</dbReference>
<dbReference type="EMBL" id="BT007258">
    <property type="protein sequence ID" value="AAP35922.1"/>
    <property type="molecule type" value="mRNA"/>
</dbReference>
<dbReference type="EMBL" id="AF527840">
    <property type="protein sequence ID" value="AAM78554.1"/>
    <property type="molecule type" value="Genomic_DNA"/>
</dbReference>
<dbReference type="EMBL" id="AC025423">
    <property type="status" value="NOT_ANNOTATED_CDS"/>
    <property type="molecule type" value="Genomic_DNA"/>
</dbReference>
<dbReference type="EMBL" id="BC009893">
    <property type="status" value="NOT_ANNOTATED_CDS"/>
    <property type="molecule type" value="mRNA"/>
</dbReference>
<dbReference type="EMBL" id="U28935">
    <property type="protein sequence ID" value="AAA82237.1"/>
    <property type="molecule type" value="Genomic_DNA"/>
</dbReference>
<dbReference type="EMBL" id="U39736">
    <property type="protein sequence ID" value="AAA82061.1"/>
    <property type="molecule type" value="Genomic_DNA"/>
</dbReference>
<dbReference type="EMBL" id="AF201370">
    <property type="protein sequence ID" value="AAF42995.1"/>
    <property type="molecule type" value="mRNA"/>
</dbReference>
<dbReference type="EMBL" id="AJ251943">
    <property type="protein sequence ID" value="CAB64448.1"/>
    <property type="molecule type" value="Genomic_DNA"/>
</dbReference>
<dbReference type="CCDS" id="CCDS61189.1">
    <molecule id="Q00987-5"/>
</dbReference>
<dbReference type="CCDS" id="CCDS8986.2">
    <molecule id="Q00987-11"/>
</dbReference>
<dbReference type="CCDS" id="CCDS91724.1">
    <molecule id="Q00987-1"/>
</dbReference>
<dbReference type="PIR" id="S24354">
    <property type="entry name" value="S24354"/>
</dbReference>
<dbReference type="RefSeq" id="NP_001138811.1">
    <property type="nucleotide sequence ID" value="NM_001145339.2"/>
</dbReference>
<dbReference type="RefSeq" id="NP_001265391.1">
    <molecule id="Q00987-5"/>
    <property type="nucleotide sequence ID" value="NM_001278462.2"/>
</dbReference>
<dbReference type="RefSeq" id="NP_001354919.1">
    <molecule id="Q00987-1"/>
    <property type="nucleotide sequence ID" value="NM_001367990.1"/>
</dbReference>
<dbReference type="RefSeq" id="NP_002383.2">
    <molecule id="Q00987-11"/>
    <property type="nucleotide sequence ID" value="NM_002392.6"/>
</dbReference>
<dbReference type="RefSeq" id="XP_005268929.1">
    <property type="nucleotide sequence ID" value="XM_005268872.4"/>
</dbReference>
<dbReference type="RefSeq" id="XP_006719462.1">
    <property type="nucleotide sequence ID" value="XM_006719399.3"/>
</dbReference>
<dbReference type="RefSeq" id="XP_054228034.1">
    <molecule id="Q00987-11"/>
    <property type="nucleotide sequence ID" value="XM_054372059.1"/>
</dbReference>
<dbReference type="PDB" id="1RV1">
    <property type="method" value="X-ray"/>
    <property type="resolution" value="2.30 A"/>
    <property type="chains" value="A/B/C=25-109"/>
</dbReference>
<dbReference type="PDB" id="1T4E">
    <property type="method" value="X-ray"/>
    <property type="resolution" value="2.60 A"/>
    <property type="chains" value="A/B=17-111"/>
</dbReference>
<dbReference type="PDB" id="1T4F">
    <property type="method" value="X-ray"/>
    <property type="resolution" value="1.90 A"/>
    <property type="chains" value="M=17-125"/>
</dbReference>
<dbReference type="PDB" id="1YCR">
    <property type="method" value="X-ray"/>
    <property type="resolution" value="2.60 A"/>
    <property type="chains" value="A=17-125"/>
</dbReference>
<dbReference type="PDB" id="1Z1M">
    <property type="method" value="NMR"/>
    <property type="chains" value="A=1-118"/>
</dbReference>
<dbReference type="PDB" id="2AXI">
    <property type="method" value="X-ray"/>
    <property type="resolution" value="1.40 A"/>
    <property type="chains" value="A=17-125"/>
</dbReference>
<dbReference type="PDB" id="2C6A">
    <property type="method" value="NMR"/>
    <property type="chains" value="A=290-335"/>
</dbReference>
<dbReference type="PDB" id="2C6B">
    <property type="method" value="NMR"/>
    <property type="chains" value="A=290-335"/>
</dbReference>
<dbReference type="PDB" id="2F1Y">
    <property type="method" value="X-ray"/>
    <property type="resolution" value="1.70 A"/>
    <property type="chains" value="A=224-232"/>
</dbReference>
<dbReference type="PDB" id="2FOP">
    <property type="method" value="X-ray"/>
    <property type="resolution" value="2.10 A"/>
    <property type="chains" value="B=145-150"/>
</dbReference>
<dbReference type="PDB" id="2GV2">
    <property type="method" value="X-ray"/>
    <property type="resolution" value="1.80 A"/>
    <property type="chains" value="A=17-125"/>
</dbReference>
<dbReference type="PDB" id="2HDP">
    <property type="method" value="NMR"/>
    <property type="chains" value="A/B=429-491"/>
</dbReference>
<dbReference type="PDB" id="2LZG">
    <property type="method" value="NMR"/>
    <property type="chains" value="A=1-125"/>
</dbReference>
<dbReference type="PDB" id="2M86">
    <property type="method" value="NMR"/>
    <property type="chains" value="B=17-125"/>
</dbReference>
<dbReference type="PDB" id="2MPS">
    <property type="method" value="NMR"/>
    <property type="chains" value="A=3-109"/>
</dbReference>
<dbReference type="PDB" id="2RUH">
    <property type="method" value="NMR"/>
    <property type="chains" value="A=6-102"/>
</dbReference>
<dbReference type="PDB" id="2VJE">
    <property type="method" value="X-ray"/>
    <property type="resolution" value="2.20 A"/>
    <property type="chains" value="A/C=428-491"/>
</dbReference>
<dbReference type="PDB" id="2VJF">
    <property type="method" value="X-ray"/>
    <property type="resolution" value="2.30 A"/>
    <property type="chains" value="A/C=428-491"/>
</dbReference>
<dbReference type="PDB" id="3EQS">
    <property type="method" value="X-ray"/>
    <property type="resolution" value="1.65 A"/>
    <property type="chains" value="A=25-109"/>
</dbReference>
<dbReference type="PDB" id="3G03">
    <property type="method" value="X-ray"/>
    <property type="resolution" value="1.80 A"/>
    <property type="chains" value="A/C=18-125"/>
</dbReference>
<dbReference type="PDB" id="3IUX">
    <property type="method" value="X-ray"/>
    <property type="resolution" value="1.65 A"/>
    <property type="chains" value="A/C=25-109"/>
</dbReference>
<dbReference type="PDB" id="3IWY">
    <property type="method" value="X-ray"/>
    <property type="resolution" value="1.93 A"/>
    <property type="chains" value="A/C=25-109"/>
</dbReference>
<dbReference type="PDB" id="3JZK">
    <property type="method" value="X-ray"/>
    <property type="resolution" value="2.10 A"/>
    <property type="chains" value="A=17-111"/>
</dbReference>
<dbReference type="PDB" id="3JZR">
    <property type="method" value="X-ray"/>
    <property type="resolution" value="2.10 A"/>
    <property type="chains" value="A=17-125"/>
</dbReference>
<dbReference type="PDB" id="3JZS">
    <property type="method" value="X-ray"/>
    <property type="resolution" value="1.78 A"/>
    <property type="chains" value="A=24-109"/>
</dbReference>
<dbReference type="PDB" id="3LBK">
    <property type="method" value="X-ray"/>
    <property type="resolution" value="2.30 A"/>
    <property type="chains" value="A=18-111"/>
</dbReference>
<dbReference type="PDB" id="3LBL">
    <property type="method" value="X-ray"/>
    <property type="resolution" value="1.60 A"/>
    <property type="chains" value="A/C/E=18-111"/>
</dbReference>
<dbReference type="PDB" id="3LNJ">
    <property type="method" value="X-ray"/>
    <property type="resolution" value="2.40 A"/>
    <property type="chains" value="A/C/E=25-109"/>
</dbReference>
<dbReference type="PDB" id="3LNZ">
    <property type="method" value="X-ray"/>
    <property type="resolution" value="1.95 A"/>
    <property type="chains" value="A/C/E/G/I/K/M/O=25-109"/>
</dbReference>
<dbReference type="PDB" id="3MQS">
    <property type="method" value="X-ray"/>
    <property type="resolution" value="2.40 A"/>
    <property type="chains" value="D=394-403"/>
</dbReference>
<dbReference type="PDB" id="3TJ2">
    <property type="method" value="X-ray"/>
    <property type="resolution" value="2.10 A"/>
    <property type="chains" value="A/C=18-111"/>
</dbReference>
<dbReference type="PDB" id="3TPX">
    <property type="method" value="X-ray"/>
    <property type="resolution" value="1.80 A"/>
    <property type="chains" value="A/C/E=25-109"/>
</dbReference>
<dbReference type="PDB" id="3TU1">
    <property type="method" value="X-ray"/>
    <property type="resolution" value="1.60 A"/>
    <property type="chains" value="A=18-125"/>
</dbReference>
<dbReference type="PDB" id="3V3B">
    <property type="method" value="X-ray"/>
    <property type="resolution" value="2.00 A"/>
    <property type="chains" value="A/B=24-110"/>
</dbReference>
<dbReference type="PDB" id="3VBG">
    <property type="method" value="X-ray"/>
    <property type="resolution" value="2.80 A"/>
    <property type="chains" value="A/B/C/D=25-109"/>
</dbReference>
<dbReference type="PDB" id="3VZV">
    <property type="method" value="X-ray"/>
    <property type="resolution" value="2.80 A"/>
    <property type="chains" value="A/B=25-109"/>
</dbReference>
<dbReference type="PDB" id="3W69">
    <property type="method" value="X-ray"/>
    <property type="resolution" value="1.90 A"/>
    <property type="chains" value="A/B=25-109"/>
</dbReference>
<dbReference type="PDB" id="4DIJ">
    <property type="method" value="X-ray"/>
    <property type="resolution" value="1.90 A"/>
    <property type="chains" value="A/B=17-111"/>
</dbReference>
<dbReference type="PDB" id="4ERE">
    <property type="method" value="X-ray"/>
    <property type="resolution" value="1.80 A"/>
    <property type="chains" value="A/B=17-111"/>
</dbReference>
<dbReference type="PDB" id="4ERF">
    <property type="method" value="X-ray"/>
    <property type="resolution" value="2.00 A"/>
    <property type="chains" value="A/C/E=17-111"/>
</dbReference>
<dbReference type="PDB" id="4HBM">
    <property type="method" value="X-ray"/>
    <property type="resolution" value="1.90 A"/>
    <property type="chains" value="A/B/C/D/E/F/G/H=6-125"/>
</dbReference>
<dbReference type="PDB" id="4HFZ">
    <property type="method" value="X-ray"/>
    <property type="resolution" value="2.69 A"/>
    <property type="chains" value="A/C=17-125"/>
</dbReference>
<dbReference type="PDB" id="4HG7">
    <property type="method" value="X-ray"/>
    <property type="resolution" value="1.60 A"/>
    <property type="chains" value="A=17-108"/>
</dbReference>
<dbReference type="PDB" id="4JV7">
    <property type="method" value="X-ray"/>
    <property type="resolution" value="2.20 A"/>
    <property type="chains" value="A=18-111"/>
</dbReference>
<dbReference type="PDB" id="4JV9">
    <property type="method" value="X-ray"/>
    <property type="resolution" value="2.50 A"/>
    <property type="chains" value="A=18-111"/>
</dbReference>
<dbReference type="PDB" id="4JVE">
    <property type="method" value="X-ray"/>
    <property type="resolution" value="2.30 A"/>
    <property type="chains" value="A=18-111"/>
</dbReference>
<dbReference type="PDB" id="4JVR">
    <property type="method" value="X-ray"/>
    <property type="resolution" value="1.70 A"/>
    <property type="chains" value="A/C/E=18-111"/>
</dbReference>
<dbReference type="PDB" id="4JWR">
    <property type="method" value="X-ray"/>
    <property type="resolution" value="2.35 A"/>
    <property type="chains" value="A/B/C=17-111"/>
</dbReference>
<dbReference type="PDB" id="4MDN">
    <property type="method" value="X-ray"/>
    <property type="resolution" value="1.90 A"/>
    <property type="chains" value="A=18-110"/>
</dbReference>
<dbReference type="PDB" id="4MDQ">
    <property type="method" value="X-ray"/>
    <property type="resolution" value="2.12 A"/>
    <property type="chains" value="A=25-110"/>
</dbReference>
<dbReference type="PDB" id="4OAS">
    <property type="method" value="X-ray"/>
    <property type="resolution" value="1.70 A"/>
    <property type="chains" value="A/C/E=17-111"/>
</dbReference>
<dbReference type="PDB" id="4OBA">
    <property type="method" value="X-ray"/>
    <property type="resolution" value="1.60 A"/>
    <property type="chains" value="A/B/C=17-111"/>
</dbReference>
<dbReference type="PDB" id="4OCC">
    <property type="method" value="X-ray"/>
    <property type="resolution" value="1.80 A"/>
    <property type="chains" value="A/C/E=17-111"/>
</dbReference>
<dbReference type="PDB" id="4ODE">
    <property type="method" value="X-ray"/>
    <property type="resolution" value="1.80 A"/>
    <property type="chains" value="A=6-110"/>
</dbReference>
<dbReference type="PDB" id="4ODF">
    <property type="method" value="X-ray"/>
    <property type="resolution" value="2.20 A"/>
    <property type="chains" value="A=6-110"/>
</dbReference>
<dbReference type="PDB" id="4OGN">
    <property type="method" value="X-ray"/>
    <property type="resolution" value="1.38 A"/>
    <property type="chains" value="A=6-110"/>
</dbReference>
<dbReference type="PDB" id="4OGT">
    <property type="method" value="X-ray"/>
    <property type="resolution" value="1.54 A"/>
    <property type="chains" value="A=6-110"/>
</dbReference>
<dbReference type="PDB" id="4OGV">
    <property type="method" value="X-ray"/>
    <property type="resolution" value="2.20 A"/>
    <property type="chains" value="A/B/C=17-111"/>
</dbReference>
<dbReference type="PDB" id="4OQ3">
    <property type="method" value="X-ray"/>
    <property type="resolution" value="2.30 A"/>
    <property type="chains" value="A/B/C/D=17-111"/>
</dbReference>
<dbReference type="PDB" id="4QO4">
    <property type="method" value="X-ray"/>
    <property type="resolution" value="1.70 A"/>
    <property type="chains" value="A=17-111"/>
</dbReference>
<dbReference type="PDB" id="4QOC">
    <property type="method" value="X-ray"/>
    <property type="resolution" value="1.70 A"/>
    <property type="chains" value="A/C/E/G/I/K=17-111"/>
</dbReference>
<dbReference type="PDB" id="4UD7">
    <property type="method" value="X-ray"/>
    <property type="resolution" value="1.60 A"/>
    <property type="chains" value="A/B/C/D=17-125"/>
</dbReference>
<dbReference type="PDB" id="4UE1">
    <property type="method" value="X-ray"/>
    <property type="resolution" value="1.45 A"/>
    <property type="chains" value="A/B/C/D=17-125"/>
</dbReference>
<dbReference type="PDB" id="4UMN">
    <property type="method" value="X-ray"/>
    <property type="resolution" value="1.99 A"/>
    <property type="chains" value="A/B=6-125"/>
</dbReference>
<dbReference type="PDB" id="4WT2">
    <property type="method" value="X-ray"/>
    <property type="resolution" value="1.42 A"/>
    <property type="chains" value="A=6-110"/>
</dbReference>
<dbReference type="PDB" id="4XXB">
    <property type="method" value="X-ray"/>
    <property type="resolution" value="2.40 A"/>
    <property type="chains" value="B=290-437"/>
</dbReference>
<dbReference type="PDB" id="4ZFI">
    <property type="method" value="X-ray"/>
    <property type="resolution" value="2.00 A"/>
    <property type="chains" value="A/B/C/D=18-113"/>
</dbReference>
<dbReference type="PDB" id="4ZGK">
    <property type="method" value="X-ray"/>
    <property type="resolution" value="2.00 A"/>
    <property type="chains" value="A/B=18-114"/>
</dbReference>
<dbReference type="PDB" id="4ZYC">
    <property type="method" value="X-ray"/>
    <property type="resolution" value="1.95 A"/>
    <property type="chains" value="A/B/C=17-111"/>
</dbReference>
<dbReference type="PDB" id="4ZYF">
    <property type="method" value="X-ray"/>
    <property type="resolution" value="1.80 A"/>
    <property type="chains" value="A=17-111"/>
</dbReference>
<dbReference type="PDB" id="4ZYI">
    <property type="method" value="X-ray"/>
    <property type="resolution" value="1.67 A"/>
    <property type="chains" value="A=17-111"/>
</dbReference>
<dbReference type="PDB" id="5AFG">
    <property type="method" value="X-ray"/>
    <property type="resolution" value="1.90 A"/>
    <property type="chains" value="A=17-108"/>
</dbReference>
<dbReference type="PDB" id="5C5A">
    <property type="method" value="X-ray"/>
    <property type="resolution" value="1.15 A"/>
    <property type="chains" value="A/B=20-111"/>
</dbReference>
<dbReference type="PDB" id="5HMH">
    <property type="method" value="X-ray"/>
    <property type="resolution" value="1.79 A"/>
    <property type="chains" value="A/B=21-116"/>
</dbReference>
<dbReference type="PDB" id="5HMI">
    <property type="method" value="X-ray"/>
    <property type="resolution" value="1.74 A"/>
    <property type="chains" value="A/B=18-116"/>
</dbReference>
<dbReference type="PDB" id="5HMK">
    <property type="method" value="X-ray"/>
    <property type="resolution" value="2.17 A"/>
    <property type="chains" value="A/B=17-125"/>
</dbReference>
<dbReference type="PDB" id="5J7F">
    <property type="method" value="X-ray"/>
    <property type="resolution" value="2.00 A"/>
    <property type="chains" value="A/B/C/D=1-125"/>
</dbReference>
<dbReference type="PDB" id="5J7G">
    <property type="method" value="X-ray"/>
    <property type="resolution" value="1.85 A"/>
    <property type="chains" value="A/B/C/D=18-125"/>
</dbReference>
<dbReference type="PDB" id="5LAV">
    <property type="method" value="X-ray"/>
    <property type="resolution" value="1.73 A"/>
    <property type="chains" value="A=19-111"/>
</dbReference>
<dbReference type="PDB" id="5LAW">
    <property type="method" value="X-ray"/>
    <property type="resolution" value="1.64 A"/>
    <property type="chains" value="A=18-111"/>
</dbReference>
<dbReference type="PDB" id="5LAY">
    <property type="method" value="X-ray"/>
    <property type="resolution" value="2.71 A"/>
    <property type="chains" value="A/B/C/D/E/F=17-111"/>
</dbReference>
<dbReference type="PDB" id="5LAZ">
    <property type="method" value="X-ray"/>
    <property type="resolution" value="1.66 A"/>
    <property type="chains" value="A=18-111"/>
</dbReference>
<dbReference type="PDB" id="5LN2">
    <property type="method" value="X-ray"/>
    <property type="resolution" value="1.58 A"/>
    <property type="chains" value="A=17-111"/>
</dbReference>
<dbReference type="PDB" id="5MNJ">
    <property type="method" value="X-ray"/>
    <property type="resolution" value="2.16 A"/>
    <property type="chains" value="C/G=428-491"/>
</dbReference>
<dbReference type="PDB" id="5OAI">
    <property type="method" value="X-ray"/>
    <property type="resolution" value="2.00 A"/>
    <property type="chains" value="A=18-113"/>
</dbReference>
<dbReference type="PDB" id="5OC8">
    <property type="method" value="X-ray"/>
    <property type="resolution" value="1.56 A"/>
    <property type="chains" value="A=17-111"/>
</dbReference>
<dbReference type="PDB" id="5SWK">
    <property type="method" value="X-ray"/>
    <property type="resolution" value="1.92 A"/>
    <property type="chains" value="A/B=1-150"/>
</dbReference>
<dbReference type="PDB" id="5TRF">
    <property type="method" value="X-ray"/>
    <property type="resolution" value="2.10 A"/>
    <property type="chains" value="A/B/C/D/E=10-118"/>
</dbReference>
<dbReference type="PDB" id="5UMM">
    <property type="method" value="X-ray"/>
    <property type="resolution" value="1.65 A"/>
    <property type="chains" value="A/C=25-109"/>
</dbReference>
<dbReference type="PDB" id="5VK0">
    <property type="method" value="X-ray"/>
    <property type="resolution" value="1.80 A"/>
    <property type="chains" value="A/C/E/G/I/K/M/O/Q/S/U/W=25-109"/>
</dbReference>
<dbReference type="PDB" id="5WTS">
    <property type="method" value="X-ray"/>
    <property type="resolution" value="3.00 A"/>
    <property type="chains" value="B=6-125"/>
</dbReference>
<dbReference type="PDB" id="5XXK">
    <property type="method" value="X-ray"/>
    <property type="resolution" value="1.66 A"/>
    <property type="chains" value="A/B=6-125"/>
</dbReference>
<dbReference type="PDB" id="5Z02">
    <property type="method" value="X-ray"/>
    <property type="resolution" value="1.35 A"/>
    <property type="chains" value="A=24-112"/>
</dbReference>
<dbReference type="PDB" id="5ZXF">
    <property type="method" value="X-ray"/>
    <property type="resolution" value="1.25 A"/>
    <property type="chains" value="A=24-110"/>
</dbReference>
<dbReference type="PDB" id="6AAW">
    <property type="method" value="X-ray"/>
    <property type="resolution" value="2.00 A"/>
    <property type="chains" value="A=6-125"/>
</dbReference>
<dbReference type="PDB" id="6GGN">
    <property type="method" value="X-ray"/>
    <property type="resolution" value="2.00 A"/>
    <property type="chains" value="A=17-111"/>
</dbReference>
<dbReference type="PDB" id="6H22">
    <property type="method" value="X-ray"/>
    <property type="resolution" value="2.01 A"/>
    <property type="chains" value="A/B=17-108"/>
</dbReference>
<dbReference type="PDB" id="6HFA">
    <property type="method" value="X-ray"/>
    <property type="resolution" value="1.79 A"/>
    <property type="chains" value="A/B=17-111"/>
</dbReference>
<dbReference type="PDB" id="6I29">
    <property type="method" value="X-ray"/>
    <property type="resolution" value="2.10 A"/>
    <property type="chains" value="A=17-111"/>
</dbReference>
<dbReference type="PDB" id="6I3S">
    <property type="method" value="X-ray"/>
    <property type="resolution" value="1.77 A"/>
    <property type="chains" value="A=18-111"/>
</dbReference>
<dbReference type="PDB" id="6IM9">
    <property type="method" value="X-ray"/>
    <property type="resolution" value="3.30 A"/>
    <property type="chains" value="B=6-125"/>
</dbReference>
<dbReference type="PDB" id="6KZU">
    <property type="method" value="X-ray"/>
    <property type="resolution" value="1.79 A"/>
    <property type="chains" value="A=6-125"/>
</dbReference>
<dbReference type="PDB" id="6Q96">
    <property type="method" value="X-ray"/>
    <property type="resolution" value="1.80 A"/>
    <property type="chains" value="A/B=17-111"/>
</dbReference>
<dbReference type="PDB" id="6Q9H">
    <property type="method" value="X-ray"/>
    <property type="resolution" value="2.00 A"/>
    <property type="chains" value="A=17-111"/>
</dbReference>
<dbReference type="PDB" id="6Q9L">
    <property type="method" value="X-ray"/>
    <property type="resolution" value="1.13 A"/>
    <property type="chains" value="A/B=17-111"/>
</dbReference>
<dbReference type="PDB" id="6Q9O">
    <property type="method" value="X-ray"/>
    <property type="resolution" value="1.21 A"/>
    <property type="chains" value="A/B=17-111"/>
</dbReference>
<dbReference type="PDB" id="6SQO">
    <property type="method" value="X-ray"/>
    <property type="resolution" value="1.41 A"/>
    <property type="chains" value="A/D=430-491"/>
</dbReference>
<dbReference type="PDB" id="6T2D">
    <property type="method" value="X-ray"/>
    <property type="resolution" value="1.80 A"/>
    <property type="chains" value="A=24-109"/>
</dbReference>
<dbReference type="PDB" id="6T2E">
    <property type="method" value="X-ray"/>
    <property type="resolution" value="2.40 A"/>
    <property type="chains" value="A=24-109"/>
</dbReference>
<dbReference type="PDB" id="6T2F">
    <property type="method" value="X-ray"/>
    <property type="resolution" value="2.09 A"/>
    <property type="chains" value="A=24-109"/>
</dbReference>
<dbReference type="PDB" id="6Y4Q">
    <property type="method" value="X-ray"/>
    <property type="resolution" value="1.63 A"/>
    <property type="chains" value="A/B=17-108"/>
</dbReference>
<dbReference type="PDB" id="6YR6">
    <property type="method" value="X-ray"/>
    <property type="resolution" value="1.75 A"/>
    <property type="chains" value="B/D/F/H=180-192"/>
</dbReference>
<dbReference type="PDB" id="7AD0">
    <property type="method" value="X-ray"/>
    <property type="resolution" value="2.07 A"/>
    <property type="chains" value="A/B/C/D/E/F=24-113"/>
</dbReference>
<dbReference type="PDB" id="7AI0">
    <property type="method" value="X-ray"/>
    <property type="resolution" value="1.56 A"/>
    <property type="chains" value="AAA/DDD=419-491"/>
</dbReference>
<dbReference type="PDB" id="7AI1">
    <property type="method" value="X-ray"/>
    <property type="resolution" value="2.07 A"/>
    <property type="chains" value="AAA/DDD=419-491"/>
</dbReference>
<dbReference type="PDB" id="7AYE">
    <property type="method" value="X-ray"/>
    <property type="resolution" value="2.95 A"/>
    <property type="chains" value="A=17-125"/>
</dbReference>
<dbReference type="PDB" id="7BIR">
    <property type="method" value="X-ray"/>
    <property type="resolution" value="2.02 A"/>
    <property type="chains" value="A=17-109"/>
</dbReference>
<dbReference type="PDB" id="7BIT">
    <property type="method" value="X-ray"/>
    <property type="resolution" value="2.13 A"/>
    <property type="chains" value="A=17-125"/>
</dbReference>
<dbReference type="PDB" id="7BIV">
    <property type="method" value="X-ray"/>
    <property type="resolution" value="1.64 A"/>
    <property type="chains" value="A=17-109"/>
</dbReference>
<dbReference type="PDB" id="7BJ0">
    <property type="method" value="X-ray"/>
    <property type="resolution" value="2.00 A"/>
    <property type="chains" value="A/B=17-125"/>
</dbReference>
<dbReference type="PDB" id="7BJ6">
    <property type="method" value="X-ray"/>
    <property type="resolution" value="1.59 A"/>
    <property type="chains" value="A=17-109"/>
</dbReference>
<dbReference type="PDB" id="7BMG">
    <property type="method" value="X-ray"/>
    <property type="resolution" value="1.83 A"/>
    <property type="chains" value="A=17-109"/>
</dbReference>
<dbReference type="PDB" id="7KJM">
    <property type="method" value="X-ray"/>
    <property type="resolution" value="1.40 A"/>
    <property type="chains" value="A/C=25-109"/>
</dbReference>
<dbReference type="PDB" id="7NA1">
    <property type="method" value="X-ray"/>
    <property type="resolution" value="2.30 A"/>
    <property type="chains" value="A/B=17-125"/>
</dbReference>
<dbReference type="PDB" id="7NA2">
    <property type="method" value="X-ray"/>
    <property type="resolution" value="1.86 A"/>
    <property type="chains" value="A/B=17-125"/>
</dbReference>
<dbReference type="PDB" id="7NA3">
    <property type="method" value="X-ray"/>
    <property type="resolution" value="2.21 A"/>
    <property type="chains" value="A=17-125"/>
</dbReference>
<dbReference type="PDB" id="7NA4">
    <property type="method" value="X-ray"/>
    <property type="resolution" value="1.84 A"/>
    <property type="chains" value="A=17-125"/>
</dbReference>
<dbReference type="PDB" id="7NUS">
    <property type="method" value="X-ray"/>
    <property type="resolution" value="1.45 A"/>
    <property type="chains" value="A/B/C=17-111"/>
</dbReference>
<dbReference type="PDB" id="7QDQ">
    <property type="method" value="X-ray"/>
    <property type="resolution" value="1.26 A"/>
    <property type="chains" value="A=20-111"/>
</dbReference>
<dbReference type="PDB" id="8AEU">
    <property type="method" value="X-ray"/>
    <property type="resolution" value="2.00 A"/>
    <property type="chains" value="A=18-113"/>
</dbReference>
<dbReference type="PDB" id="8BGU">
    <property type="method" value="EM"/>
    <property type="resolution" value="4.10 A"/>
    <property type="chains" value="F=1-491"/>
</dbReference>
<dbReference type="PDB" id="8EI9">
    <property type="method" value="X-ray"/>
    <property type="resolution" value="3.90 A"/>
    <property type="chains" value="B=17-111"/>
</dbReference>
<dbReference type="PDB" id="8EIA">
    <property type="method" value="X-ray"/>
    <property type="resolution" value="3.60 A"/>
    <property type="chains" value="B=17-111"/>
</dbReference>
<dbReference type="PDB" id="8EIB">
    <property type="method" value="X-ray"/>
    <property type="resolution" value="3.76 A"/>
    <property type="chains" value="B=17-111"/>
</dbReference>
<dbReference type="PDB" id="8EIC">
    <property type="method" value="X-ray"/>
    <property type="resolution" value="2.62 A"/>
    <property type="chains" value="B=17-111"/>
</dbReference>
<dbReference type="PDB" id="8F0Z">
    <property type="method" value="X-ray"/>
    <property type="resolution" value="1.61 A"/>
    <property type="chains" value="A=17-111"/>
</dbReference>
<dbReference type="PDB" id="8F10">
    <property type="method" value="X-ray"/>
    <property type="resolution" value="1.28 A"/>
    <property type="chains" value="A=17-111"/>
</dbReference>
<dbReference type="PDB" id="8F12">
    <property type="method" value="X-ray"/>
    <property type="resolution" value="1.86 A"/>
    <property type="chains" value="A=17-111"/>
</dbReference>
<dbReference type="PDB" id="8F13">
    <property type="method" value="X-ray"/>
    <property type="resolution" value="1.40 A"/>
    <property type="chains" value="A=17-111"/>
</dbReference>
<dbReference type="PDB" id="8GCG">
    <property type="method" value="X-ray"/>
    <property type="resolution" value="1.47 A"/>
    <property type="chains" value="A=17-125"/>
</dbReference>
<dbReference type="PDB" id="8J81">
    <property type="method" value="X-ray"/>
    <property type="resolution" value="1.35 A"/>
    <property type="chains" value="A=17-111"/>
</dbReference>
<dbReference type="PDB" id="8P0D">
    <property type="method" value="X-ray"/>
    <property type="resolution" value="1.31 A"/>
    <property type="chains" value="B=161-191"/>
</dbReference>
<dbReference type="PDB" id="8PWC">
    <property type="method" value="X-ray"/>
    <property type="resolution" value="1.46 A"/>
    <property type="chains" value="A/B/C=17-125"/>
</dbReference>
<dbReference type="PDB" id="9GFC">
    <property type="method" value="X-ray"/>
    <property type="resolution" value="2.50 A"/>
    <property type="chains" value="A/B/C/D=25-110"/>
</dbReference>
<dbReference type="PDBsum" id="1RV1"/>
<dbReference type="PDBsum" id="1T4E"/>
<dbReference type="PDBsum" id="1T4F"/>
<dbReference type="PDBsum" id="1YCR"/>
<dbReference type="PDBsum" id="1Z1M"/>
<dbReference type="PDBsum" id="2AXI"/>
<dbReference type="PDBsum" id="2C6A"/>
<dbReference type="PDBsum" id="2C6B"/>
<dbReference type="PDBsum" id="2F1Y"/>
<dbReference type="PDBsum" id="2FOP"/>
<dbReference type="PDBsum" id="2GV2"/>
<dbReference type="PDBsum" id="2HDP"/>
<dbReference type="PDBsum" id="2LZG"/>
<dbReference type="PDBsum" id="2M86"/>
<dbReference type="PDBsum" id="2MPS"/>
<dbReference type="PDBsum" id="2RUH"/>
<dbReference type="PDBsum" id="2VJE"/>
<dbReference type="PDBsum" id="2VJF"/>
<dbReference type="PDBsum" id="3EQS"/>
<dbReference type="PDBsum" id="3G03"/>
<dbReference type="PDBsum" id="3IUX"/>
<dbReference type="PDBsum" id="3IWY"/>
<dbReference type="PDBsum" id="3JZK"/>
<dbReference type="PDBsum" id="3JZR"/>
<dbReference type="PDBsum" id="3JZS"/>
<dbReference type="PDBsum" id="3LBK"/>
<dbReference type="PDBsum" id="3LBL"/>
<dbReference type="PDBsum" id="3LNJ"/>
<dbReference type="PDBsum" id="3LNZ"/>
<dbReference type="PDBsum" id="3MQS"/>
<dbReference type="PDBsum" id="3TJ2"/>
<dbReference type="PDBsum" id="3TPX"/>
<dbReference type="PDBsum" id="3TU1"/>
<dbReference type="PDBsum" id="3V3B"/>
<dbReference type="PDBsum" id="3VBG"/>
<dbReference type="PDBsum" id="3VZV"/>
<dbReference type="PDBsum" id="3W69"/>
<dbReference type="PDBsum" id="4DIJ"/>
<dbReference type="PDBsum" id="4ERE"/>
<dbReference type="PDBsum" id="4ERF"/>
<dbReference type="PDBsum" id="4HBM"/>
<dbReference type="PDBsum" id="4HFZ"/>
<dbReference type="PDBsum" id="4HG7"/>
<dbReference type="PDBsum" id="4JV7"/>
<dbReference type="PDBsum" id="4JV9"/>
<dbReference type="PDBsum" id="4JVE"/>
<dbReference type="PDBsum" id="4JVR"/>
<dbReference type="PDBsum" id="4JWR"/>
<dbReference type="PDBsum" id="4MDN"/>
<dbReference type="PDBsum" id="4MDQ"/>
<dbReference type="PDBsum" id="4OAS"/>
<dbReference type="PDBsum" id="4OBA"/>
<dbReference type="PDBsum" id="4OCC"/>
<dbReference type="PDBsum" id="4ODE"/>
<dbReference type="PDBsum" id="4ODF"/>
<dbReference type="PDBsum" id="4OGN"/>
<dbReference type="PDBsum" id="4OGT"/>
<dbReference type="PDBsum" id="4OGV"/>
<dbReference type="PDBsum" id="4OQ3"/>
<dbReference type="PDBsum" id="4QO4"/>
<dbReference type="PDBsum" id="4QOC"/>
<dbReference type="PDBsum" id="4UD7"/>
<dbReference type="PDBsum" id="4UE1"/>
<dbReference type="PDBsum" id="4UMN"/>
<dbReference type="PDBsum" id="4WT2"/>
<dbReference type="PDBsum" id="4XXB"/>
<dbReference type="PDBsum" id="4ZFI"/>
<dbReference type="PDBsum" id="4ZGK"/>
<dbReference type="PDBsum" id="4ZYC"/>
<dbReference type="PDBsum" id="4ZYF"/>
<dbReference type="PDBsum" id="4ZYI"/>
<dbReference type="PDBsum" id="5AFG"/>
<dbReference type="PDBsum" id="5C5A"/>
<dbReference type="PDBsum" id="5HMH"/>
<dbReference type="PDBsum" id="5HMI"/>
<dbReference type="PDBsum" id="5HMK"/>
<dbReference type="PDBsum" id="5J7F"/>
<dbReference type="PDBsum" id="5J7G"/>
<dbReference type="PDBsum" id="5LAV"/>
<dbReference type="PDBsum" id="5LAW"/>
<dbReference type="PDBsum" id="5LAY"/>
<dbReference type="PDBsum" id="5LAZ"/>
<dbReference type="PDBsum" id="5LN2"/>
<dbReference type="PDBsum" id="5MNJ"/>
<dbReference type="PDBsum" id="5OAI"/>
<dbReference type="PDBsum" id="5OC8"/>
<dbReference type="PDBsum" id="5SWK"/>
<dbReference type="PDBsum" id="5TRF"/>
<dbReference type="PDBsum" id="5UMM"/>
<dbReference type="PDBsum" id="5VK0"/>
<dbReference type="PDBsum" id="5WTS"/>
<dbReference type="PDBsum" id="5XXK"/>
<dbReference type="PDBsum" id="5Z02"/>
<dbReference type="PDBsum" id="5ZXF"/>
<dbReference type="PDBsum" id="6AAW"/>
<dbReference type="PDBsum" id="6GGN"/>
<dbReference type="PDBsum" id="6H22"/>
<dbReference type="PDBsum" id="6HFA"/>
<dbReference type="PDBsum" id="6I29"/>
<dbReference type="PDBsum" id="6I3S"/>
<dbReference type="PDBsum" id="6IM9"/>
<dbReference type="PDBsum" id="6KZU"/>
<dbReference type="PDBsum" id="6Q96"/>
<dbReference type="PDBsum" id="6Q9H"/>
<dbReference type="PDBsum" id="6Q9L"/>
<dbReference type="PDBsum" id="6Q9O"/>
<dbReference type="PDBsum" id="6SQO"/>
<dbReference type="PDBsum" id="6T2D"/>
<dbReference type="PDBsum" id="6T2E"/>
<dbReference type="PDBsum" id="6T2F"/>
<dbReference type="PDBsum" id="6Y4Q"/>
<dbReference type="PDBsum" id="6YR6"/>
<dbReference type="PDBsum" id="7AD0"/>
<dbReference type="PDBsum" id="7AI0"/>
<dbReference type="PDBsum" id="7AI1"/>
<dbReference type="PDBsum" id="7AYE"/>
<dbReference type="PDBsum" id="7BIR"/>
<dbReference type="PDBsum" id="7BIT"/>
<dbReference type="PDBsum" id="7BIV"/>
<dbReference type="PDBsum" id="7BJ0"/>
<dbReference type="PDBsum" id="7BJ6"/>
<dbReference type="PDBsum" id="7BMG"/>
<dbReference type="PDBsum" id="7KJM"/>
<dbReference type="PDBsum" id="7NA1"/>
<dbReference type="PDBsum" id="7NA2"/>
<dbReference type="PDBsum" id="7NA3"/>
<dbReference type="PDBsum" id="7NA4"/>
<dbReference type="PDBsum" id="7NUS"/>
<dbReference type="PDBsum" id="7QDQ"/>
<dbReference type="PDBsum" id="8AEU"/>
<dbReference type="PDBsum" id="8BGU"/>
<dbReference type="PDBsum" id="8EI9"/>
<dbReference type="PDBsum" id="8EIA"/>
<dbReference type="PDBsum" id="8EIB"/>
<dbReference type="PDBsum" id="8EIC"/>
<dbReference type="PDBsum" id="8F0Z"/>
<dbReference type="PDBsum" id="8F10"/>
<dbReference type="PDBsum" id="8F12"/>
<dbReference type="PDBsum" id="8F13"/>
<dbReference type="PDBsum" id="8GCG"/>
<dbReference type="PDBsum" id="8J81"/>
<dbReference type="PDBsum" id="8P0D"/>
<dbReference type="PDBsum" id="8PWC"/>
<dbReference type="PDBsum" id="9GFC"/>
<dbReference type="BMRB" id="Q00987"/>
<dbReference type="EMDB" id="EMD-16036"/>
<dbReference type="SMR" id="Q00987"/>
<dbReference type="BioGRID" id="110358">
    <property type="interactions" value="682"/>
</dbReference>
<dbReference type="ComplexPortal" id="CPX-6093">
    <property type="entry name" value="p53-MDM2-MDM4 transcriptional regulation complex"/>
</dbReference>
<dbReference type="ComplexPortal" id="CPX-759">
    <property type="entry name" value="p53-MDM2 transcriptional regulation complex"/>
</dbReference>
<dbReference type="CORUM" id="Q00987"/>
<dbReference type="DIP" id="DIP-392N"/>
<dbReference type="ELM" id="Q00987"/>
<dbReference type="FunCoup" id="Q00987">
    <property type="interactions" value="3229"/>
</dbReference>
<dbReference type="IntAct" id="Q00987">
    <property type="interactions" value="251"/>
</dbReference>
<dbReference type="MINT" id="Q00987"/>
<dbReference type="STRING" id="9606.ENSP00000258149"/>
<dbReference type="BindingDB" id="Q00987"/>
<dbReference type="ChEMBL" id="CHEMBL5023"/>
<dbReference type="DrugBank" id="DB17549">
    <property type="generic name" value="Alrizomadlin"/>
</dbReference>
<dbReference type="DrugBank" id="DB02872">
    <property type="generic name" value="Cis-[4,5-Bis-(4-Bromophenyl)-2-(2-Ethoxy-4-Methoxyphenyl)-4,5-Dihydroimidazol-1-Yl]-[4-(2-Hydroxyethyl)Piperazin-1-Yl]Methanone"/>
</dbReference>
<dbReference type="DrugBank" id="DB04144">
    <property type="generic name" value="Cis-[4,5-Bis-(4-Chlorophenyl)-2-(2-Isopropoxy-4-Methoxyphenyl)-4,5-Dihyd Roimidazol-1-Yl]-Piperazin-1-Yl-Methanone"/>
</dbReference>
<dbReference type="DrugBank" id="DB12325">
    <property type="generic name" value="Idasanutlin"/>
</dbReference>
<dbReference type="DrugBank" id="DB15299">
    <property type="generic name" value="Navtemadlin"/>
</dbReference>
<dbReference type="DrugBank" id="DB12027">
    <property type="generic name" value="Serdemetan"/>
</dbReference>
<dbReference type="DrugBank" id="DB16331">
    <property type="generic name" value="Siremadlin"/>
</dbReference>
<dbReference type="DrugBank" id="DB01593">
    <property type="generic name" value="Zinc"/>
</dbReference>
<dbReference type="DrugBank" id="DB14487">
    <property type="generic name" value="Zinc acetate"/>
</dbReference>
<dbReference type="DrugBank" id="DB14533">
    <property type="generic name" value="Zinc chloride"/>
</dbReference>
<dbReference type="DrugBank" id="DB14548">
    <property type="generic name" value="Zinc sulfate, unspecified form"/>
</dbReference>
<dbReference type="DrugCentral" id="Q00987"/>
<dbReference type="GuidetoPHARMACOLOGY" id="3136"/>
<dbReference type="MoonDB" id="Q00987">
    <property type="type" value="Predicted"/>
</dbReference>
<dbReference type="GlyConnect" id="2034">
    <property type="glycosylation" value="1 N-Linked glycan (1 site)"/>
</dbReference>
<dbReference type="GlyCosmos" id="Q00987">
    <property type="glycosylation" value="1 site, 2 glycans"/>
</dbReference>
<dbReference type="GlyGen" id="Q00987">
    <property type="glycosylation" value="2 sites, 2 N-linked glycans (1 site), 1 O-linked glycan (1 site)"/>
</dbReference>
<dbReference type="iPTMnet" id="Q00987"/>
<dbReference type="PhosphoSitePlus" id="Q00987"/>
<dbReference type="BioMuta" id="MDM2"/>
<dbReference type="DMDM" id="266516"/>
<dbReference type="CPTAC" id="CPTAC-5913"/>
<dbReference type="jPOST" id="Q00987"/>
<dbReference type="MassIVE" id="Q00987"/>
<dbReference type="PaxDb" id="9606-ENSP00000258149"/>
<dbReference type="PeptideAtlas" id="Q00987"/>
<dbReference type="ProteomicsDB" id="57889">
    <molecule id="Q00987-1"/>
</dbReference>
<dbReference type="ProteomicsDB" id="57890">
    <molecule id="Q00987-10"/>
</dbReference>
<dbReference type="ProteomicsDB" id="57891">
    <molecule id="Q00987-11"/>
</dbReference>
<dbReference type="ProteomicsDB" id="57892">
    <molecule id="Q00987-2"/>
</dbReference>
<dbReference type="ProteomicsDB" id="57893">
    <molecule id="Q00987-3"/>
</dbReference>
<dbReference type="ProteomicsDB" id="57894">
    <molecule id="Q00987-4"/>
</dbReference>
<dbReference type="ProteomicsDB" id="57895">
    <molecule id="Q00987-5"/>
</dbReference>
<dbReference type="ProteomicsDB" id="57898">
    <molecule id="Q00987-8"/>
</dbReference>
<dbReference type="ProteomicsDB" id="57899">
    <molecule id="Q00987-9"/>
</dbReference>
<dbReference type="Antibodypedia" id="3664">
    <property type="antibodies" value="1866 antibodies from 46 providers"/>
</dbReference>
<dbReference type="CPTC" id="Q00987">
    <property type="antibodies" value="1 antibody"/>
</dbReference>
<dbReference type="DNASU" id="4193"/>
<dbReference type="Ensembl" id="ENST00000258149.11">
    <molecule id="Q00987-11"/>
    <property type="protein sequence ID" value="ENSP00000258149.6"/>
    <property type="gene ID" value="ENSG00000135679.27"/>
</dbReference>
<dbReference type="Ensembl" id="ENST00000299252.8">
    <molecule id="Q00987-5"/>
    <property type="protein sequence ID" value="ENSP00000299252.4"/>
    <property type="gene ID" value="ENSG00000135679.27"/>
</dbReference>
<dbReference type="Ensembl" id="ENST00000360430.6">
    <molecule id="Q00987-2"/>
    <property type="protein sequence ID" value="ENSP00000353611.2"/>
    <property type="gene ID" value="ENSG00000135679.27"/>
</dbReference>
<dbReference type="Ensembl" id="ENST00000393413.7">
    <molecule id="Q00987-4"/>
    <property type="protein sequence ID" value="ENSP00000377065.3"/>
    <property type="gene ID" value="ENSG00000135679.27"/>
</dbReference>
<dbReference type="Ensembl" id="ENST00000539479.6">
    <molecule id="Q00987-1"/>
    <property type="protein sequence ID" value="ENSP00000444430.2"/>
    <property type="gene ID" value="ENSG00000135679.27"/>
</dbReference>
<dbReference type="GeneID" id="4193"/>
<dbReference type="KEGG" id="hsa:4193"/>
<dbReference type="MANE-Select" id="ENST00000258149.11">
    <molecule id="Q00987-11"/>
    <property type="protein sequence ID" value="ENSP00000258149.6"/>
    <property type="RefSeq nucleotide sequence ID" value="NM_002392.6"/>
    <property type="RefSeq protein sequence ID" value="NP_002383.2"/>
</dbReference>
<dbReference type="UCSC" id="uc001sui.6">
    <molecule id="Q00987-1"/>
    <property type="organism name" value="human"/>
</dbReference>
<dbReference type="AGR" id="HGNC:6973"/>
<dbReference type="CTD" id="4193"/>
<dbReference type="DisGeNET" id="4193"/>
<dbReference type="GeneCards" id="MDM2"/>
<dbReference type="HGNC" id="HGNC:6973">
    <property type="gene designation" value="MDM2"/>
</dbReference>
<dbReference type="HPA" id="ENSG00000135679">
    <property type="expression patterns" value="Low tissue specificity"/>
</dbReference>
<dbReference type="MalaCards" id="MDM2"/>
<dbReference type="MIM" id="164785">
    <property type="type" value="gene"/>
</dbReference>
<dbReference type="MIM" id="614401">
    <property type="type" value="phenotype"/>
</dbReference>
<dbReference type="MIM" id="618681">
    <property type="type" value="phenotype"/>
</dbReference>
<dbReference type="neXtProt" id="NX_Q00987"/>
<dbReference type="OpenTargets" id="ENSG00000135679"/>
<dbReference type="Orphanet" id="99970">
    <property type="disease" value="Dedifferentiated liposarcoma"/>
</dbReference>
<dbReference type="Orphanet" id="524">
    <property type="disease" value="Li-Fraumeni syndrome"/>
</dbReference>
<dbReference type="Orphanet" id="99971">
    <property type="disease" value="Well-differentiated liposarcoma"/>
</dbReference>
<dbReference type="PharmGKB" id="PA30718"/>
<dbReference type="VEuPathDB" id="HostDB:ENSG00000135679"/>
<dbReference type="eggNOG" id="ENOG502QQNV">
    <property type="taxonomic scope" value="Eukaryota"/>
</dbReference>
<dbReference type="GeneTree" id="ENSGT00530000063539"/>
<dbReference type="HOGENOM" id="CLU_043544_1_0_1"/>
<dbReference type="InParanoid" id="Q00987"/>
<dbReference type="OMA" id="DYWRCSK"/>
<dbReference type="OrthoDB" id="24526at2759"/>
<dbReference type="PAN-GO" id="Q00987">
    <property type="GO annotations" value="4 GO annotations based on evolutionary models"/>
</dbReference>
<dbReference type="PhylomeDB" id="Q00987"/>
<dbReference type="TreeFam" id="TF105306"/>
<dbReference type="BRENDA" id="2.3.2.27">
    <property type="organism ID" value="2681"/>
</dbReference>
<dbReference type="PathwayCommons" id="Q00987"/>
<dbReference type="Reactome" id="R-HSA-198323">
    <property type="pathway name" value="AKT phosphorylates targets in the cytosol"/>
</dbReference>
<dbReference type="Reactome" id="R-HSA-2559580">
    <property type="pathway name" value="Oxidative Stress Induced Senescence"/>
</dbReference>
<dbReference type="Reactome" id="R-HSA-2559585">
    <property type="pathway name" value="Oncogene Induced Senescence"/>
</dbReference>
<dbReference type="Reactome" id="R-HSA-3232118">
    <property type="pathway name" value="SUMOylation of transcription factors"/>
</dbReference>
<dbReference type="Reactome" id="R-HSA-3232142">
    <property type="pathway name" value="SUMOylation of ubiquitinylation proteins"/>
</dbReference>
<dbReference type="Reactome" id="R-HSA-399719">
    <property type="pathway name" value="Trafficking of AMPA receptors"/>
</dbReference>
<dbReference type="Reactome" id="R-HSA-5674400">
    <property type="pathway name" value="Constitutive Signaling by AKT1 E17K in Cancer"/>
</dbReference>
<dbReference type="Reactome" id="R-HSA-5689880">
    <property type="pathway name" value="Ub-specific processing proteases"/>
</dbReference>
<dbReference type="Reactome" id="R-HSA-6804756">
    <property type="pathway name" value="Regulation of TP53 Activity through Phosphorylation"/>
</dbReference>
<dbReference type="Reactome" id="R-HSA-6804757">
    <property type="pathway name" value="Regulation of TP53 Degradation"/>
</dbReference>
<dbReference type="Reactome" id="R-HSA-6804760">
    <property type="pathway name" value="Regulation of TP53 Activity through Methylation"/>
</dbReference>
<dbReference type="Reactome" id="R-HSA-69541">
    <property type="pathway name" value="Stabilization of p53"/>
</dbReference>
<dbReference type="Reactome" id="R-HSA-8941858">
    <property type="pathway name" value="Regulation of RUNX3 expression and activity"/>
</dbReference>
<dbReference type="Reactome" id="R-HSA-9725370">
    <property type="pathway name" value="Signaling by ALK fusions and activated point mutants"/>
</dbReference>
<dbReference type="Reactome" id="R-HSA-9768919">
    <property type="pathway name" value="NPAS4 regulates expression of target genes"/>
</dbReference>
<dbReference type="SignaLink" id="Q00987"/>
<dbReference type="SIGNOR" id="Q00987"/>
<dbReference type="BioGRID-ORCS" id="4193">
    <property type="hits" value="213 hits in 1219 CRISPR screens"/>
</dbReference>
<dbReference type="CD-CODE" id="8C2F96ED">
    <property type="entry name" value="Centrosome"/>
</dbReference>
<dbReference type="CD-CODE" id="B5B9A610">
    <property type="entry name" value="PML body"/>
</dbReference>
<dbReference type="ChiTaRS" id="MDM2">
    <property type="organism name" value="human"/>
</dbReference>
<dbReference type="EvolutionaryTrace" id="Q00987"/>
<dbReference type="GeneWiki" id="Mdm2"/>
<dbReference type="GenomeRNAi" id="4193"/>
<dbReference type="Pharos" id="Q00987">
    <property type="development level" value="Tchem"/>
</dbReference>
<dbReference type="PRO" id="PR:Q00987"/>
<dbReference type="Proteomes" id="UP000005640">
    <property type="component" value="Chromosome 12"/>
</dbReference>
<dbReference type="RNAct" id="Q00987">
    <property type="molecule type" value="protein"/>
</dbReference>
<dbReference type="Bgee" id="ENSG00000135679">
    <property type="expression patterns" value="Expressed in calcaneal tendon and 179 other cell types or tissues"/>
</dbReference>
<dbReference type="ExpressionAtlas" id="Q00987">
    <property type="expression patterns" value="baseline and differential"/>
</dbReference>
<dbReference type="GO" id="GO:0034451">
    <property type="term" value="C:centriolar satellite"/>
    <property type="evidence" value="ECO:0000314"/>
    <property type="project" value="HPA"/>
</dbReference>
<dbReference type="GO" id="GO:0005737">
    <property type="term" value="C:cytoplasm"/>
    <property type="evidence" value="ECO:0000314"/>
    <property type="project" value="UniProtKB"/>
</dbReference>
<dbReference type="GO" id="GO:0005829">
    <property type="term" value="C:cytosol"/>
    <property type="evidence" value="ECO:0000314"/>
    <property type="project" value="HPA"/>
</dbReference>
<dbReference type="GO" id="GO:0030666">
    <property type="term" value="C:endocytic vesicle membrane"/>
    <property type="evidence" value="ECO:0000304"/>
    <property type="project" value="Reactome"/>
</dbReference>
<dbReference type="GO" id="GO:0098978">
    <property type="term" value="C:glutamatergic synapse"/>
    <property type="evidence" value="ECO:0007669"/>
    <property type="project" value="Ensembl"/>
</dbReference>
<dbReference type="GO" id="GO:0005730">
    <property type="term" value="C:nucleolus"/>
    <property type="evidence" value="ECO:0000314"/>
    <property type="project" value="UniProtKB"/>
</dbReference>
<dbReference type="GO" id="GO:0005654">
    <property type="term" value="C:nucleoplasm"/>
    <property type="evidence" value="ECO:0000314"/>
    <property type="project" value="HPA"/>
</dbReference>
<dbReference type="GO" id="GO:0005634">
    <property type="term" value="C:nucleus"/>
    <property type="evidence" value="ECO:0000314"/>
    <property type="project" value="UniProtKB"/>
</dbReference>
<dbReference type="GO" id="GO:0005886">
    <property type="term" value="C:plasma membrane"/>
    <property type="evidence" value="ECO:0000304"/>
    <property type="project" value="Reactome"/>
</dbReference>
<dbReference type="GO" id="GO:0014069">
    <property type="term" value="C:postsynaptic density"/>
    <property type="evidence" value="ECO:0007669"/>
    <property type="project" value="Ensembl"/>
</dbReference>
<dbReference type="GO" id="GO:0032991">
    <property type="term" value="C:protein-containing complex"/>
    <property type="evidence" value="ECO:0000314"/>
    <property type="project" value="CAFA"/>
</dbReference>
<dbReference type="GO" id="GO:0017053">
    <property type="term" value="C:transcription repressor complex"/>
    <property type="evidence" value="ECO:0000353"/>
    <property type="project" value="ComplexPortal"/>
</dbReference>
<dbReference type="GO" id="GO:0008097">
    <property type="term" value="F:5S rRNA binding"/>
    <property type="evidence" value="ECO:0000314"/>
    <property type="project" value="UniProtKB"/>
</dbReference>
<dbReference type="GO" id="GO:0097718">
    <property type="term" value="F:disordered domain specific binding"/>
    <property type="evidence" value="ECO:0000353"/>
    <property type="project" value="CAFA"/>
</dbReference>
<dbReference type="GO" id="GO:0019899">
    <property type="term" value="F:enzyme binding"/>
    <property type="evidence" value="ECO:0000353"/>
    <property type="project" value="UniProtKB"/>
</dbReference>
<dbReference type="GO" id="GO:0042802">
    <property type="term" value="F:identical protein binding"/>
    <property type="evidence" value="ECO:0000353"/>
    <property type="project" value="IntAct"/>
</dbReference>
<dbReference type="GO" id="GO:0016874">
    <property type="term" value="F:ligase activity"/>
    <property type="evidence" value="ECO:0000314"/>
    <property type="project" value="UniProtKB"/>
</dbReference>
<dbReference type="GO" id="GO:0061663">
    <property type="term" value="F:NEDD8 ligase activity"/>
    <property type="evidence" value="ECO:0000315"/>
    <property type="project" value="CAFA"/>
</dbReference>
<dbReference type="GO" id="GO:0002039">
    <property type="term" value="F:p53 binding"/>
    <property type="evidence" value="ECO:0000353"/>
    <property type="project" value="UniProtKB"/>
</dbReference>
<dbReference type="GO" id="GO:0042975">
    <property type="term" value="F:peroxisome proliferator activated receptor binding"/>
    <property type="evidence" value="ECO:0007669"/>
    <property type="project" value="Ensembl"/>
</dbReference>
<dbReference type="GO" id="GO:0019904">
    <property type="term" value="F:protein domain specific binding"/>
    <property type="evidence" value="ECO:0000353"/>
    <property type="project" value="UniProtKB"/>
</dbReference>
<dbReference type="GO" id="GO:0033612">
    <property type="term" value="F:receptor serine/threonine kinase binding"/>
    <property type="evidence" value="ECO:0007669"/>
    <property type="project" value="Ensembl"/>
</dbReference>
<dbReference type="GO" id="GO:0043021">
    <property type="term" value="F:ribonucleoprotein complex binding"/>
    <property type="evidence" value="ECO:0000314"/>
    <property type="project" value="UniProtKB"/>
</dbReference>
<dbReference type="GO" id="GO:0019789">
    <property type="term" value="F:SUMO transferase activity"/>
    <property type="evidence" value="ECO:0000269"/>
    <property type="project" value="Reactome"/>
</dbReference>
<dbReference type="GO" id="GO:0043130">
    <property type="term" value="F:ubiquitin binding"/>
    <property type="evidence" value="ECO:0000314"/>
    <property type="project" value="UniProtKB"/>
</dbReference>
<dbReference type="GO" id="GO:0061630">
    <property type="term" value="F:ubiquitin protein ligase activity"/>
    <property type="evidence" value="ECO:0000314"/>
    <property type="project" value="CAFA"/>
</dbReference>
<dbReference type="GO" id="GO:0031625">
    <property type="term" value="F:ubiquitin protein ligase binding"/>
    <property type="evidence" value="ECO:0000353"/>
    <property type="project" value="UniProtKB"/>
</dbReference>
<dbReference type="GO" id="GO:0004842">
    <property type="term" value="F:ubiquitin-protein transferase activity"/>
    <property type="evidence" value="ECO:0000314"/>
    <property type="project" value="UniProtKB"/>
</dbReference>
<dbReference type="GO" id="GO:0008270">
    <property type="term" value="F:zinc ion binding"/>
    <property type="evidence" value="ECO:0000314"/>
    <property type="project" value="UniProtKB"/>
</dbReference>
<dbReference type="GO" id="GO:1990000">
    <property type="term" value="P:amyloid fibril formation"/>
    <property type="evidence" value="ECO:0000315"/>
    <property type="project" value="CAFA"/>
</dbReference>
<dbReference type="GO" id="GO:0006915">
    <property type="term" value="P:apoptotic process"/>
    <property type="evidence" value="ECO:0000314"/>
    <property type="project" value="UniProtKB"/>
</dbReference>
<dbReference type="GO" id="GO:0003283">
    <property type="term" value="P:atrial septum development"/>
    <property type="evidence" value="ECO:0007669"/>
    <property type="project" value="Ensembl"/>
</dbReference>
<dbReference type="GO" id="GO:0003181">
    <property type="term" value="P:atrioventricular valve morphogenesis"/>
    <property type="evidence" value="ECO:0007669"/>
    <property type="project" value="Ensembl"/>
</dbReference>
<dbReference type="GO" id="GO:0001568">
    <property type="term" value="P:blood vessel development"/>
    <property type="evidence" value="ECO:0007669"/>
    <property type="project" value="Ensembl"/>
</dbReference>
<dbReference type="GO" id="GO:0001974">
    <property type="term" value="P:blood vessel remodeling"/>
    <property type="evidence" value="ECO:0007669"/>
    <property type="project" value="Ensembl"/>
</dbReference>
<dbReference type="GO" id="GO:0060411">
    <property type="term" value="P:cardiac septum morphogenesis"/>
    <property type="evidence" value="ECO:0007669"/>
    <property type="project" value="Ensembl"/>
</dbReference>
<dbReference type="GO" id="GO:0072717">
    <property type="term" value="P:cellular response to actinomycin D"/>
    <property type="evidence" value="ECO:0000314"/>
    <property type="project" value="CAFA"/>
</dbReference>
<dbReference type="GO" id="GO:0071312">
    <property type="term" value="P:cellular response to alkaloid"/>
    <property type="evidence" value="ECO:0007669"/>
    <property type="project" value="Ensembl"/>
</dbReference>
<dbReference type="GO" id="GO:0071391">
    <property type="term" value="P:cellular response to estrogen stimulus"/>
    <property type="evidence" value="ECO:0007669"/>
    <property type="project" value="Ensembl"/>
</dbReference>
<dbReference type="GO" id="GO:0071480">
    <property type="term" value="P:cellular response to gamma radiation"/>
    <property type="evidence" value="ECO:0000314"/>
    <property type="project" value="CAFA"/>
</dbReference>
<dbReference type="GO" id="GO:0071363">
    <property type="term" value="P:cellular response to growth factor stimulus"/>
    <property type="evidence" value="ECO:0007669"/>
    <property type="project" value="Ensembl"/>
</dbReference>
<dbReference type="GO" id="GO:0070301">
    <property type="term" value="P:cellular response to hydrogen peroxide"/>
    <property type="evidence" value="ECO:0007669"/>
    <property type="project" value="Ensembl"/>
</dbReference>
<dbReference type="GO" id="GO:0071456">
    <property type="term" value="P:cellular response to hypoxia"/>
    <property type="evidence" value="ECO:0000270"/>
    <property type="project" value="UniProtKB"/>
</dbReference>
<dbReference type="GO" id="GO:0071375">
    <property type="term" value="P:cellular response to peptide hormone stimulus"/>
    <property type="evidence" value="ECO:0007669"/>
    <property type="project" value="Ensembl"/>
</dbReference>
<dbReference type="GO" id="GO:0071494">
    <property type="term" value="P:cellular response to UV-C"/>
    <property type="evidence" value="ECO:0007669"/>
    <property type="project" value="Ensembl"/>
</dbReference>
<dbReference type="GO" id="GO:0071301">
    <property type="term" value="P:cellular response to vitamin B1"/>
    <property type="evidence" value="ECO:0007669"/>
    <property type="project" value="Ensembl"/>
</dbReference>
<dbReference type="GO" id="GO:0030330">
    <property type="term" value="P:DNA damage response, signal transduction by p53 class mediator"/>
    <property type="evidence" value="ECO:0000315"/>
    <property type="project" value="UniProtKB"/>
</dbReference>
<dbReference type="GO" id="GO:0003203">
    <property type="term" value="P:endocardial cushion morphogenesis"/>
    <property type="evidence" value="ECO:0007669"/>
    <property type="project" value="Ensembl"/>
</dbReference>
<dbReference type="GO" id="GO:0045184">
    <property type="term" value="P:establishment of protein localization"/>
    <property type="evidence" value="ECO:0000314"/>
    <property type="project" value="BHF-UCL"/>
</dbReference>
<dbReference type="GO" id="GO:0072537">
    <property type="term" value="P:fibroblast activation"/>
    <property type="evidence" value="ECO:0007669"/>
    <property type="project" value="Ensembl"/>
</dbReference>
<dbReference type="GO" id="GO:0043066">
    <property type="term" value="P:negative regulation of apoptotic process"/>
    <property type="evidence" value="ECO:0000318"/>
    <property type="project" value="GO_Central"/>
</dbReference>
<dbReference type="GO" id="GO:0043518">
    <property type="term" value="P:negative regulation of DNA damage response, signal transduction by p53 class mediator"/>
    <property type="evidence" value="ECO:0000314"/>
    <property type="project" value="BHF-UCL"/>
</dbReference>
<dbReference type="GO" id="GO:0045892">
    <property type="term" value="P:negative regulation of DNA-templated transcription"/>
    <property type="evidence" value="ECO:0000314"/>
    <property type="project" value="UniProtKB"/>
</dbReference>
<dbReference type="GO" id="GO:1902254">
    <property type="term" value="P:negative regulation of intrinsic apoptotic signaling pathway by p53 class mediator"/>
    <property type="evidence" value="ECO:0000315"/>
    <property type="project" value="CAFA"/>
</dbReference>
<dbReference type="GO" id="GO:0010977">
    <property type="term" value="P:negative regulation of neuron projection development"/>
    <property type="evidence" value="ECO:0007669"/>
    <property type="project" value="Ensembl"/>
</dbReference>
<dbReference type="GO" id="GO:0010955">
    <property type="term" value="P:negative regulation of protein processing"/>
    <property type="evidence" value="ECO:0007669"/>
    <property type="project" value="Ensembl"/>
</dbReference>
<dbReference type="GO" id="GO:1901797">
    <property type="term" value="P:negative regulation of signal transduction by p53 class mediator"/>
    <property type="evidence" value="ECO:0000314"/>
    <property type="project" value="UniProtKB"/>
</dbReference>
<dbReference type="GO" id="GO:0000122">
    <property type="term" value="P:negative regulation of transcription by RNA polymerase II"/>
    <property type="evidence" value="ECO:0000314"/>
    <property type="project" value="UniProtKB"/>
</dbReference>
<dbReference type="GO" id="GO:0008284">
    <property type="term" value="P:positive regulation of cell population proliferation"/>
    <property type="evidence" value="ECO:0000304"/>
    <property type="project" value="BHF-UCL"/>
</dbReference>
<dbReference type="GO" id="GO:0010628">
    <property type="term" value="P:positive regulation of gene expression"/>
    <property type="evidence" value="ECO:0007669"/>
    <property type="project" value="Ensembl"/>
</dbReference>
<dbReference type="GO" id="GO:0045931">
    <property type="term" value="P:positive regulation of mitotic cell cycle"/>
    <property type="evidence" value="ECO:0000315"/>
    <property type="project" value="UniProtKB"/>
</dbReference>
<dbReference type="GO" id="GO:0051149">
    <property type="term" value="P:positive regulation of muscle cell differentiation"/>
    <property type="evidence" value="ECO:0007669"/>
    <property type="project" value="Ensembl"/>
</dbReference>
<dbReference type="GO" id="GO:0032436">
    <property type="term" value="P:positive regulation of proteasomal ubiquitin-dependent protein catabolic process"/>
    <property type="evidence" value="ECO:0000314"/>
    <property type="project" value="BHF-UCL"/>
</dbReference>
<dbReference type="GO" id="GO:0046827">
    <property type="term" value="P:positive regulation of protein export from nucleus"/>
    <property type="evidence" value="ECO:0007669"/>
    <property type="project" value="Ensembl"/>
</dbReference>
<dbReference type="GO" id="GO:1904754">
    <property type="term" value="P:positive regulation of vascular associated smooth muscle cell migration"/>
    <property type="evidence" value="ECO:0007669"/>
    <property type="project" value="Ensembl"/>
</dbReference>
<dbReference type="GO" id="GO:1904707">
    <property type="term" value="P:positive regulation of vascular associated smooth muscle cell proliferation"/>
    <property type="evidence" value="ECO:0007669"/>
    <property type="project" value="Ensembl"/>
</dbReference>
<dbReference type="GO" id="GO:0043161">
    <property type="term" value="P:proteasome-mediated ubiquitin-dependent protein catabolic process"/>
    <property type="evidence" value="ECO:0000314"/>
    <property type="project" value="UniProt"/>
</dbReference>
<dbReference type="GO" id="GO:0051865">
    <property type="term" value="P:protein autoubiquitination"/>
    <property type="evidence" value="ECO:0000315"/>
    <property type="project" value="UniProtKB"/>
</dbReference>
<dbReference type="GO" id="GO:0031648">
    <property type="term" value="P:protein destabilization"/>
    <property type="evidence" value="ECO:0000314"/>
    <property type="project" value="BHF-UCL"/>
</dbReference>
<dbReference type="GO" id="GO:0034504">
    <property type="term" value="P:protein localization to nucleus"/>
    <property type="evidence" value="ECO:0000314"/>
    <property type="project" value="BHF-UCL"/>
</dbReference>
<dbReference type="GO" id="GO:0000209">
    <property type="term" value="P:protein polyubiquitination"/>
    <property type="evidence" value="ECO:0000304"/>
    <property type="project" value="ARUK-UCL"/>
</dbReference>
<dbReference type="GO" id="GO:0016925">
    <property type="term" value="P:protein sumoylation"/>
    <property type="evidence" value="ECO:0000304"/>
    <property type="project" value="Reactome"/>
</dbReference>
<dbReference type="GO" id="GO:0016567">
    <property type="term" value="P:protein ubiquitination"/>
    <property type="evidence" value="ECO:0000314"/>
    <property type="project" value="UniProtKB"/>
</dbReference>
<dbReference type="GO" id="GO:0065003">
    <property type="term" value="P:protein-containing complex assembly"/>
    <property type="evidence" value="ECO:0000314"/>
    <property type="project" value="UniProtKB"/>
</dbReference>
<dbReference type="GO" id="GO:0051603">
    <property type="term" value="P:proteolysis involved in protein catabolic process"/>
    <property type="evidence" value="ECO:0000315"/>
    <property type="project" value="CAFA"/>
</dbReference>
<dbReference type="GO" id="GO:0051726">
    <property type="term" value="P:regulation of cell cycle"/>
    <property type="evidence" value="ECO:0000314"/>
    <property type="project" value="BHF-UCL"/>
</dbReference>
<dbReference type="GO" id="GO:0002027">
    <property type="term" value="P:regulation of heart rate"/>
    <property type="evidence" value="ECO:0007669"/>
    <property type="project" value="Ensembl"/>
</dbReference>
<dbReference type="GO" id="GO:0099149">
    <property type="term" value="P:regulation of postsynaptic neurotransmitter receptor internalization"/>
    <property type="evidence" value="ECO:0007669"/>
    <property type="project" value="Ensembl"/>
</dbReference>
<dbReference type="GO" id="GO:0042176">
    <property type="term" value="P:regulation of protein catabolic process"/>
    <property type="evidence" value="ECO:0000314"/>
    <property type="project" value="UniProtKB"/>
</dbReference>
<dbReference type="GO" id="GO:0099576">
    <property type="term" value="P:regulation of protein catabolic process at postsynapse, modulating synaptic transmission"/>
    <property type="evidence" value="ECO:0007669"/>
    <property type="project" value="Ensembl"/>
</dbReference>
<dbReference type="GO" id="GO:0046677">
    <property type="term" value="P:response to antibiotic"/>
    <property type="evidence" value="ECO:0000270"/>
    <property type="project" value="UniProtKB"/>
</dbReference>
<dbReference type="GO" id="GO:0042220">
    <property type="term" value="P:response to cocaine"/>
    <property type="evidence" value="ECO:0007669"/>
    <property type="project" value="Ensembl"/>
</dbReference>
<dbReference type="GO" id="GO:0045472">
    <property type="term" value="P:response to ether"/>
    <property type="evidence" value="ECO:0007669"/>
    <property type="project" value="Ensembl"/>
</dbReference>
<dbReference type="GO" id="GO:1904404">
    <property type="term" value="P:response to formaldehyde"/>
    <property type="evidence" value="ECO:0007669"/>
    <property type="project" value="Ensembl"/>
</dbReference>
<dbReference type="GO" id="GO:0010039">
    <property type="term" value="P:response to iron ion"/>
    <property type="evidence" value="ECO:0007669"/>
    <property type="project" value="Ensembl"/>
</dbReference>
<dbReference type="GO" id="GO:0032026">
    <property type="term" value="P:response to magnesium ion"/>
    <property type="evidence" value="ECO:0007669"/>
    <property type="project" value="Ensembl"/>
</dbReference>
<dbReference type="GO" id="GO:0048545">
    <property type="term" value="P:response to steroid hormone"/>
    <property type="evidence" value="ECO:0007669"/>
    <property type="project" value="Ensembl"/>
</dbReference>
<dbReference type="GO" id="GO:0009636">
    <property type="term" value="P:response to toxic substance"/>
    <property type="evidence" value="ECO:0007669"/>
    <property type="project" value="Ensembl"/>
</dbReference>
<dbReference type="GO" id="GO:1990785">
    <property type="term" value="P:response to water-immersion restraint stress"/>
    <property type="evidence" value="ECO:0007669"/>
    <property type="project" value="Ensembl"/>
</dbReference>
<dbReference type="GO" id="GO:0009410">
    <property type="term" value="P:response to xenobiotic stimulus"/>
    <property type="evidence" value="ECO:0007669"/>
    <property type="project" value="Ensembl"/>
</dbReference>
<dbReference type="GO" id="GO:0007089">
    <property type="term" value="P:traversing start control point of mitotic cell cycle"/>
    <property type="evidence" value="ECO:0007669"/>
    <property type="project" value="Ensembl"/>
</dbReference>
<dbReference type="GO" id="GO:0006511">
    <property type="term" value="P:ubiquitin-dependent protein catabolic process"/>
    <property type="evidence" value="ECO:0000314"/>
    <property type="project" value="UniProtKB"/>
</dbReference>
<dbReference type="GO" id="GO:0003281">
    <property type="term" value="P:ventricular septum development"/>
    <property type="evidence" value="ECO:0007669"/>
    <property type="project" value="Ensembl"/>
</dbReference>
<dbReference type="CDD" id="cd17672">
    <property type="entry name" value="MDM2"/>
    <property type="match status" value="1"/>
</dbReference>
<dbReference type="CDD" id="cd16783">
    <property type="entry name" value="mRING-HC-C2H2C4_MDM2"/>
    <property type="match status" value="1"/>
</dbReference>
<dbReference type="DisProt" id="DP00334"/>
<dbReference type="DisProt" id="DP01133">
    <molecule id="Q00987-11"/>
</dbReference>
<dbReference type="FunFam" id="1.10.245.10:FF:000005">
    <property type="entry name" value="E3 ubiquitin-protein ligase Mdm2"/>
    <property type="match status" value="1"/>
</dbReference>
<dbReference type="FunFam" id="2.30.30.380:FF:000005">
    <property type="entry name" value="E3 ubiquitin-protein ligase Mdm2"/>
    <property type="match status" value="1"/>
</dbReference>
<dbReference type="FunFam" id="3.30.40.10:FF:000076">
    <property type="entry name" value="E3 ubiquitin-protein ligase Mdm2"/>
    <property type="match status" value="1"/>
</dbReference>
<dbReference type="Gene3D" id="1.10.245.10">
    <property type="entry name" value="SWIB/MDM2 domain"/>
    <property type="match status" value="1"/>
</dbReference>
<dbReference type="Gene3D" id="3.30.40.10">
    <property type="entry name" value="Zinc/RING finger domain, C3HC4 (zinc finger)"/>
    <property type="match status" value="1"/>
</dbReference>
<dbReference type="Gene3D" id="2.30.30.380">
    <property type="entry name" value="Zn-finger domain of Sec23/24"/>
    <property type="match status" value="1"/>
</dbReference>
<dbReference type="IDEAL" id="IID00163"/>
<dbReference type="InterPro" id="IPR028340">
    <property type="entry name" value="Mdm2"/>
</dbReference>
<dbReference type="InterPro" id="IPR044080">
    <property type="entry name" value="MDM2_mRING-HC-C2H2C4"/>
</dbReference>
<dbReference type="InterPro" id="IPR016495">
    <property type="entry name" value="p53_neg-reg_MDM_2/4"/>
</dbReference>
<dbReference type="InterPro" id="IPR036885">
    <property type="entry name" value="SWIB_MDM2_dom_sf"/>
</dbReference>
<dbReference type="InterPro" id="IPR003121">
    <property type="entry name" value="SWIB_MDM2_domain"/>
</dbReference>
<dbReference type="InterPro" id="IPR001876">
    <property type="entry name" value="Znf_RanBP2"/>
</dbReference>
<dbReference type="InterPro" id="IPR036443">
    <property type="entry name" value="Znf_RanBP2_sf"/>
</dbReference>
<dbReference type="InterPro" id="IPR001841">
    <property type="entry name" value="Znf_RING"/>
</dbReference>
<dbReference type="InterPro" id="IPR013083">
    <property type="entry name" value="Znf_RING/FYVE/PHD"/>
</dbReference>
<dbReference type="PANTHER" id="PTHR46858:SF13">
    <property type="entry name" value="E3 UBIQUITIN-PROTEIN LIGASE MDM2"/>
    <property type="match status" value="1"/>
</dbReference>
<dbReference type="PANTHER" id="PTHR46858">
    <property type="entry name" value="OS05G0521000 PROTEIN"/>
    <property type="match status" value="1"/>
</dbReference>
<dbReference type="Pfam" id="PF02201">
    <property type="entry name" value="SWIB"/>
    <property type="match status" value="1"/>
</dbReference>
<dbReference type="Pfam" id="PF13920">
    <property type="entry name" value="zf-C3HC4_3"/>
    <property type="match status" value="1"/>
</dbReference>
<dbReference type="Pfam" id="PF00641">
    <property type="entry name" value="Zn_ribbon_RanBP"/>
    <property type="match status" value="1"/>
</dbReference>
<dbReference type="PIRSF" id="PIRSF500700">
    <property type="entry name" value="MDM2"/>
    <property type="match status" value="1"/>
</dbReference>
<dbReference type="PIRSF" id="PIRSF006748">
    <property type="entry name" value="p53_MDM_2/4"/>
    <property type="match status" value="1"/>
</dbReference>
<dbReference type="SUPFAM" id="SSF90209">
    <property type="entry name" value="Ran binding protein zinc finger-like"/>
    <property type="match status" value="1"/>
</dbReference>
<dbReference type="SUPFAM" id="SSF57850">
    <property type="entry name" value="RING/U-box"/>
    <property type="match status" value="1"/>
</dbReference>
<dbReference type="SUPFAM" id="SSF47592">
    <property type="entry name" value="SWIB/MDM2 domain"/>
    <property type="match status" value="2"/>
</dbReference>
<dbReference type="PROSITE" id="PS51925">
    <property type="entry name" value="SWIB_MDM2"/>
    <property type="match status" value="1"/>
</dbReference>
<dbReference type="PROSITE" id="PS01358">
    <property type="entry name" value="ZF_RANBP2_1"/>
    <property type="match status" value="1"/>
</dbReference>
<dbReference type="PROSITE" id="PS50199">
    <property type="entry name" value="ZF_RANBP2_2"/>
    <property type="match status" value="1"/>
</dbReference>
<dbReference type="PROSITE" id="PS50089">
    <property type="entry name" value="ZF_RING_2"/>
    <property type="match status" value="1"/>
</dbReference>
<feature type="chain" id="PRO_0000157332" description="E3 ubiquitin-protein ligase Mdm2">
    <location>
        <begin position="1"/>
        <end position="491"/>
    </location>
</feature>
<feature type="domain" description="SWIB/MDM2" evidence="6">
    <location>
        <begin position="26"/>
        <end position="109"/>
    </location>
</feature>
<feature type="zinc finger region" description="RanBP2-type" evidence="5">
    <location>
        <begin position="299"/>
        <end position="328"/>
    </location>
</feature>
<feature type="zinc finger region" description="RING-type" evidence="4">
    <location>
        <begin position="438"/>
        <end position="479"/>
    </location>
</feature>
<feature type="region of interest" description="Necessary for interaction with USP2">
    <location>
        <begin position="1"/>
        <end position="110"/>
    </location>
</feature>
<feature type="region of interest" description="Sufficient to promote the mitochondrial pathway of apoptosis" evidence="55">
    <location>
        <begin position="1"/>
        <end position="101"/>
    </location>
</feature>
<feature type="region of interest" description="Disordered" evidence="7">
    <location>
        <begin position="141"/>
        <end position="187"/>
    </location>
</feature>
<feature type="region of interest" description="Interaction with PYHIN1 and necessary for interaction with RFFL and RNF34" evidence="27 34">
    <location>
        <begin position="150"/>
        <end position="230"/>
    </location>
</feature>
<feature type="region of interest" description="Interaction with MTBP" evidence="1">
    <location>
        <begin position="170"/>
        <end position="306"/>
    </location>
</feature>
<feature type="region of interest" description="ARF-binding">
    <location>
        <begin position="210"/>
        <end position="304"/>
    </location>
</feature>
<feature type="region of interest" description="Disordered" evidence="7">
    <location>
        <begin position="211"/>
        <end position="237"/>
    </location>
</feature>
<feature type="region of interest" description="Interaction with USP7">
    <location>
        <begin position="223"/>
        <end position="232"/>
    </location>
</feature>
<feature type="region of interest" description="Region II">
    <location>
        <begin position="242"/>
        <end position="331"/>
    </location>
</feature>
<feature type="region of interest" description="Disordered" evidence="7">
    <location>
        <begin position="253"/>
        <end position="274"/>
    </location>
</feature>
<feature type="region of interest" description="Necessary for interaction with USP2">
    <location>
        <begin position="276"/>
        <end position="491"/>
    </location>
</feature>
<feature type="region of interest" description="Disordered" evidence="7">
    <location>
        <begin position="371"/>
        <end position="427"/>
    </location>
</feature>
<feature type="short sequence motif" description="Nuclear localization signal" evidence="3">
    <location>
        <begin position="179"/>
        <end position="185"/>
    </location>
</feature>
<feature type="short sequence motif" description="Nuclear export signal">
    <location>
        <begin position="190"/>
        <end position="202"/>
    </location>
</feature>
<feature type="short sequence motif" description="Nucleolar localization signal" evidence="3">
    <location>
        <begin position="466"/>
        <end position="473"/>
    </location>
</feature>
<feature type="compositionally biased region" description="Polar residues" evidence="7">
    <location>
        <begin position="149"/>
        <end position="159"/>
    </location>
</feature>
<feature type="compositionally biased region" description="Low complexity" evidence="7">
    <location>
        <begin position="394"/>
        <end position="408"/>
    </location>
</feature>
<feature type="compositionally biased region" description="Basic and acidic residues" evidence="7">
    <location>
        <begin position="409"/>
        <end position="425"/>
    </location>
</feature>
<feature type="binding site" evidence="56 70">
    <location>
        <position position="305"/>
    </location>
    <ligand>
        <name>Zn(2+)</name>
        <dbReference type="ChEBI" id="CHEBI:29105"/>
    </ligand>
</feature>
<feature type="binding site" evidence="56 70">
    <location>
        <position position="308"/>
    </location>
    <ligand>
        <name>Zn(2+)</name>
        <dbReference type="ChEBI" id="CHEBI:29105"/>
    </ligand>
</feature>
<feature type="binding site" evidence="56 70">
    <location>
        <position position="319"/>
    </location>
    <ligand>
        <name>Zn(2+)</name>
        <dbReference type="ChEBI" id="CHEBI:29105"/>
    </ligand>
</feature>
<feature type="binding site" evidence="56 70">
    <location>
        <position position="322"/>
    </location>
    <ligand>
        <name>Zn(2+)</name>
        <dbReference type="ChEBI" id="CHEBI:29105"/>
    </ligand>
</feature>
<feature type="modified residue" description="Phosphoserine; by SGK1" evidence="39 71 72">
    <location>
        <position position="166"/>
    </location>
</feature>
<feature type="modified residue" description="Phosphoserine" evidence="2">
    <location>
        <position position="190"/>
    </location>
</feature>
<feature type="modified residue" description="Phosphoserine" evidence="13">
    <location>
        <position position="240"/>
    </location>
</feature>
<feature type="modified residue" description="Phosphoserine" evidence="13">
    <location>
        <position position="242"/>
    </location>
</feature>
<feature type="modified residue" description="Phosphoserine" evidence="13">
    <location>
        <position position="246"/>
    </location>
</feature>
<feature type="modified residue" description="Phosphoserine" evidence="13">
    <location>
        <position position="260"/>
    </location>
</feature>
<feature type="modified residue" description="Phosphoserine" evidence="13">
    <location>
        <position position="262"/>
    </location>
</feature>
<feature type="modified residue" description="Phosphoserine; by ATM" evidence="40">
    <location>
        <position position="386"/>
    </location>
</feature>
<feature type="modified residue" description="Phosphoserine; by ATM" evidence="40">
    <location>
        <position position="395"/>
    </location>
</feature>
<feature type="modified residue" description="Phosphoserine; by ATM" evidence="40">
    <location>
        <position position="407"/>
    </location>
</feature>
<feature type="modified residue" description="Phosphothreonine; by ATM" evidence="40">
    <location>
        <position position="419"/>
    </location>
</feature>
<feature type="modified residue" description="Phosphoserine; by ATM" evidence="40">
    <location>
        <position position="425"/>
    </location>
</feature>
<feature type="modified residue" description="Phosphoserine; by ATM" evidence="40">
    <location>
        <position position="429"/>
    </location>
</feature>
<feature type="splice variant" id="VSP_003207" description="In isoform Mdm2-alpha." evidence="60">
    <location>
        <begin position="1"/>
        <end position="61"/>
    </location>
</feature>
<feature type="splice variant" id="VSP_037997" description="In isoform 11." evidence="63">
    <original>M</original>
    <variation>MVRSRQM</variation>
    <location>
        <position position="1"/>
    </location>
</feature>
<feature type="splice variant" id="VSP_003209" description="In isoform Mdm2-B." evidence="64">
    <location>
        <begin position="28"/>
        <end position="300"/>
    </location>
</feature>
<feature type="splice variant" id="VSP_003208" description="In isoform Mdm2-A and isoform Mdm2-A1." evidence="62 64">
    <location>
        <begin position="28"/>
        <end position="222"/>
    </location>
</feature>
<feature type="splice variant" id="VSP_003210" description="In isoform Mdm2-D." evidence="64">
    <location>
        <begin position="30"/>
        <end position="388"/>
    </location>
</feature>
<feature type="splice variant" id="VSP_003211" description="In isoform Mdm2-C." evidence="64">
    <location>
        <begin position="53"/>
        <end position="222"/>
    </location>
</feature>
<feature type="splice variant" id="VSP_022578" description="In isoform Mdm2-F." evidence="61">
    <location>
        <begin position="53"/>
        <end position="97"/>
    </location>
</feature>
<feature type="splice variant" id="VSP_003212" description="In isoform Mdm2-E." evidence="64">
    <original>YCSNDLLGDLFGVPSFSVKEHRKIYTM</original>
    <variation>NDCANLFPLVDLSIRELYISNYITLGI</variation>
    <location>
        <begin position="76"/>
        <end position="102"/>
    </location>
</feature>
<feature type="splice variant" id="VSP_003213" description="In isoform Mdm2-E." evidence="64">
    <location>
        <begin position="103"/>
        <end position="491"/>
    </location>
</feature>
<feature type="splice variant" id="VSP_022579" description="In isoform Mdm2-G." evidence="61">
    <location>
        <begin position="115"/>
        <end position="169"/>
    </location>
</feature>
<feature type="splice variant" id="VSP_003214" description="In isoform Mdm2-A1." evidence="62">
    <location>
        <begin position="275"/>
        <end position="300"/>
    </location>
</feature>
<feature type="mutagenesis site" description="No effect on its ability to induce apoptosis." evidence="55">
    <original>G</original>
    <variation>A</variation>
    <location>
        <position position="58"/>
    </location>
</feature>
<feature type="mutagenesis site" description="No loss of ubiquitin ligase E3 activity." evidence="10">
    <original>C</original>
    <variation>S</variation>
    <location>
        <position position="305"/>
    </location>
</feature>
<feature type="mutagenesis site" description="No loss of ubiquitin ligase E3 activity." evidence="10">
    <original>C</original>
    <variation>T</variation>
    <location>
        <position position="374"/>
    </location>
</feature>
<feature type="mutagenesis site" description="In MDM2-6A mutant; abolished phosphorylation by ATM and ubiquitination by the SCF(FBXO31) complex; when associated with A-395, A-407, A-419, A-425 and A-429." evidence="40">
    <original>S</original>
    <variation>A</variation>
    <location>
        <position position="386"/>
    </location>
</feature>
<feature type="mutagenesis site" description="In MDM2-6A mutant; abolished phosphorylation by ATM and ubiquitination by the SCF(FBXO31) complex; when associated with A-386, A-407, A-419, A-425 and A-429." evidence="40">
    <original>S</original>
    <variation>A</variation>
    <location>
        <position position="395"/>
    </location>
</feature>
<feature type="mutagenesis site" description="In MDM2-6A mutant; abolished phosphorylation by ATM and ubiquitination by the SCF(FBXO31) complex; when associated with A-386, A-395, A-419, A-425 and A-429." evidence="40">
    <original>S</original>
    <variation>A</variation>
    <location>
        <position position="407"/>
    </location>
</feature>
<feature type="mutagenesis site" description="In MDM2-6A mutant; abolished phosphorylation by ATM and ubiquitination by the SCF(FBXO31) complex; when associated with A-386, A-395, A-407, A-425 and A-429." evidence="40">
    <original>T</original>
    <variation>A</variation>
    <location>
        <position position="419"/>
    </location>
</feature>
<feature type="mutagenesis site" description="In MDM2-6A mutant; abolished phosphorylation by ATM and ubiquitination by the SCF(FBXO31) complex; when associated with A-386, A-395, A-407, A-419 and A-429." evidence="40">
    <original>S</original>
    <variation>A</variation>
    <location>
        <position position="425"/>
    </location>
</feature>
<feature type="mutagenesis site" description="In MDM2-6A mutant; abolished phosphorylation by ATM and ubiquitination by the SCF(FBXO31) complex; when associated with A-386, A-395, A-407, A-419 and A-425." evidence="40">
    <original>S</original>
    <variation>A</variation>
    <location>
        <position position="429"/>
    </location>
</feature>
<feature type="mutagenesis site" description="No loss of ubiquitin ligase E3 activity." evidence="10">
    <original>C</original>
    <variation>L</variation>
    <location>
        <position position="438"/>
    </location>
</feature>
<feature type="mutagenesis site" description="Fails to interact with MDM4." evidence="8">
    <original>C</original>
    <variation>G</variation>
    <location>
        <position position="441"/>
    </location>
</feature>
<feature type="mutagenesis site" description="Loss of ubiquitin ligase E3 activity." evidence="11">
    <original>C</original>
    <variation>A</variation>
    <location>
        <position position="449"/>
    </location>
</feature>
<feature type="mutagenesis site" description="No substantial decrease of ubiquitin ligase E3 activity." evidence="11">
    <original>C</original>
    <variation>S</variation>
    <location>
        <position position="449"/>
    </location>
</feature>
<feature type="mutagenesis site" description="Loss of ubiquitin ligase E3 activity." evidence="10">
    <original>H</original>
    <variation>A</variation>
    <location>
        <position position="452"/>
    </location>
</feature>
<feature type="mutagenesis site" description="Significant decrease of ubiquitin ligase E3 activity." evidence="10">
    <original>T</original>
    <variation>A</variation>
    <location>
        <position position="455"/>
    </location>
</feature>
<feature type="mutagenesis site" description="Loss of ubiquitin ligase E3 activity." evidence="10">
    <original>H</original>
    <variation>S</variation>
    <location>
        <position position="457"/>
    </location>
</feature>
<feature type="mutagenesis site" description="Loss of ubiquitin ligase E3 activity." evidence="10">
    <original>C</original>
    <variation>S</variation>
    <location>
        <position position="461"/>
    </location>
</feature>
<feature type="mutagenesis site" description="Loss of ubiquitin ligase E3 activity, enhances protein stability. Does not inhibit interaction with APEX1, but inhibits its ubiquitin ligase E3 activity on APEX1. No effect on its ability to induce apoptosis." evidence="20 27 37 44 55 59">
    <original>C</original>
    <variation>A</variation>
    <location>
        <position position="464"/>
    </location>
</feature>
<feature type="mutagenesis site" description="Loss of ubiquitin ligase E3 activity." evidence="10">
    <original>C</original>
    <variation>G</variation>
    <location>
        <position position="475"/>
    </location>
</feature>
<feature type="mutagenesis site" description="Fails to interact with MDM4." evidence="8">
    <original>C</original>
    <variation>R</variation>
    <location>
        <position position="478"/>
    </location>
</feature>
<feature type="mutagenesis site" description="Loss of ubiquitin ligase E3 activity." evidence="8">
    <original>C</original>
    <variation>S</variation>
    <location>
        <position position="478"/>
    </location>
</feature>
<feature type="sequence conflict" description="In Ref. 10; AAA82237." evidence="65" ref="10">
    <original>S</original>
    <variation>P</variation>
    <location>
        <position position="17"/>
    </location>
</feature>
<feature type="strand" evidence="77">
    <location>
        <begin position="7"/>
        <end position="10"/>
    </location>
</feature>
<feature type="strand" evidence="77">
    <location>
        <begin position="13"/>
        <end position="15"/>
    </location>
</feature>
<feature type="strand" evidence="74">
    <location>
        <begin position="17"/>
        <end position="19"/>
    </location>
</feature>
<feature type="helix" evidence="79">
    <location>
        <begin position="21"/>
        <end position="24"/>
    </location>
</feature>
<feature type="strand" evidence="79">
    <location>
        <begin position="27"/>
        <end position="30"/>
    </location>
</feature>
<feature type="helix" evidence="79">
    <location>
        <begin position="32"/>
        <end position="39"/>
    </location>
</feature>
<feature type="turn" evidence="79">
    <location>
        <begin position="40"/>
        <end position="42"/>
    </location>
</feature>
<feature type="strand" evidence="79">
    <location>
        <begin position="46"/>
        <end position="49"/>
    </location>
</feature>
<feature type="helix" evidence="79">
    <location>
        <begin position="50"/>
        <end position="63"/>
    </location>
</feature>
<feature type="turn" evidence="76">
    <location>
        <begin position="64"/>
        <end position="67"/>
    </location>
</feature>
<feature type="strand" evidence="79">
    <location>
        <begin position="69"/>
        <end position="71"/>
    </location>
</feature>
<feature type="strand" evidence="79">
    <location>
        <begin position="74"/>
        <end position="76"/>
    </location>
</feature>
<feature type="strand" evidence="75">
    <location>
        <begin position="78"/>
        <end position="80"/>
    </location>
</feature>
<feature type="helix" evidence="79">
    <location>
        <begin position="81"/>
        <end position="86"/>
    </location>
</feature>
<feature type="strand" evidence="79">
    <location>
        <begin position="89"/>
        <end position="92"/>
    </location>
</feature>
<feature type="helix" evidence="79">
    <location>
        <begin position="96"/>
        <end position="104"/>
    </location>
</feature>
<feature type="strand" evidence="79">
    <location>
        <begin position="107"/>
        <end position="109"/>
    </location>
</feature>
<feature type="strand" evidence="73">
    <location>
        <begin position="295"/>
        <end position="297"/>
    </location>
</feature>
<feature type="helix" evidence="78">
    <location>
        <begin position="299"/>
        <end position="301"/>
    </location>
</feature>
<feature type="turn" evidence="78">
    <location>
        <begin position="306"/>
        <end position="308"/>
    </location>
</feature>
<feature type="strand" evidence="78">
    <location>
        <begin position="314"/>
        <end position="318"/>
    </location>
</feature>
<feature type="turn" evidence="78">
    <location>
        <begin position="320"/>
        <end position="322"/>
    </location>
</feature>
<feature type="helix" evidence="80">
    <location>
        <begin position="432"/>
        <end position="435"/>
    </location>
</feature>
<feature type="turn" evidence="80">
    <location>
        <begin position="439"/>
        <end position="441"/>
    </location>
</feature>
<feature type="strand" evidence="80">
    <location>
        <begin position="442"/>
        <end position="444"/>
    </location>
</feature>
<feature type="strand" evidence="80">
    <location>
        <begin position="448"/>
        <end position="452"/>
    </location>
</feature>
<feature type="strand" evidence="80">
    <location>
        <begin position="455"/>
        <end position="460"/>
    </location>
</feature>
<feature type="helix" evidence="80">
    <location>
        <begin position="462"/>
        <end position="470"/>
    </location>
</feature>
<feature type="turn" evidence="80">
    <location>
        <begin position="476"/>
        <end position="478"/>
    </location>
</feature>
<feature type="strand" evidence="80">
    <location>
        <begin position="484"/>
        <end position="489"/>
    </location>
</feature>
<gene>
    <name type="primary">MDM2</name>
</gene>
<accession>Q00987</accession>
<accession>A6NL51</accession>
<accession>A8K2S6</accession>
<accession>Q13226</accession>
<accession>Q13297</accession>
<accession>Q13298</accession>
<accession>Q13299</accession>
<accession>Q13300</accession>
<accession>Q13301</accession>
<accession>Q53XW0</accession>
<accession>Q71TW9</accession>
<accession>Q8WYJ1</accession>
<accession>Q8WYJ2</accession>
<accession>Q9UGI3</accession>
<accession>Q9UMT8</accession>
<protein>
    <recommendedName>
        <fullName>E3 ubiquitin-protein ligase Mdm2</fullName>
        <ecNumber evidence="14">2.3.2.27</ecNumber>
    </recommendedName>
    <alternativeName>
        <fullName>Double minute 2 protein</fullName>
        <shortName>Hdm2</shortName>
    </alternativeName>
    <alternativeName>
        <fullName>Oncoprotein Mdm2</fullName>
    </alternativeName>
    <alternativeName>
        <fullName evidence="65">RING-type E3 ubiquitin transferase Mdm2</fullName>
    </alternativeName>
    <alternativeName>
        <fullName>p53-binding protein Mdm2</fullName>
    </alternativeName>
</protein>
<proteinExistence type="evidence at protein level"/>